<sequence>MAHVRGLQLPGCLALAALCSLVHSQHVFLAPQQARSLLQRVRRANTFLEEVRKGNLERECVEETCSYEEAFEALESSTATDVFWAKYTACETARTPRDKLAACLEGNCAEGLGTNYRGHVNITRSGIECQLWRSRYPHKPEINSTTHPGADLQENFCRNPDSSTTGPWCYTTDPTVRRQECSIPVCGQDQVTVAMTPRSEGSSVNLSPPLEQCVPDRGQQYQGRLAVTTHGLPCLAWASAQAKALSKHQDFNSAVQLVENFCRNPDGDEEGVWCYVAGKPGDFGYCDLNYCEEAVEEETGDGLDEDSDRAIEGRTATSEYQTFFNPRTFGSGEADCGLRPLFEKKSLEDKTERELLESYIDGRIVEGSDAEIGMSPWQVMLFRKSPQELLCGASLISDRWVLTAAHCLLYPPWDKNFTENDLLVRIGKHSRTRYERNIEKISMLEKIYIHPRYNWRENLDRDIALMKLKKPVAFSDYIHPVCLPDRETAASLLQAGYKGRVTGWGNLKETWTANVGKGQPSVLQVVNLPIVERPVCKDSTRIRITDNMFCAGYKPDEGKRGDACEGDSGGPFVMKSPFNNRWYQMGIVSWGEGCDRDGKYGFYTHVFRLKKWIQKVIDQFGE</sequence>
<evidence type="ECO:0000250" key="1"/>
<evidence type="ECO:0000255" key="2"/>
<evidence type="ECO:0000255" key="3">
    <source>
        <dbReference type="PROSITE-ProRule" id="PRU00121"/>
    </source>
</evidence>
<evidence type="ECO:0000255" key="4">
    <source>
        <dbReference type="PROSITE-ProRule" id="PRU00274"/>
    </source>
</evidence>
<evidence type="ECO:0000255" key="5">
    <source>
        <dbReference type="PROSITE-ProRule" id="PRU00463"/>
    </source>
</evidence>
<evidence type="ECO:0000269" key="6">
    <source>
    </source>
</evidence>
<evidence type="ECO:0000269" key="7">
    <source>
    </source>
</evidence>
<evidence type="ECO:0000269" key="8">
    <source>
    </source>
</evidence>
<evidence type="ECO:0000269" key="9">
    <source>
    </source>
</evidence>
<evidence type="ECO:0000269" key="10">
    <source>
    </source>
</evidence>
<evidence type="ECO:0000269" key="11">
    <source>
    </source>
</evidence>
<evidence type="ECO:0000269" key="12">
    <source>
    </source>
</evidence>
<evidence type="ECO:0000269" key="13">
    <source>
    </source>
</evidence>
<evidence type="ECO:0000269" key="14">
    <source>
    </source>
</evidence>
<evidence type="ECO:0000269" key="15">
    <source>
    </source>
</evidence>
<evidence type="ECO:0000269" key="16">
    <source>
    </source>
</evidence>
<evidence type="ECO:0000269" key="17">
    <source>
    </source>
</evidence>
<evidence type="ECO:0000269" key="18">
    <source>
    </source>
</evidence>
<evidence type="ECO:0000269" key="19">
    <source>
    </source>
</evidence>
<evidence type="ECO:0000269" key="20">
    <source>
    </source>
</evidence>
<evidence type="ECO:0000269" key="21">
    <source>
    </source>
</evidence>
<evidence type="ECO:0000269" key="22">
    <source>
    </source>
</evidence>
<evidence type="ECO:0000269" key="23">
    <source>
    </source>
</evidence>
<evidence type="ECO:0000269" key="24">
    <source>
    </source>
</evidence>
<evidence type="ECO:0000269" key="25">
    <source>
    </source>
</evidence>
<evidence type="ECO:0000269" key="26">
    <source>
    </source>
</evidence>
<evidence type="ECO:0000269" key="27">
    <source>
    </source>
</evidence>
<evidence type="ECO:0000269" key="28">
    <source>
    </source>
</evidence>
<evidence type="ECO:0000269" key="29">
    <source>
    </source>
</evidence>
<evidence type="ECO:0000269" key="30">
    <source>
    </source>
</evidence>
<evidence type="ECO:0000269" key="31">
    <source>
    </source>
</evidence>
<evidence type="ECO:0000269" key="32">
    <source>
    </source>
</evidence>
<evidence type="ECO:0000269" key="33">
    <source>
    </source>
</evidence>
<evidence type="ECO:0000269" key="34">
    <source>
    </source>
</evidence>
<evidence type="ECO:0000269" key="35">
    <source>
    </source>
</evidence>
<evidence type="ECO:0000269" key="36">
    <source>
    </source>
</evidence>
<evidence type="ECO:0000269" key="37">
    <source>
    </source>
</evidence>
<evidence type="ECO:0000269" key="38">
    <source>
    </source>
</evidence>
<evidence type="ECO:0000269" key="39">
    <source>
    </source>
</evidence>
<evidence type="ECO:0000269" key="40">
    <source>
    </source>
</evidence>
<evidence type="ECO:0000269" key="41">
    <source>
    </source>
</evidence>
<evidence type="ECO:0000269" key="42">
    <source>
    </source>
</evidence>
<evidence type="ECO:0000269" key="43">
    <source>
    </source>
</evidence>
<evidence type="ECO:0000269" key="44">
    <source>
    </source>
</evidence>
<evidence type="ECO:0000269" key="45">
    <source>
    </source>
</evidence>
<evidence type="ECO:0000269" key="46">
    <source>
    </source>
</evidence>
<evidence type="ECO:0000269" key="47">
    <source>
    </source>
</evidence>
<evidence type="ECO:0000269" key="48">
    <source>
    </source>
</evidence>
<evidence type="ECO:0000269" key="49">
    <source>
    </source>
</evidence>
<evidence type="ECO:0000269" key="50">
    <source>
    </source>
</evidence>
<evidence type="ECO:0000269" key="51">
    <source>
    </source>
</evidence>
<evidence type="ECO:0000269" key="52">
    <source>
    </source>
</evidence>
<evidence type="ECO:0000269" key="53">
    <source>
    </source>
</evidence>
<evidence type="ECO:0000269" key="54">
    <source>
    </source>
</evidence>
<evidence type="ECO:0000269" key="55">
    <source>
    </source>
</evidence>
<evidence type="ECO:0000269" key="56">
    <source ref="5"/>
</evidence>
<evidence type="ECO:0000305" key="57"/>
<evidence type="ECO:0000305" key="58">
    <source>
    </source>
</evidence>
<evidence type="ECO:0007744" key="59">
    <source>
        <dbReference type="PDB" id="3B23"/>
    </source>
</evidence>
<evidence type="ECO:0007744" key="60">
    <source>
        <dbReference type="PDB" id="4E05"/>
    </source>
</evidence>
<evidence type="ECO:0007744" key="61">
    <source>
        <dbReference type="PDB" id="4E06"/>
    </source>
</evidence>
<evidence type="ECO:0007744" key="62">
    <source>
        <dbReference type="PDB" id="5NHU"/>
    </source>
</evidence>
<evidence type="ECO:0007829" key="63">
    <source>
        <dbReference type="PDB" id="1MH0"/>
    </source>
</evidence>
<evidence type="ECO:0007829" key="64">
    <source>
        <dbReference type="PDB" id="1NO9"/>
    </source>
</evidence>
<evidence type="ECO:0007829" key="65">
    <source>
        <dbReference type="PDB" id="3BEI"/>
    </source>
</evidence>
<evidence type="ECO:0007829" key="66">
    <source>
        <dbReference type="PDB" id="3K65"/>
    </source>
</evidence>
<evidence type="ECO:0007829" key="67">
    <source>
        <dbReference type="PDB" id="3QDZ"/>
    </source>
</evidence>
<evidence type="ECO:0007829" key="68">
    <source>
        <dbReference type="PDB" id="3SQH"/>
    </source>
</evidence>
<evidence type="ECO:0007829" key="69">
    <source>
        <dbReference type="PDB" id="3U8O"/>
    </source>
</evidence>
<evidence type="ECO:0007829" key="70">
    <source>
        <dbReference type="PDB" id="4CH2"/>
    </source>
</evidence>
<evidence type="ECO:0007829" key="71">
    <source>
        <dbReference type="PDB" id="4DY7"/>
    </source>
</evidence>
<evidence type="ECO:0007829" key="72">
    <source>
        <dbReference type="PDB" id="4HZH"/>
    </source>
</evidence>
<evidence type="ECO:0007829" key="73">
    <source>
        <dbReference type="PDB" id="4NZQ"/>
    </source>
</evidence>
<evidence type="ECO:0007829" key="74">
    <source>
        <dbReference type="PDB" id="4O03"/>
    </source>
</evidence>
<evidence type="ECO:0007829" key="75">
    <source>
        <dbReference type="PDB" id="4UD9"/>
    </source>
</evidence>
<evidence type="ECO:0007829" key="76">
    <source>
        <dbReference type="PDB" id="5AFY"/>
    </source>
</evidence>
<evidence type="ECO:0007829" key="77">
    <source>
        <dbReference type="PDB" id="5EDK"/>
    </source>
</evidence>
<evidence type="ECO:0007829" key="78">
    <source>
        <dbReference type="PDB" id="5EDM"/>
    </source>
</evidence>
<evidence type="ECO:0007829" key="79">
    <source>
        <dbReference type="PDB" id="5NHU"/>
    </source>
</evidence>
<evidence type="ECO:0007829" key="80">
    <source>
        <dbReference type="PDB" id="8UF7"/>
    </source>
</evidence>
<feature type="signal peptide" evidence="2">
    <location>
        <begin position="1"/>
        <end position="24"/>
    </location>
</feature>
<feature type="propeptide" id="PRO_0000028159" evidence="32 52">
    <location>
        <begin position="25"/>
        <end position="43"/>
    </location>
</feature>
<feature type="chain" id="PRO_0000028160" description="Prothrombin">
    <location>
        <begin position="44"/>
        <end position="622"/>
    </location>
</feature>
<feature type="peptide" id="PRO_0000028161" description="Activation peptide fragment 1">
    <location>
        <begin position="44"/>
        <end position="198"/>
    </location>
</feature>
<feature type="peptide" id="PRO_0000028162" description="Activation peptide fragment 2">
    <location>
        <begin position="199"/>
        <end position="327"/>
    </location>
</feature>
<feature type="chain" id="PRO_0000028163" description="Thrombin light chain">
    <location>
        <begin position="315"/>
        <end position="363"/>
    </location>
</feature>
<feature type="chain" id="PRO_0000028164" description="Thrombin heavy chain">
    <location>
        <begin position="364"/>
        <end position="622"/>
    </location>
</feature>
<feature type="domain" description="Gla" evidence="5">
    <location>
        <begin position="44"/>
        <end position="89"/>
    </location>
</feature>
<feature type="domain" description="Kringle 1" evidence="3">
    <location>
        <begin position="108"/>
        <end position="186"/>
    </location>
</feature>
<feature type="domain" description="Kringle 2" evidence="3">
    <location>
        <begin position="213"/>
        <end position="291"/>
    </location>
</feature>
<feature type="domain" description="Peptidase S1" evidence="4">
    <location>
        <begin position="364"/>
        <end position="618"/>
    </location>
</feature>
<feature type="region of interest" description="High affinity receptor-binding region which is also known as the TP508 peptide">
    <location>
        <begin position="551"/>
        <end position="573"/>
    </location>
</feature>
<feature type="active site" description="Charge relay system">
    <location>
        <position position="406"/>
    </location>
</feature>
<feature type="active site" description="Charge relay system">
    <location>
        <position position="462"/>
    </location>
</feature>
<feature type="active site" description="Charge relay system">
    <location>
        <position position="568"/>
    </location>
</feature>
<feature type="site" description="Cleavage; by thrombin">
    <location>
        <begin position="198"/>
        <end position="199"/>
    </location>
</feature>
<feature type="site" description="Cleavage; by factor Xa" evidence="40">
    <location>
        <begin position="314"/>
        <end position="315"/>
    </location>
</feature>
<feature type="site" description="Cleavage; by factor Xa" evidence="40">
    <location>
        <begin position="363"/>
        <end position="364"/>
    </location>
</feature>
<feature type="modified residue" description="4-carboxyglutamate" evidence="5 44 47">
    <location>
        <position position="49"/>
    </location>
</feature>
<feature type="modified residue" description="4-carboxyglutamate" evidence="5 44 47">
    <location>
        <position position="50"/>
    </location>
</feature>
<feature type="modified residue" description="4-carboxyglutamate" evidence="5 47">
    <location>
        <position position="57"/>
    </location>
</feature>
<feature type="modified residue" description="4-carboxyglutamate" evidence="5 47">
    <location>
        <position position="59"/>
    </location>
</feature>
<feature type="modified residue" description="4-carboxyglutamate" evidence="5 47">
    <location>
        <position position="62"/>
    </location>
</feature>
<feature type="modified residue" description="4-carboxyglutamate" evidence="5 47">
    <location>
        <position position="63"/>
    </location>
</feature>
<feature type="modified residue" description="4-carboxyglutamate" evidence="5 47">
    <location>
        <position position="68"/>
    </location>
</feature>
<feature type="modified residue" description="4-carboxyglutamate" evidence="5 47">
    <location>
        <position position="69"/>
    </location>
</feature>
<feature type="modified residue" description="4-carboxyglutamate" evidence="5 47">
    <location>
        <position position="72"/>
    </location>
</feature>
<feature type="modified residue" description="4-carboxyglutamate" evidence="5 47">
    <location>
        <position position="75"/>
    </location>
</feature>
<feature type="glycosylation site" description="N-linked (GlcNAc...) (complex) asparagine" evidence="13 16 28">
    <location>
        <position position="121"/>
    </location>
</feature>
<feature type="glycosylation site" description="N-linked (GlcNAc...) (complex) asparagine" evidence="13 16 28">
    <location>
        <position position="143"/>
    </location>
</feature>
<feature type="glycosylation site" description="N-linked (GlcNAc...) (complex) asparagine" evidence="16 21 22 23 53">
    <location>
        <position position="416"/>
    </location>
</feature>
<feature type="disulfide bond">
    <location>
        <begin position="60"/>
        <end position="65"/>
    </location>
</feature>
<feature type="disulfide bond">
    <location>
        <begin position="90"/>
        <end position="103"/>
    </location>
</feature>
<feature type="disulfide bond">
    <location>
        <begin position="108"/>
        <end position="186"/>
    </location>
</feature>
<feature type="disulfide bond">
    <location>
        <begin position="129"/>
        <end position="169"/>
    </location>
</feature>
<feature type="disulfide bond">
    <location>
        <begin position="157"/>
        <end position="181"/>
    </location>
</feature>
<feature type="disulfide bond">
    <location>
        <begin position="213"/>
        <end position="291"/>
    </location>
</feature>
<feature type="disulfide bond">
    <location>
        <begin position="234"/>
        <end position="274"/>
    </location>
</feature>
<feature type="disulfide bond">
    <location>
        <begin position="262"/>
        <end position="286"/>
    </location>
</feature>
<feature type="disulfide bond" description="Interchain (between light and heavy chains)">
    <location>
        <begin position="336"/>
        <end position="482"/>
    </location>
</feature>
<feature type="disulfide bond">
    <location>
        <begin position="391"/>
        <end position="407"/>
    </location>
</feature>
<feature type="disulfide bond" evidence="1">
    <location>
        <begin position="536"/>
        <end position="550"/>
    </location>
</feature>
<feature type="disulfide bond" evidence="1">
    <location>
        <begin position="564"/>
        <end position="594"/>
    </location>
</feature>
<feature type="sequence variant" id="VAR_055232" description="In FA2D; Shanghai." evidence="14">
    <original>E</original>
    <variation>G</variation>
    <location>
        <position position="72"/>
    </location>
</feature>
<feature type="sequence variant" id="VAR_011781" description="Confirmed at protein level; dbSNP:rs5896." evidence="6 12 26 56">
    <original>T</original>
    <variation>M</variation>
    <location>
        <position position="165"/>
    </location>
</feature>
<feature type="sequence variant" id="VAR_006711" description="In FA2D; prothrombin type 3; variant confirmed at protein level; dbSNP:rs62623459." evidence="26 49">
    <original>E</original>
    <variation>K</variation>
    <location>
        <position position="200"/>
    </location>
</feature>
<feature type="sequence variant" id="VAR_006712" description="In FA2D; Barcelona/Madrid; dbSNP:rs121918477." evidence="45">
    <original>R</original>
    <variation>C</variation>
    <location>
        <position position="314"/>
    </location>
</feature>
<feature type="sequence variant" id="VAR_006713" description="In FA2D; Padua-1; dbSNP:rs754231232." evidence="51">
    <original>R</original>
    <variation>H</variation>
    <location>
        <position position="314"/>
    </location>
</feature>
<feature type="sequence variant" id="VAR_006714" description="In FA2D; Himi-1; dbSNP:rs121918481." evidence="11">
    <original>M</original>
    <variation>T</variation>
    <location>
        <position position="380"/>
    </location>
</feature>
<feature type="sequence variant" id="VAR_011782" description="Confirmed at protein level; dbSNP:rs5897." evidence="6 26">
    <original>P</original>
    <variation>T</variation>
    <location>
        <position position="386"/>
    </location>
</feature>
<feature type="sequence variant" id="VAR_006715" description="In FA2D; Quick-1; dbSNP:rs121918479." evidence="38">
    <original>R</original>
    <variation>C</variation>
    <location>
        <position position="425"/>
    </location>
</feature>
<feature type="sequence variant" id="VAR_006716" description="In FA2D; Himi-2; dbSNP:rs121918482." evidence="11">
    <original>R</original>
    <variation>H</variation>
    <location>
        <position position="431"/>
    </location>
</feature>
<feature type="sequence variant" id="VAR_006717" description="In FA2D; Tokushima; dbSNP:rs121918478." evidence="9 43 46">
    <original>R</original>
    <variation>W</variation>
    <location>
        <position position="461"/>
    </location>
</feature>
<feature type="sequence variant" id="VAR_006718" description="In FA2D; Salakta/Frankfurt." evidence="10 50">
    <original>E</original>
    <variation>A</variation>
    <location>
        <position position="509"/>
    </location>
</feature>
<feature type="sequence variant" id="VAR_068913" evidence="26 53">
    <original>E</original>
    <variation>Q</variation>
    <location>
        <position position="532"/>
    </location>
</feature>
<feature type="sequence variant" id="VAR_006719" description="In FA2D; Quick-2; dbSNP:rs121918480." evidence="33">
    <original>G</original>
    <variation>V</variation>
    <location>
        <position position="601"/>
    </location>
</feature>
<feature type="mutagenesis site" description="Loss of cleavage by factor Xa." evidence="40">
    <original>R</original>
    <variation>Q</variation>
    <location>
        <position position="314"/>
    </location>
</feature>
<feature type="mutagenesis site" description="Loss of cleavage by factor Xa." evidence="40">
    <original>R</original>
    <variation>Q</variation>
    <location>
        <position position="363"/>
    </location>
</feature>
<feature type="mutagenesis site" description="Loss of catalytic activity; no effect on cleavage at R-198 by factor Xa." evidence="40">
    <original>S</original>
    <variation>A</variation>
    <location>
        <position position="568"/>
    </location>
</feature>
<feature type="sequence conflict" description="In Ref. 3; BAG64719." evidence="57" ref="3">
    <location>
        <begin position="9"/>
        <end position="25"/>
    </location>
</feature>
<feature type="sequence conflict" description="In Ref. 4; BAD96497." evidence="57" ref="4">
    <original>S</original>
    <variation>N</variation>
    <location>
        <position position="66"/>
    </location>
</feature>
<feature type="sequence conflict" description="In Ref. 9; AA sequence." evidence="57" ref="9">
    <original>H</original>
    <variation>N</variation>
    <location>
        <position position="119"/>
    </location>
</feature>
<feature type="sequence conflict" description="In Ref. 9; AA sequence." evidence="57" ref="9">
    <original>N</original>
    <variation>S</variation>
    <location>
        <position position="121"/>
    </location>
</feature>
<feature type="sequence conflict" description="In Ref. 9; AA sequence." evidence="57" ref="9">
    <original>T</original>
    <variation>I</variation>
    <location>
        <position position="164"/>
    </location>
</feature>
<feature type="sequence conflict" description="In Ref. 7; CAA23842." evidence="57" ref="7">
    <original>T</original>
    <variation>N</variation>
    <location>
        <position position="164"/>
    </location>
</feature>
<feature type="sequence conflict" description="In Ref. 9; AA sequence." evidence="57" ref="9">
    <original>V</original>
    <variation>A</variation>
    <location>
        <position position="176"/>
    </location>
</feature>
<feature type="sequence conflict" description="In Ref. 9; AA sequence." evidence="57" ref="9">
    <original>I</original>
    <variation>T</variation>
    <location>
        <position position="183"/>
    </location>
</feature>
<feature type="sequence conflict" description="In Ref. 9; AA sequence." evidence="57" ref="9">
    <original>AM</original>
    <variation>MV</variation>
    <location>
        <begin position="194"/>
        <end position="195"/>
    </location>
</feature>
<feature type="sequence conflict" description="In Ref. 9; AA sequence." evidence="57" ref="9">
    <original>D</original>
    <variation>DEE</variation>
    <location>
        <position position="308"/>
    </location>
</feature>
<feature type="sequence conflict" description="In Ref. 10; AA sequence." evidence="57" ref="10">
    <original>D</original>
    <variation>N</variation>
    <location>
        <position position="335"/>
    </location>
</feature>
<feature type="sequence conflict" description="In Ref. 4; BAD96495." evidence="57" ref="4">
    <original>G</original>
    <variation>R</variation>
    <location>
        <position position="337"/>
    </location>
</feature>
<feature type="sequence conflict" description="In Ref. 10; AA sequence." evidence="57" ref="10">
    <original>D</original>
    <variation>N</variation>
    <location>
        <position position="349"/>
    </location>
</feature>
<feature type="sequence conflict" description="In Ref. 10; AA sequence." evidence="57" ref="10">
    <original>D</original>
    <variation>N</variation>
    <location>
        <position position="369"/>
    </location>
</feature>
<feature type="sequence conflict" description="In Ref. 10; AA sequence." evidence="57" ref="10">
    <original>D</original>
    <variation>N</variation>
    <location>
        <position position="398"/>
    </location>
</feature>
<feature type="sequence conflict" description="In Ref. 10; AA sequence." evidence="57" ref="10">
    <original>D</original>
    <variation>N</variation>
    <location>
        <position position="414"/>
    </location>
</feature>
<feature type="sequence conflict" description="In Ref. 10; AA sequence." evidence="57" ref="10">
    <original>D</original>
    <variation>N</variation>
    <location>
        <position position="485"/>
    </location>
</feature>
<feature type="sequence conflict" description="In Ref. 10; AA sequence." evidence="57" ref="10">
    <original>Q</original>
    <variation>G</variation>
    <location>
        <position position="494"/>
    </location>
</feature>
<feature type="sequence conflict" description="In Ref. 10; AA sequence." evidence="57" ref="10">
    <original>W</original>
    <variation>Y</variation>
    <location>
        <position position="504"/>
    </location>
</feature>
<feature type="sequence conflict" description="In Ref. 10; AA sequence." evidence="57" ref="10">
    <original>E</original>
    <variation>S</variation>
    <location>
        <position position="509"/>
    </location>
</feature>
<feature type="sequence conflict" description="In Ref. 10; AA sequence." evidence="57" ref="10">
    <original>W</original>
    <variation>V</variation>
    <location>
        <position position="511"/>
    </location>
</feature>
<feature type="sequence conflict" description="In Ref. 10; AA sequence." evidence="57" ref="10">
    <original>N</original>
    <variation>D</variation>
    <location>
        <position position="514"/>
    </location>
</feature>
<feature type="sequence conflict" description="In Ref. 10; AA sequence." evidence="57" ref="10">
    <original>PI</original>
    <variation>AL</variation>
    <location>
        <begin position="529"/>
        <end position="530"/>
    </location>
</feature>
<feature type="sequence conflict" description="In Ref. 11; AAR08143." evidence="57" ref="11">
    <original>WGE</original>
    <variation>AGA</variation>
    <location>
        <begin position="590"/>
        <end position="592"/>
    </location>
</feature>
<feature type="helix" evidence="78">
    <location>
        <begin position="47"/>
        <end position="60"/>
    </location>
</feature>
<feature type="helix" evidence="78">
    <location>
        <begin position="67"/>
        <end position="74"/>
    </location>
</feature>
<feature type="helix" evidence="78">
    <location>
        <begin position="77"/>
        <end position="89"/>
    </location>
</feature>
<feature type="turn" evidence="78">
    <location>
        <begin position="90"/>
        <end position="92"/>
    </location>
</feature>
<feature type="helix" evidence="78">
    <location>
        <begin position="97"/>
        <end position="105"/>
    </location>
</feature>
<feature type="strand" evidence="78">
    <location>
        <begin position="107"/>
        <end position="109"/>
    </location>
</feature>
<feature type="turn" evidence="72">
    <location>
        <begin position="112"/>
        <end position="115"/>
    </location>
</feature>
<feature type="strand" evidence="77">
    <location>
        <begin position="124"/>
        <end position="126"/>
    </location>
</feature>
<feature type="strand" evidence="77">
    <location>
        <begin position="128"/>
        <end position="130"/>
    </location>
</feature>
<feature type="strand" evidence="80">
    <location>
        <begin position="136"/>
        <end position="138"/>
    </location>
</feature>
<feature type="turn" evidence="78">
    <location>
        <begin position="144"/>
        <end position="146"/>
    </location>
</feature>
<feature type="strand" evidence="73">
    <location>
        <begin position="148"/>
        <end position="150"/>
    </location>
</feature>
<feature type="strand" evidence="78">
    <location>
        <begin position="167"/>
        <end position="173"/>
    </location>
</feature>
<feature type="strand" evidence="78">
    <location>
        <begin position="177"/>
        <end position="180"/>
    </location>
</feature>
<feature type="turn" evidence="73">
    <location>
        <begin position="186"/>
        <end position="188"/>
    </location>
</feature>
<feature type="strand" evidence="78">
    <location>
        <begin position="191"/>
        <end position="193"/>
    </location>
</feature>
<feature type="strand" evidence="78">
    <location>
        <begin position="211"/>
        <end position="214"/>
    </location>
</feature>
<feature type="helix" evidence="66">
    <location>
        <begin position="216"/>
        <end position="218"/>
    </location>
</feature>
<feature type="strand" evidence="72">
    <location>
        <begin position="229"/>
        <end position="231"/>
    </location>
</feature>
<feature type="strand" evidence="72">
    <location>
        <begin position="233"/>
        <end position="235"/>
    </location>
</feature>
<feature type="strand" evidence="73">
    <location>
        <begin position="237"/>
        <end position="239"/>
    </location>
</feature>
<feature type="helix" evidence="66">
    <location>
        <begin position="240"/>
        <end position="246"/>
    </location>
</feature>
<feature type="strand" evidence="77">
    <location>
        <begin position="247"/>
        <end position="249"/>
    </location>
</feature>
<feature type="strand" evidence="77">
    <location>
        <begin position="253"/>
        <end position="255"/>
    </location>
</feature>
<feature type="strand" evidence="66">
    <location>
        <begin position="273"/>
        <end position="275"/>
    </location>
</feature>
<feature type="strand" evidence="66">
    <location>
        <begin position="277"/>
        <end position="279"/>
    </location>
</feature>
<feature type="strand" evidence="66">
    <location>
        <begin position="283"/>
        <end position="285"/>
    </location>
</feature>
<feature type="helix" evidence="78">
    <location>
        <begin position="295"/>
        <end position="297"/>
    </location>
</feature>
<feature type="strand" evidence="65">
    <location>
        <begin position="322"/>
        <end position="324"/>
    </location>
</feature>
<feature type="turn" evidence="74">
    <location>
        <begin position="326"/>
        <end position="328"/>
    </location>
</feature>
<feature type="helix" evidence="79">
    <location>
        <begin position="329"/>
        <end position="333"/>
    </location>
</feature>
<feature type="turn" evidence="76">
    <location>
        <begin position="334"/>
        <end position="337"/>
    </location>
</feature>
<feature type="turn" evidence="76">
    <location>
        <begin position="340"/>
        <end position="342"/>
    </location>
</feature>
<feature type="helix" evidence="76">
    <location>
        <begin position="343"/>
        <end position="345"/>
    </location>
</feature>
<feature type="helix" evidence="76">
    <location>
        <begin position="352"/>
        <end position="358"/>
    </location>
</feature>
<feature type="turn" evidence="64">
    <location>
        <begin position="360"/>
        <end position="362"/>
    </location>
</feature>
<feature type="strand" evidence="68">
    <location>
        <begin position="367"/>
        <end position="369"/>
    </location>
</feature>
<feature type="strand" evidence="67">
    <location>
        <begin position="372"/>
        <end position="375"/>
    </location>
</feature>
<feature type="strand" evidence="76">
    <location>
        <begin position="378"/>
        <end position="383"/>
    </location>
</feature>
<feature type="turn" evidence="76">
    <location>
        <begin position="384"/>
        <end position="387"/>
    </location>
</feature>
<feature type="strand" evidence="76">
    <location>
        <begin position="388"/>
        <end position="395"/>
    </location>
</feature>
<feature type="strand" evidence="76">
    <location>
        <begin position="397"/>
        <end position="403"/>
    </location>
</feature>
<feature type="helix" evidence="76">
    <location>
        <begin position="405"/>
        <end position="407"/>
    </location>
</feature>
<feature type="strand" evidence="71">
    <location>
        <begin position="408"/>
        <end position="410"/>
    </location>
</feature>
<feature type="helix" evidence="76">
    <location>
        <begin position="411"/>
        <end position="413"/>
    </location>
</feature>
<feature type="helix" evidence="76">
    <location>
        <begin position="419"/>
        <end position="421"/>
    </location>
</feature>
<feature type="strand" evidence="76">
    <location>
        <begin position="422"/>
        <end position="427"/>
    </location>
</feature>
<feature type="strand" evidence="76">
    <location>
        <begin position="430"/>
        <end position="433"/>
    </location>
</feature>
<feature type="turn" evidence="76">
    <location>
        <begin position="436"/>
        <end position="438"/>
    </location>
</feature>
<feature type="strand" evidence="76">
    <location>
        <begin position="440"/>
        <end position="449"/>
    </location>
</feature>
<feature type="turn" evidence="76">
    <location>
        <begin position="455"/>
        <end position="458"/>
    </location>
</feature>
<feature type="strand" evidence="76">
    <location>
        <begin position="464"/>
        <end position="470"/>
    </location>
</feature>
<feature type="strand" evidence="74">
    <location>
        <begin position="475"/>
        <end position="477"/>
    </location>
</feature>
<feature type="helix" evidence="76">
    <location>
        <begin position="486"/>
        <end position="492"/>
    </location>
</feature>
<feature type="strand" evidence="78">
    <location>
        <begin position="495"/>
        <end position="497"/>
    </location>
</feature>
<feature type="strand" evidence="76">
    <location>
        <begin position="498"/>
        <end position="504"/>
    </location>
</feature>
<feature type="strand" evidence="75">
    <location>
        <begin position="507"/>
        <end position="510"/>
    </location>
</feature>
<feature type="turn" evidence="70">
    <location>
        <begin position="513"/>
        <end position="515"/>
    </location>
</feature>
<feature type="strand" evidence="70">
    <location>
        <begin position="516"/>
        <end position="518"/>
    </location>
</feature>
<feature type="strand" evidence="76">
    <location>
        <begin position="524"/>
        <end position="530"/>
    </location>
</feature>
<feature type="helix" evidence="76">
    <location>
        <begin position="533"/>
        <end position="538"/>
    </location>
</feature>
<feature type="strand" evidence="63">
    <location>
        <begin position="540"/>
        <end position="542"/>
    </location>
</feature>
<feature type="strand" evidence="76">
    <location>
        <begin position="548"/>
        <end position="551"/>
    </location>
</feature>
<feature type="helix" evidence="76">
    <location>
        <begin position="555"/>
        <end position="557"/>
    </location>
</feature>
<feature type="turn" evidence="69">
    <location>
        <begin position="565"/>
        <end position="569"/>
    </location>
</feature>
<feature type="strand" evidence="76">
    <location>
        <begin position="571"/>
        <end position="575"/>
    </location>
</feature>
<feature type="turn" evidence="76">
    <location>
        <begin position="577"/>
        <end position="579"/>
    </location>
</feature>
<feature type="strand" evidence="76">
    <location>
        <begin position="582"/>
        <end position="590"/>
    </location>
</feature>
<feature type="strand" evidence="76">
    <location>
        <begin position="592"/>
        <end position="595"/>
    </location>
</feature>
<feature type="strand" evidence="66">
    <location>
        <begin position="596"/>
        <end position="598"/>
    </location>
</feature>
<feature type="strand" evidence="76">
    <location>
        <begin position="601"/>
        <end position="605"/>
    </location>
</feature>
<feature type="helix" evidence="76">
    <location>
        <begin position="607"/>
        <end position="609"/>
    </location>
</feature>
<feature type="helix" evidence="76">
    <location>
        <begin position="610"/>
        <end position="619"/>
    </location>
</feature>
<accession>P00734</accession>
<accession>B2R7F7</accession>
<accession>B4E1A7</accession>
<accession>Q4QZ40</accession>
<accession>Q53H04</accession>
<accession>Q53H06</accession>
<accession>Q69EZ7</accession>
<accession>Q7Z7P3</accession>
<accession>Q9UCA1</accession>
<reference key="1">
    <citation type="journal article" date="1987" name="Biochemistry">
        <title>Nucleotide sequence of the gene for human prothrombin.</title>
        <authorList>
            <person name="Degen S.J.F."/>
            <person name="Davie E.W."/>
        </authorList>
    </citation>
    <scope>NUCLEOTIDE SEQUENCE [GENOMIC DNA]</scope>
</reference>
<reference key="2">
    <citation type="journal article" date="2004" name="Haemophilia">
        <title>Prothrombin Shanghai: hypoprothrombinaemia caused by substitution of Gla29 by Gly.</title>
        <authorList>
            <person name="Wang W."/>
            <person name="Fu Q."/>
            <person name="Zhou R."/>
            <person name="Wu W."/>
            <person name="Ding Q."/>
            <person name="Hu Y."/>
            <person name="Wang X."/>
            <person name="Wang H."/>
            <person name="Wang Z."/>
        </authorList>
    </citation>
    <scope>NUCLEOTIDE SEQUENCE [MRNA]</scope>
    <scope>VARIANT FA2D GLY-72</scope>
    <source>
        <tissue>Blood</tissue>
    </source>
</reference>
<reference key="3">
    <citation type="journal article" date="2004" name="Nat. Genet.">
        <title>Complete sequencing and characterization of 21,243 full-length human cDNAs.</title>
        <authorList>
            <person name="Ota T."/>
            <person name="Suzuki Y."/>
            <person name="Nishikawa T."/>
            <person name="Otsuki T."/>
            <person name="Sugiyama T."/>
            <person name="Irie R."/>
            <person name="Wakamatsu A."/>
            <person name="Hayashi K."/>
            <person name="Sato H."/>
            <person name="Nagai K."/>
            <person name="Kimura K."/>
            <person name="Makita H."/>
            <person name="Sekine M."/>
            <person name="Obayashi M."/>
            <person name="Nishi T."/>
            <person name="Shibahara T."/>
            <person name="Tanaka T."/>
            <person name="Ishii S."/>
            <person name="Yamamoto J."/>
            <person name="Saito K."/>
            <person name="Kawai Y."/>
            <person name="Isono Y."/>
            <person name="Nakamura Y."/>
            <person name="Nagahari K."/>
            <person name="Murakami K."/>
            <person name="Yasuda T."/>
            <person name="Iwayanagi T."/>
            <person name="Wagatsuma M."/>
            <person name="Shiratori A."/>
            <person name="Sudo H."/>
            <person name="Hosoiri T."/>
            <person name="Kaku Y."/>
            <person name="Kodaira H."/>
            <person name="Kondo H."/>
            <person name="Sugawara M."/>
            <person name="Takahashi M."/>
            <person name="Kanda K."/>
            <person name="Yokoi T."/>
            <person name="Furuya T."/>
            <person name="Kikkawa E."/>
            <person name="Omura Y."/>
            <person name="Abe K."/>
            <person name="Kamihara K."/>
            <person name="Katsuta N."/>
            <person name="Sato K."/>
            <person name="Tanikawa M."/>
            <person name="Yamazaki M."/>
            <person name="Ninomiya K."/>
            <person name="Ishibashi T."/>
            <person name="Yamashita H."/>
            <person name="Murakawa K."/>
            <person name="Fujimori K."/>
            <person name="Tanai H."/>
            <person name="Kimata M."/>
            <person name="Watanabe M."/>
            <person name="Hiraoka S."/>
            <person name="Chiba Y."/>
            <person name="Ishida S."/>
            <person name="Ono Y."/>
            <person name="Takiguchi S."/>
            <person name="Watanabe S."/>
            <person name="Yosida M."/>
            <person name="Hotuta T."/>
            <person name="Kusano J."/>
            <person name="Kanehori K."/>
            <person name="Takahashi-Fujii A."/>
            <person name="Hara H."/>
            <person name="Tanase T.-O."/>
            <person name="Nomura Y."/>
            <person name="Togiya S."/>
            <person name="Komai F."/>
            <person name="Hara R."/>
            <person name="Takeuchi K."/>
            <person name="Arita M."/>
            <person name="Imose N."/>
            <person name="Musashino K."/>
            <person name="Yuuki H."/>
            <person name="Oshima A."/>
            <person name="Sasaki N."/>
            <person name="Aotsuka S."/>
            <person name="Yoshikawa Y."/>
            <person name="Matsunawa H."/>
            <person name="Ichihara T."/>
            <person name="Shiohata N."/>
            <person name="Sano S."/>
            <person name="Moriya S."/>
            <person name="Momiyama H."/>
            <person name="Satoh N."/>
            <person name="Takami S."/>
            <person name="Terashima Y."/>
            <person name="Suzuki O."/>
            <person name="Nakagawa S."/>
            <person name="Senoh A."/>
            <person name="Mizoguchi H."/>
            <person name="Goto Y."/>
            <person name="Shimizu F."/>
            <person name="Wakebe H."/>
            <person name="Hishigaki H."/>
            <person name="Watanabe T."/>
            <person name="Sugiyama A."/>
            <person name="Takemoto M."/>
            <person name="Kawakami B."/>
            <person name="Yamazaki M."/>
            <person name="Watanabe K."/>
            <person name="Kumagai A."/>
            <person name="Itakura S."/>
            <person name="Fukuzumi Y."/>
            <person name="Fujimori Y."/>
            <person name="Komiyama M."/>
            <person name="Tashiro H."/>
            <person name="Tanigami A."/>
            <person name="Fujiwara T."/>
            <person name="Ono T."/>
            <person name="Yamada K."/>
            <person name="Fujii Y."/>
            <person name="Ozaki K."/>
            <person name="Hirao M."/>
            <person name="Ohmori Y."/>
            <person name="Kawabata A."/>
            <person name="Hikiji T."/>
            <person name="Kobatake N."/>
            <person name="Inagaki H."/>
            <person name="Ikema Y."/>
            <person name="Okamoto S."/>
            <person name="Okitani R."/>
            <person name="Kawakami T."/>
            <person name="Noguchi S."/>
            <person name="Itoh T."/>
            <person name="Shigeta K."/>
            <person name="Senba T."/>
            <person name="Matsumura K."/>
            <person name="Nakajima Y."/>
            <person name="Mizuno T."/>
            <person name="Morinaga M."/>
            <person name="Sasaki M."/>
            <person name="Togashi T."/>
            <person name="Oyama M."/>
            <person name="Hata H."/>
            <person name="Watanabe M."/>
            <person name="Komatsu T."/>
            <person name="Mizushima-Sugano J."/>
            <person name="Satoh T."/>
            <person name="Shirai Y."/>
            <person name="Takahashi Y."/>
            <person name="Nakagawa K."/>
            <person name="Okumura K."/>
            <person name="Nagase T."/>
            <person name="Nomura N."/>
            <person name="Kikuchi H."/>
            <person name="Masuho Y."/>
            <person name="Yamashita R."/>
            <person name="Nakai K."/>
            <person name="Yada T."/>
            <person name="Nakamura Y."/>
            <person name="Ohara O."/>
            <person name="Isogai T."/>
            <person name="Sugano S."/>
        </authorList>
    </citation>
    <scope>NUCLEOTIDE SEQUENCE [LARGE SCALE MRNA]</scope>
    <scope>VARIANT MET-165</scope>
    <source>
        <tissue>Liver</tissue>
        <tissue>Mammary gland</tissue>
    </source>
</reference>
<reference key="4">
    <citation type="submission" date="2005-04" db="EMBL/GenBank/DDBJ databases">
        <authorList>
            <person name="Suzuki Y."/>
            <person name="Sugano S."/>
            <person name="Totoki Y."/>
            <person name="Toyoda A."/>
            <person name="Takeda T."/>
            <person name="Sakaki Y."/>
            <person name="Tanaka A."/>
            <person name="Yokoyama S."/>
        </authorList>
    </citation>
    <scope>NUCLEOTIDE SEQUENCE [LARGE SCALE MRNA]</scope>
    <source>
        <tissue>Liver</tissue>
    </source>
</reference>
<reference key="5">
    <citation type="submission" date="2002-01" db="EMBL/GenBank/DDBJ databases">
        <authorList>
            <consortium name="SeattleSNPs variation discovery resource"/>
        </authorList>
    </citation>
    <scope>NUCLEOTIDE SEQUENCE [GENOMIC DNA]</scope>
    <scope>VARIANT MET-165</scope>
</reference>
<reference key="6">
    <citation type="journal article" date="2004" name="Genome Res.">
        <title>The status, quality, and expansion of the NIH full-length cDNA project: the Mammalian Gene Collection (MGC).</title>
        <authorList>
            <consortium name="The MGC Project Team"/>
        </authorList>
    </citation>
    <scope>NUCLEOTIDE SEQUENCE [LARGE SCALE MRNA]</scope>
    <source>
        <tissue>Liver</tissue>
    </source>
</reference>
<reference key="7">
    <citation type="journal article" date="1983" name="Biochemistry">
        <title>Characterization of the complementary deoxyribonucleic acid and gene coding for human prothrombin.</title>
        <authorList>
            <person name="Degen S.J.F."/>
            <person name="McGillivray R.T.A."/>
            <person name="Davie E.W."/>
        </authorList>
    </citation>
    <scope>NUCLEOTIDE SEQUENCE [MRNA] OF 8-622</scope>
    <scope>GAMMA-CARBOXYGLUTAMATION AT GLU-49; GLU-50; GLU-57; GLU-59; GLU-62; GLU-63; GLU-68; GLU-69; GLU-72 AND GLU-75</scope>
</reference>
<reference key="8">
    <citation type="journal article" date="1994" name="Urol. Res.">
        <title>Isolation and partial characterization of crystal matrix protein as a potent inhibitor of calcium oxalate crystal aggregation: evidence of activation peptide of human prothrombin.</title>
        <authorList>
            <person name="Suzuki K."/>
            <person name="Moriyama M."/>
            <person name="Nakajima C."/>
            <person name="Kawamura K."/>
            <person name="Miyazawa K."/>
            <person name="Tsugawa R."/>
            <person name="Kikuchi N."/>
            <person name="Nagata K."/>
        </authorList>
    </citation>
    <scope>PROTEIN SEQUENCE OF 44-64</scope>
    <source>
        <tissue>Urine</tissue>
    </source>
</reference>
<reference key="9">
    <citation type="journal article" date="1977" name="Proc. Natl. Acad. Sci. U.S.A.">
        <title>Amino acid sequence of human prothrombin fragments 1 and 2.</title>
        <authorList>
            <person name="Walz D.A."/>
            <person name="Hewett-Emmett D."/>
            <person name="Seegers W.H."/>
        </authorList>
    </citation>
    <scope>PROTEIN SEQUENCE OF 44-314</scope>
</reference>
<reference key="10">
    <citation type="journal article" date="1977" name="J. Biol. Chem.">
        <title>Primary structure of human prethrombin 2 and alpha-thrombin.</title>
        <authorList>
            <person name="Butkowski R.J."/>
            <person name="Elion J."/>
            <person name="Downing M.R."/>
            <person name="Mann K.G."/>
        </authorList>
    </citation>
    <scope>PROTEIN SEQUENCE OF 315-622</scope>
    <scope>GLYCOSYLATION AT ASN-416</scope>
    <scope>VARIANT GLN-532</scope>
</reference>
<reference key="11">
    <citation type="submission" date="2003-07" db="EMBL/GenBank/DDBJ databases">
        <title>Antithrombotic thrombin variants.</title>
        <authorList>
            <person name="Gruber A."/>
            <person name="Hanson S.R."/>
            <person name="DiCera E."/>
        </authorList>
    </citation>
    <scope>NUCLEOTIDE SEQUENCE [MRNA] OF 364-622</scope>
</reference>
<reference key="12">
    <citation type="journal article" date="1984" name="J. Biochem.">
        <title>Mechanism of inhibition of activated protein C by protein C inhibitor.</title>
        <authorList>
            <person name="Suzuki K."/>
            <person name="Nishioka J."/>
            <person name="Kusumoto H."/>
            <person name="Hashimoto S."/>
        </authorList>
    </citation>
    <scope>ACTIVITY REGULATION</scope>
    <scope>HETERODIMER WITH SERPINA5</scope>
</reference>
<reference key="13">
    <citation type="journal article" date="1986" name="J. Biol. Chem.">
        <title>Prothrombin fragment 1 X 2 X 3, a major product of prothrombin activation in human plasma.</title>
        <authorList>
            <person name="Rabiet M.J."/>
            <person name="Blashill A."/>
            <person name="Furie B."/>
            <person name="Furie B.C."/>
        </authorList>
    </citation>
    <scope>PROTEOLYTIC PROCESSING</scope>
    <scope>GAMMA-CARBOXYGLUTAMATION AT GLU-49 AND GLU-50</scope>
</reference>
<reference key="14">
    <citation type="journal article" date="1988" name="Pept. Res.">
        <title>Synthetic peptides bind to high-affinity thrombin receptors and modulate thrombin mitogenesis.</title>
        <authorList>
            <person name="Glenn K.C."/>
            <person name="Frost G.H."/>
            <person name="Bergmann J.S."/>
            <person name="Carney D.H."/>
        </authorList>
    </citation>
    <scope>FUNCTION</scope>
    <scope>CHARACTERIZATION</scope>
</reference>
<reference key="15">
    <citation type="journal article" date="1991" name="J. Biol. Chem.">
        <title>Activation of human blood coagulation factor XI independent of factor XII. Factor XI is activated by thrombin and factor XIa in the presence of negatively charged surfaces.</title>
        <authorList>
            <person name="Naito K."/>
            <person name="Fujikawa K."/>
        </authorList>
    </citation>
    <scope>FUNCTION</scope>
    <scope>ACTIVITY REGULATION</scope>
</reference>
<reference key="16">
    <citation type="journal article" date="1997" name="Eur. J. Biochem.">
        <title>Prothrombin, albumin and immunoglobulin A form covalent complexes with alpha1-microglobulin in human plasma.</title>
        <authorList>
            <person name="Berggaard T."/>
            <person name="Thelin N."/>
            <person name="Falkenberg C."/>
            <person name="Enghild J.J."/>
            <person name="Akerstroem B."/>
        </authorList>
    </citation>
    <scope>INTERACTION WITH ALPHA-1-MICROGLOBULIN</scope>
</reference>
<reference key="17">
    <citation type="journal article" date="1998" name="J. Immunol.">
        <title>Factor Xa induces cytokine production and expression of adhesion molecules by human umbilical vein endothelial cells.</title>
        <authorList>
            <person name="Senden N.H."/>
            <person name="Jeunhomme T.M."/>
            <person name="Heemskerk J.W."/>
            <person name="Wagenvoord R."/>
            <person name="van't Veer C."/>
            <person name="Hemker H.C."/>
            <person name="Buurman W.A."/>
        </authorList>
    </citation>
    <scope>FUNCTION</scope>
</reference>
<reference key="18">
    <citation type="journal article" date="2001" name="Am. J. Reprod. Immunol.">
        <title>Thrombophilic gene mutations and recurrent spontaneous abortion: prothrombin mutation increases the risk in the first trimester.</title>
        <authorList>
            <person name="Pihusch R."/>
            <person name="Buchholz T."/>
            <person name="Lohse P."/>
            <person name="Rubsamen H."/>
            <person name="Rogenhofer N."/>
            <person name="Hasbargen U."/>
            <person name="Hiller E."/>
            <person name="Thaler C.J."/>
        </authorList>
    </citation>
    <scope>INVOLVEMENT IN RPRGL2 SUSCEPTIBILITY</scope>
</reference>
<reference key="19">
    <citation type="journal article" date="2004" name="Arch. Neurol.">
        <title>Meta-analysis of genetic studies in ischemic stroke: thirty-two genes involving approximately 18,000 cases and 58,000 controls.</title>
        <authorList>
            <person name="Casas J.P."/>
            <person name="Hingorani A.D."/>
            <person name="Bautista L.E."/>
            <person name="Sharma P."/>
        </authorList>
    </citation>
    <scope>INVOLVEMENT IN SUSCEPTIBILITY TO ISCHSTR</scope>
</reference>
<reference key="20">
    <citation type="journal article" date="2004" name="Proteomics">
        <title>Screening for N-glycosylated proteins by liquid chromatography mass spectrometry.</title>
        <authorList>
            <person name="Bunkenborg J."/>
            <person name="Pilch B.J."/>
            <person name="Podtelejnikov A.V."/>
            <person name="Wisniewski J.R."/>
        </authorList>
    </citation>
    <scope>GLYCOSYLATION [LARGE SCALE ANALYSIS] AT ASN-121 AND ASN-143</scope>
    <source>
        <tissue>Plasma</tissue>
    </source>
</reference>
<reference key="21">
    <citation type="journal article" date="2005" name="J. Orthop. Res.">
        <title>rhBMP-2, rhVEGF(165), rhPTN and thrombin-related peptide, TP508 induce chemotaxis of human osteoblasts and microvascular endothelial cells.</title>
        <authorList>
            <person name="Li G."/>
            <person name="Cui Y."/>
            <person name="McIlmurray L."/>
            <person name="Allen W.E."/>
            <person name="Wang H."/>
        </authorList>
    </citation>
    <scope>CHARACTERIZATION OF THE TP508 PEPTIDE</scope>
</reference>
<reference key="22">
    <citation type="journal article" date="2005" name="J. Proteome Res.">
        <title>Human plasma N-glycoproteome analysis by immunoaffinity subtraction, hydrazide chemistry, and mass spectrometry.</title>
        <authorList>
            <person name="Liu T."/>
            <person name="Qian W.-J."/>
            <person name="Gritsenko M.A."/>
            <person name="Camp D.G. II"/>
            <person name="Monroe M.E."/>
            <person name="Moore R.J."/>
            <person name="Smith R.D."/>
        </authorList>
    </citation>
    <scope>GLYCOSYLATION [LARGE SCALE ANALYSIS] AT ASN-121; ASN-143 AND ASN-416</scope>
    <source>
        <tissue>Plasma</tissue>
    </source>
</reference>
<reference key="23">
    <citation type="journal article" date="2007" name="Wound Repair Regen.">
        <title>Thrombin peptide Chrysalin stimulates healing of diabetic foot ulcers in a placebo-controlled phase I/II study.</title>
        <authorList>
            <person name="Fife C."/>
            <person name="Mader J.T."/>
            <person name="Stone J."/>
            <person name="Brill L."/>
            <person name="Satterfield K."/>
            <person name="Norfleet A."/>
            <person name="Zwernemann A."/>
            <person name="Ryaby J.T."/>
            <person name="Carney D.H."/>
        </authorList>
    </citation>
    <scope>THERAPEUTIC USAGE OF THE TP508 PEPTIDE</scope>
</reference>
<reference key="24">
    <citation type="journal article" date="2009" name="J. Proteome Res.">
        <title>Glycoproteomics analysis of human liver tissue by combination of multiple enzyme digestion and hydrazide chemistry.</title>
        <authorList>
            <person name="Chen R."/>
            <person name="Jiang X."/>
            <person name="Sun D."/>
            <person name="Han G."/>
            <person name="Wang F."/>
            <person name="Ye M."/>
            <person name="Wang L."/>
            <person name="Zou H."/>
        </authorList>
    </citation>
    <scope>GLYCOSYLATION [LARGE SCALE ANALYSIS] AT ASN-416</scope>
    <source>
        <tissue>Liver</tissue>
    </source>
</reference>
<reference key="25">
    <citation type="journal article" date="2009" name="Mol. Cell. Proteomics">
        <title>A strategy for precise and large scale identification of core fucosylated glycoproteins.</title>
        <authorList>
            <person name="Jia W."/>
            <person name="Lu Z."/>
            <person name="Fu Y."/>
            <person name="Wang H.P."/>
            <person name="Wang L.H."/>
            <person name="Chi H."/>
            <person name="Yuan Z.F."/>
            <person name="Zheng Z.B."/>
            <person name="Song L.N."/>
            <person name="Han H.H."/>
            <person name="Liang Y.M."/>
            <person name="Wang J.L."/>
            <person name="Cai Y."/>
            <person name="Zhang Y.K."/>
            <person name="Deng Y.L."/>
            <person name="Ying W.T."/>
            <person name="He S.M."/>
            <person name="Qian X.H."/>
        </authorList>
    </citation>
    <scope>GLYCOSYLATION AT ASN-416</scope>
</reference>
<reference key="26">
    <citation type="journal article" date="2009" name="Nat. Methods">
        <title>Enrichment of glycopeptides for glycan structure and attachment site identification.</title>
        <authorList>
            <person name="Nilsson J."/>
            <person name="Rueetschi U."/>
            <person name="Halim A."/>
            <person name="Hesse C."/>
            <person name="Carlsohn E."/>
            <person name="Brinkmalm G."/>
            <person name="Larson G."/>
        </authorList>
    </citation>
    <scope>GLYCOSYLATION [LARGE SCALE ANALYSIS] AT ASN-416</scope>
    <scope>STRUCTURE OF CARBOHYDRATE</scope>
    <source>
        <tissue>Cerebrospinal fluid</tissue>
    </source>
</reference>
<reference key="27">
    <citation type="journal article" date="2011" name="Blood">
        <title>Polyphosphate is a cofactor for the activation of factor XI by thrombin.</title>
        <authorList>
            <person name="Choi S.H."/>
            <person name="Smith S.A."/>
            <person name="Morrissey J.H."/>
        </authorList>
    </citation>
    <scope>FUNCTION</scope>
    <scope>ACTIVITY REGULATION</scope>
</reference>
<reference key="28">
    <citation type="journal article" date="2012" name="Mol. Cell. Proteomics">
        <title>Human urinary glycoproteomics; attachment site specific analysis of N- and O-linked glycosylations by CID and ECD.</title>
        <authorList>
            <person name="Halim A."/>
            <person name="Nilsson J."/>
            <person name="Ruetschi U."/>
            <person name="Hesse C."/>
            <person name="Larson G."/>
        </authorList>
    </citation>
    <scope>GLYCOSYLATION AT ASN-121 AND ASN-143</scope>
    <scope>STRUCTURE OF CARBOHYDRATES</scope>
    <scope>IDENTIFICATION BY MASS SPECTROMETRY</scope>
</reference>
<reference key="29">
    <citation type="journal article" date="2014" name="J. Proteomics">
        <title>An enzyme assisted RP-RPLC approach for in-depth analysis of human liver phosphoproteome.</title>
        <authorList>
            <person name="Bian Y."/>
            <person name="Song C."/>
            <person name="Cheng K."/>
            <person name="Dong M."/>
            <person name="Wang F."/>
            <person name="Huang J."/>
            <person name="Sun D."/>
            <person name="Wang L."/>
            <person name="Ye M."/>
            <person name="Zou H."/>
        </authorList>
    </citation>
    <scope>IDENTIFICATION BY MASS SPECTROMETRY [LARGE SCALE ANALYSIS]</scope>
    <source>
        <tissue>Liver</tissue>
    </source>
</reference>
<reference key="30">
    <citation type="journal article" date="2018" name="Front. Pharmacol.">
        <title>TAK-442, a Direct Factor Xa Inhibitor, Inhibits Monocyte Chemoattractant Protein 1 Production in Endothelial Cells via Involvement of Protease-Activated Receptor 1.</title>
        <authorList>
            <person name="Shinozawa E."/>
            <person name="Nakayama M."/>
            <person name="Imura Y."/>
        </authorList>
    </citation>
    <scope>FUNCTION</scope>
</reference>
<reference key="31">
    <citation type="journal article" date="2021" name="Front. Immunol.">
        <title>Iripin-3, a New Salivary Protein Isolated From Ixodes ricinus Ticks, Displays Immunomodulatory and Anti-Hemostatic Properties In Vitro.</title>
        <authorList>
            <person name="Chlastakova A."/>
            <person name="Kotal J."/>
            <person name="Berankova Z."/>
            <person name="Kascakova B."/>
            <person name="Martins L.A."/>
            <person name="Langhansova H."/>
            <person name="Prudnikova T."/>
            <person name="Ederova M."/>
            <person name="Kuta Smatanova I."/>
            <person name="Kotsyfakis M."/>
            <person name="Chmelar J."/>
        </authorList>
    </citation>
    <scope>INTERACTION WITH TICK IRIPIN-3</scope>
</reference>
<reference key="32">
    <citation type="journal article" date="2021" name="Int. J. Mol. Sci.">
        <title>Ixodes ricinus Salivary Serpin Iripin-8 Inhibits the Intrinsic Pathway of Coagulation and Complement.</title>
        <authorList>
            <person name="Kotal J."/>
            <person name="Polderdijk S.G.I."/>
            <person name="Langhansova H."/>
            <person name="Ederova M."/>
            <person name="Martins L.A."/>
            <person name="Berankova Z."/>
            <person name="Chlastakova A."/>
            <person name="Hajdusek O."/>
            <person name="Kotsyfakis M."/>
            <person name="Huntington J.A."/>
            <person name="Chmelar J."/>
        </authorList>
    </citation>
    <scope>INTERACTION WITH TICK IRIPIN-8</scope>
</reference>
<reference key="33">
    <citation type="journal article" date="2021" name="J. Biol. Chem.">
        <title>Role of sequence and position of the cleavage sites in prothrombin activation.</title>
        <authorList>
            <person name="Stojanovski B.M."/>
            <person name="Di Cera E."/>
        </authorList>
    </citation>
    <scope>PROTHROMBIN ACTIVATION</scope>
    <scope>MUTAGENESIS OF ARG-314; ARG-363 AND SER-568</scope>
</reference>
<reference key="34">
    <citation type="journal article" date="2021" name="J. Biol. Chem.">
        <title>Identification of a substrate-like cleavage-resistant thrombin inhibitor from the saliva of the flea Xenopsylla cheopis.</title>
        <authorList>
            <person name="Lu S."/>
            <person name="Tirloni L."/>
            <person name="Oliveira M.B."/>
            <person name="Bosio C.F."/>
            <person name="Nardone G.A."/>
            <person name="Zhang Y."/>
            <person name="Hinnebusch B.J."/>
            <person name="Ribeiro J.M."/>
            <person name="Andersen J.F."/>
        </authorList>
    </citation>
    <scope>INTERACTION WITH FLEA SALIVARY THROMBIN INHIBITORS XC-42 AND XC-43</scope>
</reference>
<reference key="35">
    <citation type="journal article" date="1989" name="EMBO J.">
        <title>The refined 1.9 A crystal structure of human alpha-thrombin: interaction with D-Phe-Pro-Arg chloromethylketone and significance of the Tyr-Pro-Pro-Trp insertion segment.</title>
        <authorList>
            <person name="Bode W."/>
            <person name="Mayr I."/>
            <person name="Baumann U."/>
            <person name="Huber R."/>
            <person name="Stone S.R."/>
            <person name="Hofsteenge J."/>
        </authorList>
    </citation>
    <scope>X-RAY CRYSTALLOGRAPHY (1.9 ANGSTROMS)</scope>
</reference>
<reference key="36">
    <citation type="journal article" date="1990" name="EMBO J.">
        <title>Crystal structure of the thrombin-hirudin complex: a novel mode of serine protease inhibition.</title>
        <authorList>
            <person name="Gruetter M.G."/>
            <person name="Priestle J.P."/>
            <person name="Rahuel J."/>
            <person name="Grossenbacher H."/>
            <person name="Bode W."/>
            <person name="Hofsteenge J."/>
            <person name="Stone S.R."/>
        </authorList>
    </citation>
    <scope>X-RAY CRYSTALLOGRAPHY (2.95 ANGSTROMS) IN COMPLEX WITH HIRUDIN</scope>
</reference>
<reference key="37">
    <citation type="journal article" date="1990" name="Science">
        <title>The structure of a complex of recombinant hirudin and human alpha-thrombin.</title>
        <authorList>
            <person name="Rydel T.J."/>
            <person name="Ravichandran K.G."/>
            <person name="Tulinsky A."/>
            <person name="Bode W."/>
            <person name="Huber R."/>
            <person name="Roitsch C."/>
            <person name="Fenton J.W. II"/>
        </authorList>
    </citation>
    <scope>X-RAY CRYSTALLOGRAPHY (2.3 ANGSTROMS) IN COMPLEX WITH HIRUDIN</scope>
</reference>
<reference key="38">
    <citation type="journal article" date="1993" name="Protein Sci.">
        <title>Changes in interactions in complexes of hirudin derivatives and human alpha-thrombin due to different crystal forms.</title>
        <authorList>
            <person name="Priestle J.P."/>
            <person name="Rahuel J."/>
            <person name="Rink H."/>
            <person name="Tones M."/>
            <person name="Gruetter M.G."/>
        </authorList>
    </citation>
    <scope>X-RAY CRYSTALLOGRAPHY (2.2 ANGSTROMS) OF 328-622 IN COMPLEXES WITH HIRUDIN AND SYNTHETIC INHIBITOR</scope>
</reference>
<reference key="39">
    <citation type="journal article" date="1994" name="J. Biol. Chem.">
        <title>Crystallographic structure of human gamma-thrombin.</title>
        <authorList>
            <person name="Rydel T.J."/>
            <person name="Yin M."/>
            <person name="Padmanabhan K.P."/>
            <person name="Blankenship D.T."/>
            <person name="Cardin A.D."/>
            <person name="Correa P.E."/>
            <person name="Fenton J.W. II"/>
            <person name="Tulinsky A."/>
        </authorList>
    </citation>
    <scope>X-RAY CRYSTALLOGRAPHY (2.5 ANGSTROMS)</scope>
</reference>
<reference key="40">
    <citation type="journal article" date="1997" name="EMBO J.">
        <title>The thrombin E192Q-BPTI complex reveals gross structural rearrangements: implications for the interaction with antithrombin and thrombomodulin.</title>
        <authorList>
            <person name="van de Locht A."/>
            <person name="Bode W."/>
            <person name="Huber R."/>
            <person name="le Bonniec B.F."/>
            <person name="Stone S.R."/>
            <person name="Esmon C.T."/>
            <person name="Stubbs M.T."/>
        </authorList>
    </citation>
    <scope>X-RAY CRYSTALLOGRAPHY (2.3 ANGSTROMS)</scope>
</reference>
<reference key="41">
    <citation type="journal article" date="1999" name="Proc. Natl. Acad. Sci. U.S.A.">
        <title>Unexpected crucial role of residue 225 in serine proteases.</title>
        <authorList>
            <person name="Guinto E.R."/>
            <person name="Caccia S."/>
            <person name="Rose T."/>
            <person name="Fuetterer K."/>
            <person name="Waksman G."/>
            <person name="di Cera E."/>
        </authorList>
    </citation>
    <scope>X-RAY CRYSTALLOGRAPHY (2.1 ANGSTROMS) OF 328-601</scope>
</reference>
<reference key="42">
    <citation type="journal article" date="2001" name="J. Mol. Biol.">
        <title>Inhibition of human alpha-thrombin by a phosphonate tripeptide proceeds via a metastable pentacoordinated phosphorus intermediate.</title>
        <authorList>
            <person name="Skordalakes E."/>
            <person name="Dodson G.G."/>
            <person name="Green D.S."/>
            <person name="Goodwin C.A."/>
            <person name="Scully M.F."/>
            <person name="Hudson H.R."/>
            <person name="Kakkar V.V."/>
            <person name="Deadman J.J."/>
        </authorList>
    </citation>
    <scope>X-RAY CRYSTALLOGRAPHY (1.4 ANGSTROMS) OF 333-621 IN COMPLEX WITH SYNTHETIC INHIBITOR</scope>
</reference>
<reference key="43">
    <citation type="journal article" date="2006" name="Org. Biomol. Chem.">
        <title>Multipolar interactions in the D pocket of thrombin: large differences between tricyclic imide and lactam inhibitors.</title>
        <authorList>
            <person name="Schweizer E."/>
            <person name="Hoffmann-Roeder A."/>
            <person name="Olsen J.A."/>
            <person name="Seiler P."/>
            <person name="Obst-Sander U."/>
            <person name="Wagner B."/>
            <person name="Kansy M."/>
            <person name="Banner D.W."/>
            <person name="Diederich F."/>
        </authorList>
    </citation>
    <scope>X-RAY CRYSTALLOGRAPHY (1.3 ANGSTROMS) OF 334-620 IN COMPLEX WITH HIRUDIN AND SYNTHETIC INHIBITOR</scope>
</reference>
<reference key="44">
    <citation type="journal article" date="2007" name="J. Am. Chem. Soc.">
        <title>Crystal structure of a biosynthetic sulfo-hirudin complexed to thrombin.</title>
        <authorList>
            <person name="Liu C.C."/>
            <person name="Brustad E."/>
            <person name="Liu W."/>
            <person name="Schultz P.G."/>
        </authorList>
    </citation>
    <scope>X-RAY CRYSTALLOGRAPHY (1.84 ANGSTROMS) OF 334-621 IN COMPLEX WITH HIRUDIN</scope>
</reference>
<reference key="45">
    <citation type="journal article" date="2008" name="Bioorg. Med. Chem. Lett.">
        <title>Structure-based design of novel groups for use in the P1 position of thrombin inhibitor scaffolds. Part 2: N-acetamidoimidazoles.</title>
        <authorList>
            <person name="Isaacs R.C.A."/>
            <person name="Solinsky M.G."/>
            <person name="Cutrona K.J."/>
            <person name="Newton C.L."/>
            <person name="Naylor-Olsen A.M."/>
            <person name="McMasters D.R."/>
            <person name="Krueger J.A."/>
            <person name="Lewis S.D."/>
            <person name="Lucas B.J."/>
            <person name="Kuo L.C."/>
            <person name="Yan Y."/>
            <person name="Lynch J.J."/>
            <person name="Lyle E.A."/>
        </authorList>
    </citation>
    <scope>X-RAY CRYSTALLOGRAPHY (1.84 ANGSTROMS) OF 335-621 IN COMPLEX WITH SYNTHETIC INHIBITOR</scope>
</reference>
<reference key="46">
    <citation type="journal article" date="2008" name="Proc. Natl. Acad. Sci. U.S.A.">
        <title>Molecular basis of thrombin recognition by protein C inhibitor revealed by the 1.6-A structure of the heparin-bridged complex.</title>
        <authorList>
            <person name="Li W."/>
            <person name="Adams T.E."/>
            <person name="Nangalia J."/>
            <person name="Esmon C.T."/>
            <person name="Huntington J.A."/>
        </authorList>
    </citation>
    <scope>X-RAY CRYSTALLOGRAPHY (1.6 ANGSTROMS) OF 315-622 IN COMPLEX WITH SERPINA5 AND HEPARIN</scope>
</reference>
<reference evidence="59" key="47">
    <citation type="journal article" date="2011" name="PLoS ONE">
        <title>Crystal structure of thrombin in complex with S-variegin: insights of a novel mechanism of inhibition and design of tunable thrombin inhibitors.</title>
        <authorList>
            <person name="Koh C.Y."/>
            <person name="Kumar S."/>
            <person name="Kazimirova M."/>
            <person name="Nuttall P.A."/>
            <person name="Radhakrishnan U.P."/>
            <person name="Kim S."/>
            <person name="Jagadeeswaran P."/>
            <person name="Imamura T."/>
            <person name="Mizuguchi J."/>
            <person name="Iwanaga S."/>
            <person name="Swaminathan K."/>
            <person name="Kini R.M."/>
        </authorList>
    </citation>
    <scope>X-RAY CRYSTALLOGRAPHY (2.4 ANGSTROMS) OF 328-363 AND 364-622 IN COMPLEX WITH TICK VARIEGIN</scope>
    <scope>INTERACTION WITH TICK VARIEGIN</scope>
</reference>
<reference evidence="60 61" key="48">
    <citation type="journal article" date="2012" name="Proc. Natl. Acad. Sci. U.S.A.">
        <title>Unique thrombin inhibition mechanism by anophelin, an anticoagulant from the malaria vector.</title>
        <authorList>
            <person name="Figueiredo A.C."/>
            <person name="de Sanctis D."/>
            <person name="Gutierrez-Gallego R."/>
            <person name="Cereija T.B."/>
            <person name="Macedo-Ribeiro S."/>
            <person name="Fuentes-Prior P."/>
            <person name="Pereira P.J."/>
        </authorList>
    </citation>
    <scope>X-RAY CRYSTALLOGRAPHY (2.30 ANGSTROMS) OF 328-363 AND 364-622 IN COMPLEX WITH MOSQUITO SALIVARY THROMBIN INHIBITOR ANOPHELIN</scope>
    <scope>INTERACTION WITH MOSQUITO SALIVARY THROMBIN INHIBITOR ANOPHELIN</scope>
</reference>
<reference evidence="62" key="49">
    <citation type="journal article" date="2017" name="J. Biol. Chem.">
        <title>Functional analyses yield detailed insight into the mechanism of thrombin inhibition by the antihemostatic salivary protein cE5 from Anopheles gambiae.</title>
        <authorList>
            <person name="Pirone L."/>
            <person name="Ripoll-Rozada J."/>
            <person name="Leone M."/>
            <person name="Ronca R."/>
            <person name="Lombardo F."/>
            <person name="Fiorentino G."/>
            <person name="Andersen J.F."/>
            <person name="Pereira P.J.B."/>
            <person name="Arca B."/>
            <person name="Pedone E."/>
        </authorList>
    </citation>
    <scope>X-RAY CRYSTALLOGRAPHY (1.45 ANGSTROMS) OF 328-363 AND 364-622 IN COMPLEX WITH MOSQUITO SALIVARY THROMBIN INHIBITOR ANOPHELIN</scope>
    <scope>INTERACTION WITH MOSQUITO SALIVARY THROMBIN INHIBITOR ANOPHELIN</scope>
</reference>
<reference key="50">
    <citation type="journal article" date="1983" name="Br. J. Haematol.">
        <title>Determination of the amino acid substitution in human prothrombin type 3 (157 Glu leads to Lys) and the localization of a third thrombin cleavage site.</title>
        <authorList>
            <person name="Board P.G."/>
            <person name="Shaw D.C."/>
        </authorList>
    </citation>
    <scope>VARIANT FA2D LYS-200</scope>
    <scope>PARTIAL PROTEIN SEQUENCE</scope>
</reference>
<reference key="51">
    <citation type="journal article" date="1986" name="J. Biol. Chem.">
        <title>Molecular defect of prothrombin Barcelona. Substitution of cysteine for arginine at residue 273.</title>
        <authorList>
            <person name="Rabiet M.-J."/>
            <person name="Furie B.C."/>
            <person name="Furie B."/>
        </authorList>
    </citation>
    <scope>VARIANT FA2D CYS-314</scope>
    <scope>PROTEIN SEQUENCE OF 310-327</scope>
</reference>
<reference key="52">
    <citation type="journal article" date="1987" name="Biochemistry">
        <title>Prothrombin Tokushima, a replacement of arginine-418 by tryptophan that impairs the fibrinogen clotting activity of derived thrombin Tokushima.</title>
        <authorList>
            <person name="Miyata T."/>
            <person name="Morita T."/>
            <person name="Inomoto T."/>
            <person name="Kawauchi S."/>
            <person name="Shirakami A."/>
            <person name="Iwanaga S."/>
        </authorList>
    </citation>
    <scope>VARIANT FA2D TRP-461</scope>
    <scope>PARTIAL PROTEIN SEQUENCE</scope>
</reference>
<reference key="53">
    <citation type="journal article" date="1987" name="Blood">
        <title>Prothrombin Tokushima: characterization of dysfunctional thrombin derived from a variant of human prothrombin.</title>
        <authorList>
            <person name="Inomoto T."/>
            <person name="Shirakami A."/>
            <person name="Kawauchi S."/>
            <person name="Shigekiyo T."/>
            <person name="Saito S."/>
            <person name="Miyoshi K."/>
            <person name="Morita T."/>
            <person name="Iwanaga S."/>
        </authorList>
    </citation>
    <scope>VARIANT FA2D TRP-461</scope>
</reference>
<reference key="54">
    <citation type="journal article" date="1988" name="Biochemistry">
        <title>Identification of the primary structural defect in the dysthrombin thrombin Quick I: substitution of cysteine for arginine-382.</title>
        <authorList>
            <person name="Henriksen R.A."/>
            <person name="Mann K.G."/>
        </authorList>
    </citation>
    <scope>VARIANT FA2D CYS-425</scope>
    <scope>PARTIAL PROTEIN SEQUENCE</scope>
</reference>
<reference key="55">
    <citation type="journal article" date="1989" name="Biochemistry">
        <title>Substitution of valine for glycine-558 in the congenital dysthrombin thrombin Quick II alters primary substrate specificity.</title>
        <authorList>
            <person name="Henriksen R.A."/>
            <person name="Mann K.G."/>
        </authorList>
    </citation>
    <scope>VARIANT FA2D VAL-601</scope>
    <scope>PARTIAL PROTEIN SEQUENCE</scope>
</reference>
<reference key="56">
    <citation type="journal article" date="1992" name="Biochemistry">
        <title>Prothrombin Salakta: substitution of glutamic acid-466 by alanine reduces the fibrinogen clotting activity and the esterase activity.</title>
        <authorList>
            <person name="Miyata T."/>
            <person name="Aruga R."/>
            <person name="Umeyama H."/>
            <person name="Bezeaud A."/>
            <person name="Guillin M.-C."/>
            <person name="Iwanaga S."/>
        </authorList>
    </citation>
    <scope>VARIANT FA2D ALA-509</scope>
    <scope>PARTIAL PROTEIN SEQUENCE</scope>
</reference>
<reference key="57">
    <citation type="journal article" date="1992" name="Blood">
        <title>Prothrombin Himi: a compound heterozygote for two dysfunctional prothrombin molecules (Met-337--&gt;Thr and Arg-388--&gt;His).</title>
        <authorList>
            <person name="Morishita E."/>
            <person name="Saito M."/>
            <person name="Kumabashiri I."/>
            <person name="Asakura H."/>
            <person name="Matsuda T."/>
            <person name="Yamaguchi K."/>
        </authorList>
    </citation>
    <scope>VARIANTS FA2D THR-380 AND HIS-431</scope>
</reference>
<reference key="58">
    <citation type="journal article" date="1992" name="Int. J. Hematol.">
        <title>Detection of a single base substitution of the gene for prothrombin Tokushima. The application of PCR-SSCP for the genetic and molecular analysis of dysprothrombinemia.</title>
        <authorList>
            <person name="Iwahana H."/>
            <person name="Yoshimoto K."/>
            <person name="Shigekiyo T."/>
            <person name="Shirakami A."/>
            <person name="Saito S."/>
            <person name="Itakura M."/>
        </authorList>
    </citation>
    <scope>VARIANT FA2D TRP-461</scope>
</reference>
<reference key="59">
    <citation type="journal article" date="1994" name="Blood Coagul. Fibrinolysis">
        <title>Prothrombin Padua I: incomplete activation due to an amino acid substitution at a factor Xa cleavage site.</title>
        <authorList>
            <person name="James H.L."/>
            <person name="Kim D.J."/>
            <person name="Zheng D.-Q."/>
            <person name="Girolami A."/>
        </authorList>
    </citation>
    <scope>VARIANT FA2D HIS-314</scope>
</reference>
<reference key="60">
    <citation type="journal article" date="1995" name="Thromb. Haemost.">
        <title>Prothrombin Frankfurt: a dysfunctional prothrombin characterized by substitution of Glu-466 by Ala.</title>
        <authorList>
            <person name="Degen S.J.F."/>
            <person name="McDowell S.A."/>
            <person name="Sparks L.M."/>
            <person name="Scharrer I."/>
        </authorList>
    </citation>
    <scope>VARIANT FA2D ALA-509</scope>
</reference>
<reference key="61">
    <citation type="journal article" date="1999" name="Nat. Genet.">
        <title>Characterization of single-nucleotide polymorphisms in coding regions of human genes.</title>
        <authorList>
            <person name="Cargill M."/>
            <person name="Altshuler D."/>
            <person name="Ireland J."/>
            <person name="Sklar P."/>
            <person name="Ardlie K."/>
            <person name="Patil N."/>
            <person name="Shaw N."/>
            <person name="Lane C.R."/>
            <person name="Lim E.P."/>
            <person name="Kalyanaraman N."/>
            <person name="Nemesh J."/>
            <person name="Ziaugra L."/>
            <person name="Friedland L."/>
            <person name="Rolfe A."/>
            <person name="Warrington J."/>
            <person name="Lipshutz R."/>
            <person name="Daley G.Q."/>
            <person name="Lander E.S."/>
        </authorList>
    </citation>
    <scope>VARIANTS MET-165 AND THR-386</scope>
</reference>
<reference key="62">
    <citation type="journal article" date="1999" name="Nat. Genet.">
        <authorList>
            <person name="Cargill M."/>
            <person name="Altshuler D."/>
            <person name="Ireland J."/>
            <person name="Sklar P."/>
            <person name="Ardlie K."/>
            <person name="Patil N."/>
            <person name="Shaw N."/>
            <person name="Lane C.R."/>
            <person name="Lim E.P."/>
            <person name="Kalyanaraman N."/>
            <person name="Nemesh J."/>
            <person name="Ziaugra L."/>
            <person name="Friedland L."/>
            <person name="Rolfe A."/>
            <person name="Warrington J."/>
            <person name="Lipshutz R."/>
            <person name="Daley G.Q."/>
            <person name="Lander E.S."/>
        </authorList>
    </citation>
    <scope>ERRATUM OF PUBMED:10391209</scope>
</reference>
<reference key="63">
    <citation type="journal article" date="2011" name="J. Mol. Cell Biol.">
        <title>Quantitative detection of single amino acid polymorphisms by targeted proteomics.</title>
        <authorList>
            <person name="Su Z.D."/>
            <person name="Sun L."/>
            <person name="Yu D.X."/>
            <person name="Li R.X."/>
            <person name="Li H.X."/>
            <person name="Yu Z.J."/>
            <person name="Sheng Q.H."/>
            <person name="Lin X."/>
            <person name="Zeng R."/>
            <person name="Wu J.R."/>
        </authorList>
    </citation>
    <scope>VARIANTS MET-165; LYS-200; THR-386 AND GLN-532</scope>
    <scope>IDENTIFICATION BY MASS SPECTROMETRY</scope>
</reference>
<protein>
    <recommendedName>
        <fullName>Prothrombin</fullName>
        <ecNumber>3.4.21.5</ecNumber>
    </recommendedName>
    <alternativeName>
        <fullName>Coagulation factor II</fullName>
    </alternativeName>
    <component>
        <recommendedName>
            <fullName>Activation peptide fragment 1</fullName>
        </recommendedName>
    </component>
    <component>
        <recommendedName>
            <fullName>Activation peptide fragment 2</fullName>
        </recommendedName>
    </component>
    <component>
        <recommendedName>
            <fullName>Thrombin light chain</fullName>
        </recommendedName>
    </component>
    <component>
        <recommendedName>
            <fullName>Thrombin heavy chain</fullName>
        </recommendedName>
    </component>
</protein>
<comment type="function">
    <text evidence="24 25 35 37 55">Thrombin, which cleaves bonds after Arg and Lys, converts fibrinogen to fibrin and activates factors V, VII, VIII, XIII, and, in complex with thrombomodulin, protein C. Functions in blood homeostasis, inflammation and wound healing. Activates coagulation factor XI (F11); activation is promoted by the contact with negatively charged surfaces (PubMed:2019570, PubMed:21976677). Triggers the production of pro-inflammatory cytokines, such as MCP-1/CCL2 and IL8/CXCL8, in endothelial cells (PubMed:30568593, PubMed:9780208).</text>
</comment>
<comment type="catalytic activity">
    <reaction>
        <text>Selective cleavage of Arg-|-Gly bonds in fibrinogen to form fibrin and release fibrinopeptides A and B.</text>
        <dbReference type="EC" id="3.4.21.5"/>
    </reaction>
</comment>
<comment type="activity regulation">
    <text evidence="24 25 48">Activity is promoted in the presence of negatively charged surfaces, such as polyphosphate and dextran sulfate (PubMed:2019570, PubMed:21976677). Inhibited by SERPINA5 (PubMed:6323392).</text>
</comment>
<comment type="subunit">
    <text evidence="7 17 18 19 20 27 29 30 31 36 39 41 42 54">Heterodimer (named alpha-thrombin) of a light and a heavy chain; disulfide-linked. Forms a heterodimer with SERPINA5. In plasma, interacts (via N-terminus) with alpha-1-microglobulin with molar ratio 1:2 and 1:1; this interaction does not prevent the activation of prothrombin to thrombin. Interacts (thrombin) with iripin-8, a serine protease inhibitor from Ixodes ricinus saliva (PubMed:34502392). Interacts (thrombin) with iripin-3, a serine protease inhibitor from Ixodes ricinus saliva (PubMed:33732248). Interacts (thrombin) with Anopheles albimanus salivary thrombin inhibitor anophelin; the interaction results in thrombin inhibition (PubMed:23223529). Interacts (thrombin) with Anopheles gambiae salivary thrombin inhibitor anophelin; the interaction results in thrombin inhibition (PubMed:28592490). Interacts (thrombin) with Amblyomma variegatum variegin; the interaction results in thrombin inhibition (PubMed:22053189). Interacts (thrombin) with Xenopsylla cheopis salivary thrombin inhibitor XC-42 (PubMed:34688666). Interacts (thrombin) with Xenopsylla cheopis salivary thrombin inhibitor XC-43 (PubMed:34688666).</text>
</comment>
<comment type="interaction">
    <interactant intactId="EBI-297094">
        <id>P00734</id>
    </interactant>
    <interactant intactId="EBI-77613">
        <id>P05067</id>
        <label>APP</label>
    </interactant>
    <organismsDiffer>false</organismsDiffer>
    <experiments>3</experiments>
</comment>
<comment type="interaction">
    <interactant intactId="EBI-297094">
        <id>P00734</id>
    </interactant>
    <interactant intactId="EBI-941422">
        <id>P07204</id>
        <label>THBD</label>
    </interactant>
    <organismsDiffer>false</organismsDiffer>
    <experiments>4</experiments>
</comment>
<comment type="interaction">
    <interactant intactId="EBI-297094">
        <id>P00734</id>
    </interactant>
    <interactant intactId="EBI-989571">
        <id>Q846V4</id>
    </interactant>
    <organismsDiffer>true</organismsDiffer>
    <experiments>5</experiments>
</comment>
<comment type="interaction">
    <interactant intactId="EBI-26959170">
        <id>PRO_0000028160</id>
    </interactant>
    <interactant intactId="EBI-26959093">
        <id>PRO_0000032489</id>
        <label>SERPINC1</label>
        <dbReference type="UniProtKB" id="P01008"/>
    </interactant>
    <organismsDiffer>false</organismsDiffer>
    <experiments>2</experiments>
</comment>
<comment type="subcellular location">
    <subcellularLocation>
        <location>Secreted</location>
        <location>Extracellular space</location>
    </subcellularLocation>
</comment>
<comment type="tissue specificity">
    <text>Expressed by the liver and secreted in plasma.</text>
</comment>
<comment type="PTM">
    <text evidence="44 47">The gamma-carboxyglutamyl residues, which bind calcium ions, result from the carboxylation of glutamyl residues by a microsomal enzyme, the vitamin K-dependent carboxylase. The modified residues are necessary for the calcium-dependent interaction with a negatively charged phospholipid surface, which is essential for the conversion of prothrombin to thrombin.</text>
</comment>
<comment type="PTM">
    <text evidence="13 16 21 22 23 28 53">N-glycosylated. N-glycan heterogeneity at Asn-121: Hex3HexNAc3 (minor), Hex4HexNAc3 (minor) and Hex5HexNAc4 (major). At Asn-143: Hex4HexNAc3 (minor) and Hex5HexNAc4 (major).</text>
</comment>
<comment type="PTM">
    <text evidence="58">In the penultimate step of the coagulation cascade, prothrombin is converted to thrombin by the prothrombinase complex composed of factor Xa (F10), cofactor Va (F5), and phospholipids. This activation requires factor Xa-catalyzed sequential cleavage at 2 sites, Arg-314 and Arg-363, along 2 possible pathways. In the first pathway, the first cleavage occurs at Arg-314, leading to the formation of the inactive intermediate prethrombin-2. This pathway preferentially occurs on platelets and in the absence of cofactor Va. In the second pathway, the first cleavage occurs at Arg-363, which separates protease domain into 2 chains that remain connected through a disulfide bond and generates the active intermediate meizothrombin. The presence of cofactor Va directs activation along the meizothrombin pathway and greatly accelerates the rate of cleavage at Arg-363, but has a smaller effect on the cleavage of meizothrombin at Arg-314. Meizothrombin accumulates as an intermediate when prothrombinase is assembled on the membrane of red blood cells.</text>
</comment>
<comment type="disease" evidence="9 10 11 14 33 38 43 45 46 49 50 51">
    <disease id="DI-02664">
        <name>Factor II deficiency</name>
        <acronym>FA2D</acronym>
        <description>A very rare blood coagulation disorder characterized by mucocutaneous bleeding symptoms. The severity of the bleeding manifestations correlates with blood factor II levels.</description>
        <dbReference type="MIM" id="613679"/>
    </disease>
    <text>The disease is caused by variants affecting the gene represented in this entry.</text>
</comment>
<comment type="disease" evidence="15">
    <disease id="DI-01835">
        <name>Ischemic stroke</name>
        <acronym>ISCHSTR</acronym>
        <description>A stroke is an acute neurologic event leading to death of neural tissue of the brain and resulting in loss of motor, sensory and/or cognitive function. Ischemic strokes, resulting from vascular occlusion, is considered to be a highly complex disease consisting of a group of heterogeneous disorders with multiple genetic and environmental risk factors.</description>
        <dbReference type="MIM" id="601367"/>
    </disease>
    <text>Disease susceptibility is associated with variants affecting the gene represented in this entry.</text>
</comment>
<comment type="disease" evidence="34">
    <disease id="DI-02665">
        <name>Thrombophilia due to thrombin defect</name>
        <acronym>THPH1</acronym>
        <description>A multifactorial disorder of hemostasis characterized by abnormal platelet aggregation in response to various agents and recurrent thrombi formation.</description>
        <dbReference type="MIM" id="188050"/>
    </disease>
    <text>The disease is caused by variants affecting the gene represented in this entry. A common genetic variation in the 3-prime untranslated region of the prothrombin gene is associated with elevated plasma prothrombin levels and an increased risk of venous thrombosis.</text>
</comment>
<comment type="disease" evidence="8">
    <disease id="DI-03351">
        <name>Pregnancy loss, recurrent, 2</name>
        <acronym>RPRGL2</acronym>
        <description>A common complication of pregnancy, resulting in spontaneous abortion before the fetus has reached viability. The term includes all miscarriages from the time of conception until 24 weeks of gestation. Recurrent pregnancy loss is defined as 3 or more consecutive spontaneous abortions.</description>
        <dbReference type="MIM" id="614390"/>
    </disease>
    <text>Disease susceptibility is associated with variants affecting the gene represented in this entry.</text>
</comment>
<comment type="pharmaceutical">
    <text>The peptide TP508 also known as Chrysalin (Orthologic) could be used to accelerate repair of both soft and hard tissues.</text>
</comment>
<comment type="miscellaneous">
    <text>It is not known whether 1 or 2 smaller activation peptides, with additional cleavage after Arg-314, are released in natural blood clotting.</text>
</comment>
<comment type="miscellaneous">
    <text>Thrombin can itself cleave the N-terminal fragment (fragment 1) of the prothrombin, prior to its activation by factor Xa.</text>
</comment>
<comment type="miscellaneous">
    <text>The cleavage after Arg-198, observed in vitro, does not occur in plasma.</text>
</comment>
<comment type="similarity">
    <text evidence="4">Belongs to the peptidase S1 family.</text>
</comment>
<comment type="online information" name="Wikipedia">
    <link uri="https://en.wikipedia.org/wiki/Thrombin"/>
    <text>Thrombin entry</text>
</comment>
<proteinExistence type="evidence at protein level"/>
<dbReference type="EC" id="3.4.21.5"/>
<dbReference type="EMBL" id="M17262">
    <property type="protein sequence ID" value="AAC63054.1"/>
    <property type="molecule type" value="Genomic_DNA"/>
</dbReference>
<dbReference type="EMBL" id="AJ972449">
    <property type="protein sequence ID" value="CAJ01369.1"/>
    <property type="molecule type" value="mRNA"/>
</dbReference>
<dbReference type="EMBL" id="AK303747">
    <property type="protein sequence ID" value="BAG64719.1"/>
    <property type="molecule type" value="mRNA"/>
</dbReference>
<dbReference type="EMBL" id="AK312965">
    <property type="protein sequence ID" value="BAG35804.1"/>
    <property type="molecule type" value="mRNA"/>
</dbReference>
<dbReference type="EMBL" id="AK222775">
    <property type="protein sequence ID" value="BAD96495.1"/>
    <property type="molecule type" value="mRNA"/>
</dbReference>
<dbReference type="EMBL" id="AK222777">
    <property type="protein sequence ID" value="BAD96497.1"/>
    <property type="molecule type" value="mRNA"/>
</dbReference>
<dbReference type="EMBL" id="AF478696">
    <property type="protein sequence ID" value="AAL77436.1"/>
    <property type="molecule type" value="Genomic_DNA"/>
</dbReference>
<dbReference type="EMBL" id="BC051332">
    <property type="protein sequence ID" value="AAH51332.1"/>
    <property type="molecule type" value="mRNA"/>
</dbReference>
<dbReference type="EMBL" id="V00595">
    <property type="protein sequence ID" value="CAA23842.1"/>
    <property type="molecule type" value="mRNA"/>
</dbReference>
<dbReference type="EMBL" id="AY344794">
    <property type="protein sequence ID" value="AAR08143.1"/>
    <property type="molecule type" value="mRNA"/>
</dbReference>
<dbReference type="CCDS" id="CCDS31476.1"/>
<dbReference type="PIR" id="A29351">
    <property type="entry name" value="TBHU"/>
</dbReference>
<dbReference type="RefSeq" id="NP_000497.1">
    <property type="nucleotide sequence ID" value="NM_000506.5"/>
</dbReference>
<dbReference type="RefSeq" id="NP_001298186.1">
    <property type="nucleotide sequence ID" value="NM_001311257.1"/>
</dbReference>
<dbReference type="PDB" id="1A2C">
    <property type="method" value="X-ray"/>
    <property type="resolution" value="2.10 A"/>
    <property type="chains" value="H=364-622, L=328-363"/>
</dbReference>
<dbReference type="PDB" id="1A3B">
    <property type="method" value="X-ray"/>
    <property type="resolution" value="1.80 A"/>
    <property type="chains" value="H=364-622, L=328-363"/>
</dbReference>
<dbReference type="PDB" id="1A3E">
    <property type="method" value="X-ray"/>
    <property type="resolution" value="1.85 A"/>
    <property type="chains" value="H=364-622, L=328-363"/>
</dbReference>
<dbReference type="PDB" id="1A46">
    <property type="method" value="X-ray"/>
    <property type="resolution" value="2.12 A"/>
    <property type="chains" value="H=364-622, L=328-363"/>
</dbReference>
<dbReference type="PDB" id="1A4W">
    <property type="method" value="X-ray"/>
    <property type="resolution" value="1.80 A"/>
    <property type="chains" value="H=364-622, L=328-363"/>
</dbReference>
<dbReference type="PDB" id="1A5G">
    <property type="method" value="X-ray"/>
    <property type="resolution" value="2.06 A"/>
    <property type="chains" value="H=364-622, L=328-363"/>
</dbReference>
<dbReference type="PDB" id="1A61">
    <property type="method" value="X-ray"/>
    <property type="resolution" value="2.20 A"/>
    <property type="chains" value="H=364-622, L=328-363"/>
</dbReference>
<dbReference type="PDB" id="1ABI">
    <property type="method" value="X-ray"/>
    <property type="resolution" value="2.30 A"/>
    <property type="chains" value="H=364-622, L=328-363"/>
</dbReference>
<dbReference type="PDB" id="1ABJ">
    <property type="method" value="X-ray"/>
    <property type="resolution" value="2.40 A"/>
    <property type="chains" value="H=364-622, L=328-363"/>
</dbReference>
<dbReference type="PDB" id="1AD8">
    <property type="method" value="X-ray"/>
    <property type="resolution" value="2.00 A"/>
    <property type="chains" value="H=364-622, L=328-363"/>
</dbReference>
<dbReference type="PDB" id="1AE8">
    <property type="method" value="X-ray"/>
    <property type="resolution" value="2.00 A"/>
    <property type="chains" value="H=364-622, L=328-363"/>
</dbReference>
<dbReference type="PDB" id="1AFE">
    <property type="method" value="X-ray"/>
    <property type="resolution" value="2.00 A"/>
    <property type="chains" value="H=364-622, L=328-363"/>
</dbReference>
<dbReference type="PDB" id="1AHT">
    <property type="method" value="X-ray"/>
    <property type="resolution" value="1.60 A"/>
    <property type="chains" value="H=364-622, L=328-363"/>
</dbReference>
<dbReference type="PDB" id="1AI8">
    <property type="method" value="X-ray"/>
    <property type="resolution" value="1.85 A"/>
    <property type="chains" value="H=364-622, L=328-363"/>
</dbReference>
<dbReference type="PDB" id="1AIX">
    <property type="method" value="X-ray"/>
    <property type="resolution" value="2.10 A"/>
    <property type="chains" value="H=364-622, L=328-363"/>
</dbReference>
<dbReference type="PDB" id="1AWF">
    <property type="method" value="X-ray"/>
    <property type="resolution" value="2.20 A"/>
    <property type="chains" value="H=364-622, L=328-363"/>
</dbReference>
<dbReference type="PDB" id="1AWH">
    <property type="method" value="X-ray"/>
    <property type="resolution" value="3.00 A"/>
    <property type="chains" value="A/C=328-363, B/D=364-622"/>
</dbReference>
<dbReference type="PDB" id="1AY6">
    <property type="method" value="X-ray"/>
    <property type="resolution" value="1.80 A"/>
    <property type="chains" value="H=364-622, L=328-363"/>
</dbReference>
<dbReference type="PDB" id="1B5G">
    <property type="method" value="X-ray"/>
    <property type="resolution" value="2.07 A"/>
    <property type="chains" value="H=364-622, L=328-363"/>
</dbReference>
<dbReference type="PDB" id="1B7X">
    <property type="method" value="X-ray"/>
    <property type="resolution" value="2.10 A"/>
    <property type="chains" value="A=328-363, B=364-622"/>
</dbReference>
<dbReference type="PDB" id="1BA8">
    <property type="method" value="X-ray"/>
    <property type="resolution" value="1.80 A"/>
    <property type="chains" value="A=328-363, B=364-622"/>
</dbReference>
<dbReference type="PDB" id="1BB0">
    <property type="method" value="X-ray"/>
    <property type="resolution" value="2.10 A"/>
    <property type="chains" value="A=328-363, B=364-622"/>
</dbReference>
<dbReference type="PDB" id="1BCU">
    <property type="method" value="X-ray"/>
    <property type="resolution" value="2.00 A"/>
    <property type="chains" value="H=364-622, L=328-363"/>
</dbReference>
<dbReference type="PDB" id="1BHX">
    <property type="method" value="X-ray"/>
    <property type="resolution" value="2.30 A"/>
    <property type="chains" value="A=331-349, B=364-510, F=518-622"/>
</dbReference>
<dbReference type="PDB" id="1BMM">
    <property type="method" value="X-ray"/>
    <property type="resolution" value="2.60 A"/>
    <property type="chains" value="H=364-622, L=328-363"/>
</dbReference>
<dbReference type="PDB" id="1BMN">
    <property type="method" value="X-ray"/>
    <property type="resolution" value="2.80 A"/>
    <property type="chains" value="H=364-622, L=328-363"/>
</dbReference>
<dbReference type="PDB" id="1BTH">
    <property type="method" value="X-ray"/>
    <property type="resolution" value="2.30 A"/>
    <property type="chains" value="H/K=364-622, J/L=328-363"/>
</dbReference>
<dbReference type="PDB" id="1C1U">
    <property type="method" value="X-ray"/>
    <property type="resolution" value="1.75 A"/>
    <property type="chains" value="H=364-616, L=328-363"/>
</dbReference>
<dbReference type="PDB" id="1C1V">
    <property type="method" value="X-ray"/>
    <property type="resolution" value="1.98 A"/>
    <property type="chains" value="H=364-616, L=328-363"/>
</dbReference>
<dbReference type="PDB" id="1C1W">
    <property type="method" value="X-ray"/>
    <property type="resolution" value="1.90 A"/>
    <property type="chains" value="H=364-616, L=328-363"/>
</dbReference>
<dbReference type="PDB" id="1C4U">
    <property type="method" value="X-ray"/>
    <property type="resolution" value="2.10 A"/>
    <property type="chains" value="1=328-363, 2=364-622"/>
</dbReference>
<dbReference type="PDB" id="1C4V">
    <property type="method" value="X-ray"/>
    <property type="resolution" value="2.10 A"/>
    <property type="chains" value="1=328-363, 2=364-622"/>
</dbReference>
<dbReference type="PDB" id="1C4Y">
    <property type="method" value="X-ray"/>
    <property type="resolution" value="2.70 A"/>
    <property type="chains" value="1=328-363, 2=364-622"/>
</dbReference>
<dbReference type="PDB" id="1C5L">
    <property type="method" value="X-ray"/>
    <property type="resolution" value="1.47 A"/>
    <property type="chains" value="H=364-622, L=328-363"/>
</dbReference>
<dbReference type="PDB" id="1C5N">
    <property type="method" value="X-ray"/>
    <property type="resolution" value="1.50 A"/>
    <property type="chains" value="H=364-622, L=328-363"/>
</dbReference>
<dbReference type="PDB" id="1C5O">
    <property type="method" value="X-ray"/>
    <property type="resolution" value="1.90 A"/>
    <property type="chains" value="H=364-622, L=328-363"/>
</dbReference>
<dbReference type="PDB" id="1CA8">
    <property type="method" value="X-ray"/>
    <property type="resolution" value="2.10 A"/>
    <property type="chains" value="A=328-363, B=364-622"/>
</dbReference>
<dbReference type="PDB" id="1D3D">
    <property type="method" value="X-ray"/>
    <property type="resolution" value="2.04 A"/>
    <property type="chains" value="A=333-360, B=364-620"/>
</dbReference>
<dbReference type="PDB" id="1D3P">
    <property type="method" value="X-ray"/>
    <property type="resolution" value="2.10 A"/>
    <property type="chains" value="A=328-363, B=364-622"/>
</dbReference>
<dbReference type="PDB" id="1D3Q">
    <property type="method" value="X-ray"/>
    <property type="resolution" value="2.90 A"/>
    <property type="chains" value="A=328-363, B=364-622"/>
</dbReference>
<dbReference type="PDB" id="1D3T">
    <property type="method" value="X-ray"/>
    <property type="resolution" value="3.00 A"/>
    <property type="chains" value="A=328-363, B=364-622"/>
</dbReference>
<dbReference type="PDB" id="1D4P">
    <property type="method" value="X-ray"/>
    <property type="resolution" value="2.07 A"/>
    <property type="chains" value="A=328-363, B=364-622"/>
</dbReference>
<dbReference type="PDB" id="1D6W">
    <property type="method" value="X-ray"/>
    <property type="resolution" value="2.00 A"/>
    <property type="chains" value="A=334-620"/>
</dbReference>
<dbReference type="PDB" id="1D9I">
    <property type="method" value="X-ray"/>
    <property type="resolution" value="2.30 A"/>
    <property type="chains" value="A=334-621"/>
</dbReference>
<dbReference type="PDB" id="1DE7">
    <property type="method" value="X-ray"/>
    <property type="resolution" value="2.00 A"/>
    <property type="chains" value="H/K=364-619, J/L=328-360"/>
</dbReference>
<dbReference type="PDB" id="1DIT">
    <property type="method" value="X-ray"/>
    <property type="resolution" value="2.30 A"/>
    <property type="chains" value="H=364-622, L=328-363"/>
</dbReference>
<dbReference type="PDB" id="1DM4">
    <property type="method" value="X-ray"/>
    <property type="resolution" value="2.50 A"/>
    <property type="chains" value="A=328-362, B=363-622"/>
</dbReference>
<dbReference type="PDB" id="1DOJ">
    <property type="method" value="X-ray"/>
    <property type="resolution" value="1.70 A"/>
    <property type="chains" value="A=328-622"/>
</dbReference>
<dbReference type="PDB" id="1DWB">
    <property type="method" value="X-ray"/>
    <property type="resolution" value="3.16 A"/>
    <property type="chains" value="H=364-622, L=328-363"/>
</dbReference>
<dbReference type="PDB" id="1DWC">
    <property type="method" value="X-ray"/>
    <property type="resolution" value="3.00 A"/>
    <property type="chains" value="H=364-622, L=328-363"/>
</dbReference>
<dbReference type="PDB" id="1DWD">
    <property type="method" value="X-ray"/>
    <property type="resolution" value="3.00 A"/>
    <property type="chains" value="H=364-622, L=328-363"/>
</dbReference>
<dbReference type="PDB" id="1DWE">
    <property type="method" value="X-ray"/>
    <property type="resolution" value="3.00 A"/>
    <property type="chains" value="H=364-622, L=328-363"/>
</dbReference>
<dbReference type="PDB" id="1DX5">
    <property type="method" value="X-ray"/>
    <property type="resolution" value="2.30 A"/>
    <property type="chains" value="A/B/C/D=328-363, M/N/O/P=364-622"/>
</dbReference>
<dbReference type="PDB" id="1E0F">
    <property type="method" value="X-ray"/>
    <property type="resolution" value="3.10 A"/>
    <property type="chains" value="A/B/C=328-363, D/E/F=364-622"/>
</dbReference>
<dbReference type="PDB" id="1EB1">
    <property type="method" value="X-ray"/>
    <property type="resolution" value="1.80 A"/>
    <property type="chains" value="H=364-620, L=334-360"/>
</dbReference>
<dbReference type="PDB" id="1EOJ">
    <property type="method" value="X-ray"/>
    <property type="resolution" value="2.10 A"/>
    <property type="chains" value="A=332-620"/>
</dbReference>
<dbReference type="PDB" id="1EOL">
    <property type="method" value="X-ray"/>
    <property type="resolution" value="2.10 A"/>
    <property type="chains" value="A=332-620"/>
</dbReference>
<dbReference type="PDB" id="1FPC">
    <property type="method" value="X-ray"/>
    <property type="resolution" value="2.30 A"/>
    <property type="chains" value="H=364-622, L=328-363"/>
</dbReference>
<dbReference type="PDB" id="1FPH">
    <property type="method" value="X-ray"/>
    <property type="resolution" value="2.50 A"/>
    <property type="chains" value="H=364-622, L=328-363"/>
</dbReference>
<dbReference type="PDB" id="1G30">
    <property type="method" value="X-ray"/>
    <property type="resolution" value="2.00 A"/>
    <property type="chains" value="A=328-363, B=364-622"/>
</dbReference>
<dbReference type="PDB" id="1G32">
    <property type="method" value="X-ray"/>
    <property type="resolution" value="1.90 A"/>
    <property type="chains" value="A=328-363, B=364-622"/>
</dbReference>
<dbReference type="PDB" id="1G37">
    <property type="method" value="X-ray"/>
    <property type="resolution" value="2.00 A"/>
    <property type="chains" value="A=334-620"/>
</dbReference>
<dbReference type="PDB" id="1GHV">
    <property type="method" value="X-ray"/>
    <property type="resolution" value="1.85 A"/>
    <property type="chains" value="H=364-620, L=328-363"/>
</dbReference>
<dbReference type="PDB" id="1GHW">
    <property type="method" value="X-ray"/>
    <property type="resolution" value="1.75 A"/>
    <property type="chains" value="H=364-620, L=328-363"/>
</dbReference>
<dbReference type="PDB" id="1GHX">
    <property type="method" value="X-ray"/>
    <property type="resolution" value="1.65 A"/>
    <property type="chains" value="H=364-620, L=328-363"/>
</dbReference>
<dbReference type="PDB" id="1GHY">
    <property type="method" value="X-ray"/>
    <property type="resolution" value="1.85 A"/>
    <property type="chains" value="H=364-620, L=328-363"/>
</dbReference>
<dbReference type="PDB" id="1GJ4">
    <property type="method" value="X-ray"/>
    <property type="resolution" value="1.81 A"/>
    <property type="chains" value="H=364-621, L=328-363"/>
</dbReference>
<dbReference type="PDB" id="1GJ5">
    <property type="method" value="X-ray"/>
    <property type="resolution" value="1.73 A"/>
    <property type="chains" value="H=364-621, L=328-363"/>
</dbReference>
<dbReference type="PDB" id="1H8D">
    <property type="method" value="X-ray"/>
    <property type="resolution" value="1.40 A"/>
    <property type="chains" value="H=364-621, L=333-360"/>
</dbReference>
<dbReference type="PDB" id="1H8I">
    <property type="method" value="X-ray"/>
    <property type="resolution" value="1.75 A"/>
    <property type="chains" value="H=364-622, L=334-360"/>
</dbReference>
<dbReference type="PDB" id="1HAG">
    <property type="method" value="X-ray"/>
    <property type="resolution" value="2.00 A"/>
    <property type="chains" value="E=328-622"/>
</dbReference>
<dbReference type="PDB" id="1HAH">
    <property type="method" value="X-ray"/>
    <property type="resolution" value="2.30 A"/>
    <property type="chains" value="H=364-622, L=328-363"/>
</dbReference>
<dbReference type="PDB" id="1HAI">
    <property type="method" value="X-ray"/>
    <property type="resolution" value="2.40 A"/>
    <property type="chains" value="H=364-622, L=328-363"/>
</dbReference>
<dbReference type="PDB" id="1HAO">
    <property type="method" value="X-ray"/>
    <property type="resolution" value="2.80 A"/>
    <property type="chains" value="H=364-622, L=328-363"/>
</dbReference>
<dbReference type="PDB" id="1HAP">
    <property type="method" value="X-ray"/>
    <property type="resolution" value="2.80 A"/>
    <property type="chains" value="H=364-622, L=328-360"/>
</dbReference>
<dbReference type="PDB" id="1HBT">
    <property type="method" value="X-ray"/>
    <property type="resolution" value="2.00 A"/>
    <property type="chains" value="H=364-622, L=328-363"/>
</dbReference>
<dbReference type="PDB" id="1HDT">
    <property type="method" value="X-ray"/>
    <property type="resolution" value="2.60 A"/>
    <property type="chains" value="H=364-622, L=331-363"/>
</dbReference>
<dbReference type="PDB" id="1HGT">
    <property type="method" value="X-ray"/>
    <property type="resolution" value="2.20 A"/>
    <property type="chains" value="H=364-622, L=328-363"/>
</dbReference>
<dbReference type="PDB" id="1HLT">
    <property type="method" value="X-ray"/>
    <property type="resolution" value="3.00 A"/>
    <property type="chains" value="H/K=364-622, J/L=334-349"/>
</dbReference>
<dbReference type="PDB" id="1HUT">
    <property type="method" value="X-ray"/>
    <property type="resolution" value="2.90 A"/>
    <property type="chains" value="H=364-622, L=328-363"/>
</dbReference>
<dbReference type="PDB" id="1HXE">
    <property type="method" value="X-ray"/>
    <property type="resolution" value="2.10 A"/>
    <property type="chains" value="H=364-622, L=328-363"/>
</dbReference>
<dbReference type="PDB" id="1HXF">
    <property type="method" value="X-ray"/>
    <property type="resolution" value="2.10 A"/>
    <property type="chains" value="H=364-622, L=328-363"/>
</dbReference>
<dbReference type="PDB" id="1IHS">
    <property type="method" value="X-ray"/>
    <property type="resolution" value="2.00 A"/>
    <property type="chains" value="H=364-622, L=328-363"/>
</dbReference>
<dbReference type="PDB" id="1IHT">
    <property type="method" value="X-ray"/>
    <property type="resolution" value="2.10 A"/>
    <property type="chains" value="H=364-622, L=328-363"/>
</dbReference>
<dbReference type="PDB" id="1JMO">
    <property type="method" value="X-ray"/>
    <property type="resolution" value="2.20 A"/>
    <property type="chains" value="H=363-622, L=315-362"/>
</dbReference>
<dbReference type="PDB" id="1JOU">
    <property type="method" value="X-ray"/>
    <property type="resolution" value="1.80 A"/>
    <property type="chains" value="A/C/E=315-363, B/D/F=364-622"/>
</dbReference>
<dbReference type="PDB" id="1JWT">
    <property type="method" value="X-ray"/>
    <property type="resolution" value="2.50 A"/>
    <property type="chains" value="A=328-622"/>
</dbReference>
<dbReference type="PDB" id="1K21">
    <property type="method" value="X-ray"/>
    <property type="resolution" value="1.86 A"/>
    <property type="chains" value="H=364-622, L=328-363"/>
</dbReference>
<dbReference type="PDB" id="1K22">
    <property type="method" value="X-ray"/>
    <property type="resolution" value="1.93 A"/>
    <property type="chains" value="H=364-622, L=328-363"/>
</dbReference>
<dbReference type="PDB" id="1KTS">
    <property type="method" value="X-ray"/>
    <property type="resolution" value="2.40 A"/>
    <property type="chains" value="A=328-363, B=364-622"/>
</dbReference>
<dbReference type="PDB" id="1KTT">
    <property type="method" value="X-ray"/>
    <property type="resolution" value="2.10 A"/>
    <property type="chains" value="A=328-363, B=364-622"/>
</dbReference>
<dbReference type="PDB" id="1LHC">
    <property type="method" value="X-ray"/>
    <property type="resolution" value="1.95 A"/>
    <property type="chains" value="H=364-622, L=328-363"/>
</dbReference>
<dbReference type="PDB" id="1LHD">
    <property type="method" value="X-ray"/>
    <property type="resolution" value="2.35 A"/>
    <property type="chains" value="H=364-622, L=328-363"/>
</dbReference>
<dbReference type="PDB" id="1LHE">
    <property type="method" value="X-ray"/>
    <property type="resolution" value="2.25 A"/>
    <property type="chains" value="H=364-622, L=328-363"/>
</dbReference>
<dbReference type="PDB" id="1LHF">
    <property type="method" value="X-ray"/>
    <property type="resolution" value="2.40 A"/>
    <property type="chains" value="H=364-622, L=328-363"/>
</dbReference>
<dbReference type="PDB" id="1LHG">
    <property type="method" value="X-ray"/>
    <property type="resolution" value="2.25 A"/>
    <property type="chains" value="H=364-622, L=328-363"/>
</dbReference>
<dbReference type="PDB" id="1MH0">
    <property type="method" value="X-ray"/>
    <property type="resolution" value="2.80 A"/>
    <property type="chains" value="A/B=334-620"/>
</dbReference>
<dbReference type="PDB" id="1MU6">
    <property type="method" value="X-ray"/>
    <property type="resolution" value="1.99 A"/>
    <property type="chains" value="A=328-363, B=364-622"/>
</dbReference>
<dbReference type="PDB" id="1MU8">
    <property type="method" value="X-ray"/>
    <property type="resolution" value="2.00 A"/>
    <property type="chains" value="A=328-363, B=364-622"/>
</dbReference>
<dbReference type="PDB" id="1MUE">
    <property type="method" value="X-ray"/>
    <property type="resolution" value="2.00 A"/>
    <property type="chains" value="A=328-363, B=364-622"/>
</dbReference>
<dbReference type="PDB" id="1NM6">
    <property type="method" value="X-ray"/>
    <property type="resolution" value="1.80 A"/>
    <property type="chains" value="A=335-621"/>
</dbReference>
<dbReference type="PDB" id="1NO9">
    <property type="method" value="X-ray"/>
    <property type="resolution" value="1.90 A"/>
    <property type="chains" value="H=364-622, L=328-363"/>
</dbReference>
<dbReference type="PDB" id="1NRN">
    <property type="method" value="X-ray"/>
    <property type="resolution" value="3.10 A"/>
    <property type="chains" value="H=364-622, L=328-363"/>
</dbReference>
<dbReference type="PDB" id="1NRO">
    <property type="method" value="X-ray"/>
    <property type="resolution" value="3.10 A"/>
    <property type="chains" value="H=364-622, L=328-363"/>
</dbReference>
<dbReference type="PDB" id="1NRP">
    <property type="method" value="X-ray"/>
    <property type="resolution" value="3.00 A"/>
    <property type="chains" value="H=364-622, L=328-363"/>
</dbReference>
<dbReference type="PDB" id="1NRQ">
    <property type="method" value="X-ray"/>
    <property type="resolution" value="3.50 A"/>
    <property type="chains" value="H=364-622, L=328-363"/>
</dbReference>
<dbReference type="PDB" id="1NRR">
    <property type="method" value="X-ray"/>
    <property type="resolution" value="2.40 A"/>
    <property type="chains" value="H=364-622, L=328-363"/>
</dbReference>
<dbReference type="PDB" id="1NRS">
    <property type="method" value="X-ray"/>
    <property type="resolution" value="2.40 A"/>
    <property type="chains" value="H=364-622, L=328-349"/>
</dbReference>
<dbReference type="PDB" id="1NT1">
    <property type="method" value="X-ray"/>
    <property type="resolution" value="2.00 A"/>
    <property type="chains" value="A=335-621"/>
</dbReference>
<dbReference type="PDB" id="1NU7">
    <property type="method" value="X-ray"/>
    <property type="resolution" value="2.20 A"/>
    <property type="chains" value="A/E=332-359, B/F=364-622"/>
</dbReference>
<dbReference type="PDB" id="1NU9">
    <property type="method" value="X-ray"/>
    <property type="resolution" value="2.20 A"/>
    <property type="chains" value="A/D=332-622"/>
</dbReference>
<dbReference type="PDB" id="1NY2">
    <property type="method" value="X-ray"/>
    <property type="resolution" value="2.30 A"/>
    <property type="chains" value="1=328-363, 2=364-622"/>
</dbReference>
<dbReference type="PDB" id="1NZQ">
    <property type="method" value="X-ray"/>
    <property type="resolution" value="2.18 A"/>
    <property type="chains" value="H=364-620, L=328-361"/>
</dbReference>
<dbReference type="PDB" id="1O0D">
    <property type="method" value="X-ray"/>
    <property type="resolution" value="2.44 A"/>
    <property type="chains" value="H=364-622, L=328-363"/>
</dbReference>
<dbReference type="PDB" id="1O2G">
    <property type="method" value="X-ray"/>
    <property type="resolution" value="1.58 A"/>
    <property type="chains" value="H=364-622, L=328-363"/>
</dbReference>
<dbReference type="PDB" id="1O5G">
    <property type="method" value="X-ray"/>
    <property type="resolution" value="1.75 A"/>
    <property type="chains" value="H=364-622, L=328-363"/>
</dbReference>
<dbReference type="PDB" id="1OOK">
    <property type="method" value="X-ray"/>
    <property type="resolution" value="2.30 A"/>
    <property type="chains" value="A=328-363, B=364-622"/>
</dbReference>
<dbReference type="PDB" id="1OYT">
    <property type="method" value="X-ray"/>
    <property type="resolution" value="1.67 A"/>
    <property type="chains" value="H=364-622, L=328-363"/>
</dbReference>
<dbReference type="PDB" id="1P8V">
    <property type="method" value="X-ray"/>
    <property type="resolution" value="2.60 A"/>
    <property type="chains" value="B=333-361, C=364-621"/>
</dbReference>
<dbReference type="PDB" id="1PPB">
    <property type="method" value="X-ray"/>
    <property type="resolution" value="1.92 A"/>
    <property type="chains" value="H=364-622, L=328-363"/>
</dbReference>
<dbReference type="PDB" id="1QBV">
    <property type="method" value="X-ray"/>
    <property type="resolution" value="1.80 A"/>
    <property type="chains" value="H=364-622, L=328-359"/>
</dbReference>
<dbReference type="PDB" id="1QHR">
    <property type="method" value="X-ray"/>
    <property type="resolution" value="2.20 A"/>
    <property type="chains" value="A=328-363, B=364-622"/>
</dbReference>
<dbReference type="PDB" id="1QJ1">
    <property type="method" value="X-ray"/>
    <property type="resolution" value="2.00 A"/>
    <property type="chains" value="A=328-363, B=364-622"/>
</dbReference>
<dbReference type="PDB" id="1QJ6">
    <property type="method" value="X-ray"/>
    <property type="resolution" value="2.20 A"/>
    <property type="chains" value="A=328-363, B=364-622"/>
</dbReference>
<dbReference type="PDB" id="1QJ7">
    <property type="method" value="X-ray"/>
    <property type="resolution" value="2.20 A"/>
    <property type="chains" value="A=328-363, B=364-622"/>
</dbReference>
<dbReference type="PDB" id="1QUR">
    <property type="method" value="X-ray"/>
    <property type="resolution" value="2.00 A"/>
    <property type="chains" value="H=364-620, L=334-360"/>
</dbReference>
<dbReference type="PDB" id="1RD3">
    <property type="method" value="X-ray"/>
    <property type="resolution" value="2.50 A"/>
    <property type="chains" value="A/C=328-363, B/D=364-622"/>
</dbReference>
<dbReference type="PDB" id="1RIW">
    <property type="method" value="X-ray"/>
    <property type="resolution" value="2.04 A"/>
    <property type="chains" value="A=328-363, B=364-510, C=518-622"/>
</dbReference>
<dbReference type="PDB" id="1SB1">
    <property type="method" value="X-ray"/>
    <property type="resolution" value="1.90 A"/>
    <property type="chains" value="H=364-621, L=333-361"/>
</dbReference>
<dbReference type="PDB" id="1SFQ">
    <property type="method" value="X-ray"/>
    <property type="resolution" value="1.91 A"/>
    <property type="chains" value="A/D=328-363, B/E=364-622"/>
</dbReference>
<dbReference type="PDB" id="1SG8">
    <property type="method" value="X-ray"/>
    <property type="resolution" value="2.30 A"/>
    <property type="chains" value="A/D=328-363, B/E=364-622"/>
</dbReference>
<dbReference type="PDB" id="1SGI">
    <property type="method" value="X-ray"/>
    <property type="resolution" value="2.30 A"/>
    <property type="chains" value="A/D=328-363, B/E=364-622"/>
</dbReference>
<dbReference type="PDB" id="1SHH">
    <property type="method" value="X-ray"/>
    <property type="resolution" value="1.55 A"/>
    <property type="chains" value="A/D=328-363, B/E=364-622"/>
</dbReference>
<dbReference type="PDB" id="1SL3">
    <property type="method" value="X-ray"/>
    <property type="resolution" value="1.81 A"/>
    <property type="chains" value="A=335-621"/>
</dbReference>
<dbReference type="PDB" id="1SR5">
    <property type="method" value="X-ray"/>
    <property type="resolution" value="3.10 A"/>
    <property type="chains" value="B=328-363, C=364-622"/>
</dbReference>
<dbReference type="PDB" id="1T4U">
    <property type="method" value="X-ray"/>
    <property type="resolution" value="2.00 A"/>
    <property type="chains" value="H=364-622, L=334-359"/>
</dbReference>
<dbReference type="PDB" id="1T4V">
    <property type="method" value="X-ray"/>
    <property type="resolution" value="2.00 A"/>
    <property type="chains" value="H=364-622, L=334-359"/>
</dbReference>
<dbReference type="PDB" id="1TA2">
    <property type="method" value="X-ray"/>
    <property type="resolution" value="2.30 A"/>
    <property type="chains" value="A=335-621"/>
</dbReference>
<dbReference type="PDB" id="1TA6">
    <property type="method" value="X-ray"/>
    <property type="resolution" value="1.90 A"/>
    <property type="chains" value="A=335-621"/>
</dbReference>
<dbReference type="PDB" id="1TB6">
    <property type="method" value="X-ray"/>
    <property type="resolution" value="2.50 A"/>
    <property type="chains" value="H=364-622, L=315-363"/>
</dbReference>
<dbReference type="PDB" id="1TBZ">
    <property type="method" value="X-ray"/>
    <property type="resolution" value="2.30 A"/>
    <property type="chains" value="H=364-622, L=328-363"/>
</dbReference>
<dbReference type="PDB" id="1THP">
    <property type="method" value="X-ray"/>
    <property type="resolution" value="2.10 A"/>
    <property type="chains" value="A=328-362, B=364-620"/>
</dbReference>
<dbReference type="PDB" id="1THR">
    <property type="method" value="X-ray"/>
    <property type="resolution" value="2.30 A"/>
    <property type="chains" value="H=364-622, L=328-349"/>
</dbReference>
<dbReference type="PDB" id="1THS">
    <property type="method" value="X-ray"/>
    <property type="resolution" value="2.20 A"/>
    <property type="chains" value="H=364-622, L=328-363"/>
</dbReference>
<dbReference type="PDB" id="1TMB">
    <property type="method" value="X-ray"/>
    <property type="resolution" value="2.30 A"/>
    <property type="chains" value="H=364-622, L=328-363"/>
</dbReference>
<dbReference type="PDB" id="1TMT">
    <property type="method" value="X-ray"/>
    <property type="resolution" value="2.20 A"/>
    <property type="chains" value="H=364-622, L=328-363"/>
</dbReference>
<dbReference type="PDB" id="1TMU">
    <property type="method" value="X-ray"/>
    <property type="resolution" value="2.50 A"/>
    <property type="chains" value="H=364-620, L=333-349"/>
</dbReference>
<dbReference type="PDB" id="1TOM">
    <property type="method" value="X-ray"/>
    <property type="resolution" value="1.80 A"/>
    <property type="chains" value="H=364-622, L=328-363"/>
</dbReference>
<dbReference type="PDB" id="1TQ0">
    <property type="method" value="X-ray"/>
    <property type="resolution" value="2.80 A"/>
    <property type="chains" value="A/C=333-363, B/D=364-620"/>
</dbReference>
<dbReference type="PDB" id="1TQ7">
    <property type="method" value="X-ray"/>
    <property type="resolution" value="2.40 A"/>
    <property type="chains" value="A=320-363, B=364-620"/>
</dbReference>
<dbReference type="PDB" id="1TWX">
    <property type="method" value="X-ray"/>
    <property type="resolution" value="2.40 A"/>
    <property type="chains" value="A=334-349, B=364-622"/>
</dbReference>
<dbReference type="PDB" id="1UMA">
    <property type="method" value="X-ray"/>
    <property type="resolution" value="2.00 A"/>
    <property type="chains" value="H=364-622, L=328-363"/>
</dbReference>
<dbReference type="PDB" id="1UVS">
    <property type="method" value="X-ray"/>
    <property type="resolution" value="2.80 A"/>
    <property type="chains" value="H=364-622, L=328-363"/>
</dbReference>
<dbReference type="PDB" id="1VR1">
    <property type="method" value="X-ray"/>
    <property type="resolution" value="1.90 A"/>
    <property type="chains" value="H=364-620, L=334-360"/>
</dbReference>
<dbReference type="PDB" id="1VZQ">
    <property type="method" value="X-ray"/>
    <property type="resolution" value="1.54 A"/>
    <property type="chains" value="H=364-620, L=334-360"/>
</dbReference>
<dbReference type="PDB" id="1W7G">
    <property type="method" value="X-ray"/>
    <property type="resolution" value="1.65 A"/>
    <property type="chains" value="H=364-622, L=328-363"/>
</dbReference>
<dbReference type="PDB" id="1WAY">
    <property type="method" value="X-ray"/>
    <property type="resolution" value="2.02 A"/>
    <property type="chains" value="A=328-363, B=364-622"/>
</dbReference>
<dbReference type="PDB" id="1WBG">
    <property type="method" value="X-ray"/>
    <property type="resolution" value="2.20 A"/>
    <property type="chains" value="A=328-363, B=364-622"/>
</dbReference>
<dbReference type="PDB" id="1XM1">
    <property type="method" value="X-ray"/>
    <property type="resolution" value="2.30 A"/>
    <property type="chains" value="A=328-622"/>
</dbReference>
<dbReference type="PDB" id="1XMN">
    <property type="method" value="X-ray"/>
    <property type="resolution" value="1.85 A"/>
    <property type="chains" value="A/C/E/G=328-363, B/D/F/H=364-622"/>
</dbReference>
<dbReference type="PDB" id="1YPE">
    <property type="method" value="X-ray"/>
    <property type="resolution" value="1.81 A"/>
    <property type="chains" value="H=364-620, L=334-360"/>
</dbReference>
<dbReference type="PDB" id="1YPG">
    <property type="method" value="X-ray"/>
    <property type="resolution" value="1.80 A"/>
    <property type="chains" value="H=364-620, L=334-360"/>
</dbReference>
<dbReference type="PDB" id="1YPJ">
    <property type="method" value="X-ray"/>
    <property type="resolution" value="1.78 A"/>
    <property type="chains" value="H=364-620, L=334-360"/>
</dbReference>
<dbReference type="PDB" id="1YPK">
    <property type="method" value="X-ray"/>
    <property type="resolution" value="1.78 A"/>
    <property type="chains" value="H=364-620, L=334-360"/>
</dbReference>
<dbReference type="PDB" id="1YPL">
    <property type="method" value="X-ray"/>
    <property type="resolution" value="1.85 A"/>
    <property type="chains" value="H=364-620, L=334-360"/>
</dbReference>
<dbReference type="PDB" id="1YPM">
    <property type="method" value="X-ray"/>
    <property type="resolution" value="1.85 A"/>
    <property type="chains" value="H=364-620, L=334-360"/>
</dbReference>
<dbReference type="PDB" id="1Z71">
    <property type="method" value="X-ray"/>
    <property type="resolution" value="1.80 A"/>
    <property type="chains" value="A=335-621"/>
</dbReference>
<dbReference type="PDB" id="1Z8I">
    <property type="method" value="X-ray"/>
    <property type="resolution" value="2.00 A"/>
    <property type="chains" value="A=324-361, B=364-622"/>
</dbReference>
<dbReference type="PDB" id="1Z8J">
    <property type="method" value="X-ray"/>
    <property type="resolution" value="2.00 A"/>
    <property type="chains" value="A=322-361, B=364-622"/>
</dbReference>
<dbReference type="PDB" id="1ZGI">
    <property type="method" value="X-ray"/>
    <property type="resolution" value="2.20 A"/>
    <property type="chains" value="A=335-621"/>
</dbReference>
<dbReference type="PDB" id="1ZGV">
    <property type="method" value="X-ray"/>
    <property type="resolution" value="2.20 A"/>
    <property type="chains" value="A=335-621"/>
</dbReference>
<dbReference type="PDB" id="1ZRB">
    <property type="method" value="X-ray"/>
    <property type="resolution" value="1.90 A"/>
    <property type="chains" value="A=335-621"/>
</dbReference>
<dbReference type="PDB" id="2A0Q">
    <property type="method" value="X-ray"/>
    <property type="resolution" value="1.90 A"/>
    <property type="chains" value="A/C=334-349, B/D=364-620"/>
</dbReference>
<dbReference type="PDB" id="2A2X">
    <property type="method" value="X-ray"/>
    <property type="resolution" value="2.44 A"/>
    <property type="chains" value="H=364-622, L=330-363"/>
</dbReference>
<dbReference type="PDB" id="2A45">
    <property type="method" value="X-ray"/>
    <property type="resolution" value="3.65 A"/>
    <property type="chains" value="A/D=328-363, B/E=364-622"/>
</dbReference>
<dbReference type="PDB" id="2AFQ">
    <property type="method" value="X-ray"/>
    <property type="resolution" value="1.93 A"/>
    <property type="chains" value="A/C=332-360, B/D=364-622"/>
</dbReference>
<dbReference type="PDB" id="2ANK">
    <property type="method" value="X-ray"/>
    <property type="resolution" value="2.46 A"/>
    <property type="chains" value="H=364-622, L=330-363"/>
</dbReference>
<dbReference type="PDB" id="2ANM">
    <property type="method" value="X-ray"/>
    <property type="resolution" value="2.40 A"/>
    <property type="chains" value="H=364-620, L=328-363"/>
</dbReference>
<dbReference type="PDB" id="2B5T">
    <property type="method" value="X-ray"/>
    <property type="resolution" value="2.10 A"/>
    <property type="chains" value="A/C=315-363, B/D=364-622"/>
</dbReference>
<dbReference type="PDB" id="2BDY">
    <property type="method" value="X-ray"/>
    <property type="resolution" value="1.61 A"/>
    <property type="chains" value="A=334-622"/>
</dbReference>
<dbReference type="PDB" id="2BVR">
    <property type="method" value="X-ray"/>
    <property type="resolution" value="1.25 A"/>
    <property type="chains" value="H=364-622, L=328-363"/>
</dbReference>
<dbReference type="PDB" id="2BVS">
    <property type="method" value="X-ray"/>
    <property type="resolution" value="1.40 A"/>
    <property type="chains" value="H=364-622, L=328-363"/>
</dbReference>
<dbReference type="PDB" id="2BVX">
    <property type="method" value="X-ray"/>
    <property type="resolution" value="3.20 A"/>
    <property type="chains" value="H=364-622, L=328-363"/>
</dbReference>
<dbReference type="PDB" id="2BXT">
    <property type="method" value="X-ray"/>
    <property type="resolution" value="1.83 A"/>
    <property type="chains" value="H=364-622, L=328-363"/>
</dbReference>
<dbReference type="PDB" id="2BXU">
    <property type="method" value="X-ray"/>
    <property type="resolution" value="2.80 A"/>
    <property type="chains" value="H=364-622, L=328-363"/>
</dbReference>
<dbReference type="PDB" id="2C8W">
    <property type="method" value="X-ray"/>
    <property type="resolution" value="1.96 A"/>
    <property type="chains" value="A=328-363, B=364-622"/>
</dbReference>
<dbReference type="PDB" id="2C8X">
    <property type="method" value="X-ray"/>
    <property type="resolution" value="2.17 A"/>
    <property type="chains" value="A=328-363, B=364-622"/>
</dbReference>
<dbReference type="PDB" id="2C8Y">
    <property type="method" value="X-ray"/>
    <property type="resolution" value="2.20 A"/>
    <property type="chains" value="A=328-363, B=364-622"/>
</dbReference>
<dbReference type="PDB" id="2C8Z">
    <property type="method" value="X-ray"/>
    <property type="resolution" value="2.14 A"/>
    <property type="chains" value="A=328-363, B=364-622"/>
</dbReference>
<dbReference type="PDB" id="2C90">
    <property type="method" value="X-ray"/>
    <property type="resolution" value="2.25 A"/>
    <property type="chains" value="A=328-363, B=364-622"/>
</dbReference>
<dbReference type="PDB" id="2C93">
    <property type="method" value="X-ray"/>
    <property type="resolution" value="2.20 A"/>
    <property type="chains" value="A=328-363, B=364-622"/>
</dbReference>
<dbReference type="PDB" id="2CF8">
    <property type="method" value="X-ray"/>
    <property type="resolution" value="1.30 A"/>
    <property type="chains" value="H=364-620, L=334-361"/>
</dbReference>
<dbReference type="PDB" id="2CF9">
    <property type="method" value="X-ray"/>
    <property type="resolution" value="1.79 A"/>
    <property type="chains" value="H=364-620, L=334-361"/>
</dbReference>
<dbReference type="PDB" id="2CN0">
    <property type="method" value="X-ray"/>
    <property type="resolution" value="1.30 A"/>
    <property type="chains" value="H=364-620, L=334-361"/>
</dbReference>
<dbReference type="PDB" id="2FEQ">
    <property type="method" value="X-ray"/>
    <property type="resolution" value="2.44 A"/>
    <property type="chains" value="H=364-622, L=328-363"/>
</dbReference>
<dbReference type="PDB" id="2FES">
    <property type="method" value="X-ray"/>
    <property type="resolution" value="2.42 A"/>
    <property type="chains" value="H=364-622, L=328-363"/>
</dbReference>
<dbReference type="PDB" id="2GDE">
    <property type="method" value="X-ray"/>
    <property type="resolution" value="2.00 A"/>
    <property type="chains" value="H=364-622, L=328-363"/>
</dbReference>
<dbReference type="PDB" id="2GP9">
    <property type="method" value="X-ray"/>
    <property type="resolution" value="1.87 A"/>
    <property type="chains" value="A=328-362, B=364-620"/>
</dbReference>
<dbReference type="PDB" id="2H9T">
    <property type="method" value="X-ray"/>
    <property type="resolution" value="2.40 A"/>
    <property type="chains" value="H=364-622, L=328-363"/>
</dbReference>
<dbReference type="PDB" id="2HGT">
    <property type="method" value="X-ray"/>
    <property type="resolution" value="2.20 A"/>
    <property type="chains" value="H=364-622, L=328-363"/>
</dbReference>
<dbReference type="PDB" id="2HNT">
    <property type="method" value="X-ray"/>
    <property type="resolution" value="2.50 A"/>
    <property type="chains" value="C=364-433, E=437-517, F=518-622, L=328-363"/>
</dbReference>
<dbReference type="PDB" id="2HPP">
    <property type="method" value="X-ray"/>
    <property type="resolution" value="3.30 A"/>
    <property type="chains" value="H=364-622, L=328-363"/>
</dbReference>
<dbReference type="PDB" id="2HPQ">
    <property type="method" value="X-ray"/>
    <property type="resolution" value="3.30 A"/>
    <property type="chains" value="H=364-622, L=328-363, P=213-291"/>
</dbReference>
<dbReference type="PDB" id="2HWL">
    <property type="method" value="X-ray"/>
    <property type="resolution" value="2.40 A"/>
    <property type="chains" value="A/C=328-363, B/D=364-622"/>
</dbReference>
<dbReference type="PDB" id="2JH0">
    <property type="method" value="X-ray"/>
    <property type="resolution" value="1.70 A"/>
    <property type="chains" value="C=328-361, D=364-622"/>
</dbReference>
<dbReference type="PDB" id="2JH5">
    <property type="method" value="X-ray"/>
    <property type="resolution" value="2.50 A"/>
    <property type="chains" value="C=328-363, D=364-622"/>
</dbReference>
<dbReference type="PDB" id="2JH6">
    <property type="method" value="X-ray"/>
    <property type="resolution" value="2.21 A"/>
    <property type="chains" value="C=328-361, D=364-622"/>
</dbReference>
<dbReference type="PDB" id="2OD3">
    <property type="method" value="X-ray"/>
    <property type="resolution" value="1.75 A"/>
    <property type="chains" value="A=328-363, B=364-622"/>
</dbReference>
<dbReference type="PDB" id="2PGB">
    <property type="method" value="X-ray"/>
    <property type="resolution" value="1.54 A"/>
    <property type="chains" value="A=328-363, B=364-622"/>
</dbReference>
<dbReference type="PDB" id="2PGQ">
    <property type="method" value="X-ray"/>
    <property type="resolution" value="1.80 A"/>
    <property type="chains" value="A=319-363, B=364-622"/>
</dbReference>
<dbReference type="PDB" id="2PKS">
    <property type="method" value="X-ray"/>
    <property type="resolution" value="2.50 A"/>
    <property type="chains" value="A=334-360, B=364-510, C=518-619"/>
</dbReference>
<dbReference type="PDB" id="2PW8">
    <property type="method" value="X-ray"/>
    <property type="resolution" value="1.84 A"/>
    <property type="chains" value="H=364-621, L=334-360"/>
</dbReference>
<dbReference type="PDB" id="2R2M">
    <property type="method" value="X-ray"/>
    <property type="resolution" value="2.10 A"/>
    <property type="chains" value="A=334-359, B=364-622"/>
</dbReference>
<dbReference type="PDB" id="2THF">
    <property type="method" value="X-ray"/>
    <property type="resolution" value="2.10 A"/>
    <property type="chains" value="A=328-363, B=364-622"/>
</dbReference>
<dbReference type="PDB" id="2UUF">
    <property type="method" value="X-ray"/>
    <property type="resolution" value="1.26 A"/>
    <property type="chains" value="A=328-363, B=364-622"/>
</dbReference>
<dbReference type="PDB" id="2UUJ">
    <property type="method" value="X-ray"/>
    <property type="resolution" value="1.32 A"/>
    <property type="chains" value="A=328-363, B=364-622"/>
</dbReference>
<dbReference type="PDB" id="2UUK">
    <property type="method" value="X-ray"/>
    <property type="resolution" value="1.39 A"/>
    <property type="chains" value="A=328-363, B=364-622"/>
</dbReference>
<dbReference type="PDB" id="2V3H">
    <property type="method" value="X-ray"/>
    <property type="resolution" value="1.79 A"/>
    <property type="chains" value="H=364-620, L=334-361"/>
</dbReference>
<dbReference type="PDB" id="2V3O">
    <property type="method" value="X-ray"/>
    <property type="resolution" value="1.79 A"/>
    <property type="chains" value="H=364-620, L=334-361"/>
</dbReference>
<dbReference type="PDB" id="2ZC9">
    <property type="method" value="X-ray"/>
    <property type="resolution" value="1.58 A"/>
    <property type="chains" value="H=364-622, L=328-363"/>
</dbReference>
<dbReference type="PDB" id="2ZDA">
    <property type="method" value="X-ray"/>
    <property type="resolution" value="1.73 A"/>
    <property type="chains" value="H=364-622, L=328-363"/>
</dbReference>
<dbReference type="PDB" id="2ZDV">
    <property type="method" value="X-ray"/>
    <property type="resolution" value="1.72 A"/>
    <property type="chains" value="H=364-622, L=328-363"/>
</dbReference>
<dbReference type="PDB" id="2ZF0">
    <property type="method" value="X-ray"/>
    <property type="resolution" value="2.20 A"/>
    <property type="chains" value="H=364-622, L=328-363"/>
</dbReference>
<dbReference type="PDB" id="2ZFF">
    <property type="method" value="X-ray"/>
    <property type="resolution" value="1.47 A"/>
    <property type="chains" value="H=364-622, L=328-363"/>
</dbReference>
<dbReference type="PDB" id="2ZFP">
    <property type="method" value="X-ray"/>
    <property type="resolution" value="2.25 A"/>
    <property type="chains" value="H=364-622, L=328-363"/>
</dbReference>
<dbReference type="PDB" id="2ZFQ">
    <property type="method" value="X-ray"/>
    <property type="resolution" value="1.80 A"/>
    <property type="chains" value="H=364-622, L=328-363"/>
</dbReference>
<dbReference type="PDB" id="2ZFR">
    <property type="method" value="X-ray"/>
    <property type="resolution" value="1.85 A"/>
    <property type="chains" value="H=364-622, L=328-363"/>
</dbReference>
<dbReference type="PDB" id="2ZG0">
    <property type="method" value="X-ray"/>
    <property type="resolution" value="1.75 A"/>
    <property type="chains" value="H=364-622, L=328-363"/>
</dbReference>
<dbReference type="PDB" id="2ZGB">
    <property type="method" value="X-ray"/>
    <property type="resolution" value="1.60 A"/>
    <property type="chains" value="H=364-622, L=328-363"/>
</dbReference>
<dbReference type="PDB" id="2ZGX">
    <property type="method" value="X-ray"/>
    <property type="resolution" value="1.80 A"/>
    <property type="chains" value="H=364-622, L=328-363"/>
</dbReference>
<dbReference type="PDB" id="2ZHE">
    <property type="method" value="X-ray"/>
    <property type="resolution" value="2.10 A"/>
    <property type="chains" value="H=364-622, L=328-363"/>
</dbReference>
<dbReference type="PDB" id="2ZHF">
    <property type="method" value="X-ray"/>
    <property type="resolution" value="1.98 A"/>
    <property type="chains" value="H=364-622, L=328-363"/>
</dbReference>
<dbReference type="PDB" id="2ZHQ">
    <property type="method" value="X-ray"/>
    <property type="resolution" value="1.96 A"/>
    <property type="chains" value="H=364-622, L=328-363"/>
</dbReference>
<dbReference type="PDB" id="2ZHW">
    <property type="method" value="X-ray"/>
    <property type="resolution" value="2.02 A"/>
    <property type="chains" value="H=364-622, L=328-363"/>
</dbReference>
<dbReference type="PDB" id="2ZI2">
    <property type="method" value="X-ray"/>
    <property type="resolution" value="1.65 A"/>
    <property type="chains" value="H=364-622, L=328-363"/>
</dbReference>
<dbReference type="PDB" id="2ZIQ">
    <property type="method" value="X-ray"/>
    <property type="resolution" value="1.65 A"/>
    <property type="chains" value="H=364-622, L=328-363"/>
</dbReference>
<dbReference type="PDB" id="2ZNK">
    <property type="method" value="X-ray"/>
    <property type="resolution" value="1.80 A"/>
    <property type="chains" value="H=364-622, L=328-363"/>
</dbReference>
<dbReference type="PDB" id="2ZO3">
    <property type="method" value="X-ray"/>
    <property type="resolution" value="1.70 A"/>
    <property type="chains" value="H=364-622, L=328-363"/>
</dbReference>
<dbReference type="PDB" id="3B23">
    <property type="method" value="X-ray"/>
    <property type="resolution" value="2.40 A"/>
    <property type="chains" value="A=328-363, B=364-622"/>
</dbReference>
<dbReference type="PDB" id="3B9F">
    <property type="method" value="X-ray"/>
    <property type="resolution" value="1.60 A"/>
    <property type="chains" value="H=364-622, L=315-363"/>
</dbReference>
<dbReference type="PDB" id="3BEF">
    <property type="method" value="X-ray"/>
    <property type="resolution" value="2.20 A"/>
    <property type="chains" value="A/D=320-363, B/E=364-622"/>
</dbReference>
<dbReference type="PDB" id="3BEI">
    <property type="method" value="X-ray"/>
    <property type="resolution" value="1.55 A"/>
    <property type="chains" value="A=320-363, B=364-622"/>
</dbReference>
<dbReference type="PDB" id="3BF6">
    <property type="method" value="X-ray"/>
    <property type="resolution" value="2.50 A"/>
    <property type="chains" value="H=364-622, L=328-363"/>
</dbReference>
<dbReference type="PDB" id="3BIU">
    <property type="method" value="X-ray"/>
    <property type="resolution" value="2.30 A"/>
    <property type="chains" value="H=364-620, L=333-361"/>
</dbReference>
<dbReference type="PDB" id="3BIV">
    <property type="method" value="X-ray"/>
    <property type="resolution" value="1.80 A"/>
    <property type="chains" value="H=364-620, L=333-361"/>
</dbReference>
<dbReference type="PDB" id="3BV9">
    <property type="method" value="X-ray"/>
    <property type="resolution" value="1.80 A"/>
    <property type="chains" value="A=333-363, B=364-622"/>
</dbReference>
<dbReference type="PDB" id="3C1K">
    <property type="method" value="X-ray"/>
    <property type="resolution" value="1.84 A"/>
    <property type="chains" value="A=335-621"/>
</dbReference>
<dbReference type="PDB" id="3C27">
    <property type="method" value="X-ray"/>
    <property type="resolution" value="2.18 A"/>
    <property type="chains" value="A=334-359, B=364-622"/>
</dbReference>
<dbReference type="PDB" id="3D49">
    <property type="method" value="X-ray"/>
    <property type="resolution" value="1.50 A"/>
    <property type="chains" value="H=364-622, L=328-363"/>
</dbReference>
<dbReference type="PDB" id="3DA9">
    <property type="method" value="X-ray"/>
    <property type="resolution" value="1.80 A"/>
    <property type="chains" value="A=328-363, B=364-622"/>
</dbReference>
<dbReference type="PDB" id="3DD2">
    <property type="method" value="X-ray"/>
    <property type="resolution" value="1.90 A"/>
    <property type="chains" value="H=364-621, L=332-361"/>
</dbReference>
<dbReference type="PDB" id="3DHK">
    <property type="method" value="X-ray"/>
    <property type="resolution" value="1.73 A"/>
    <property type="chains" value="H=364-622, L=328-363"/>
</dbReference>
<dbReference type="PDB" id="3DT0">
    <property type="method" value="X-ray"/>
    <property type="resolution" value="2.40 A"/>
    <property type="chains" value="H=364-622, L=328-363"/>
</dbReference>
<dbReference type="PDB" id="3DUX">
    <property type="method" value="X-ray"/>
    <property type="resolution" value="1.60 A"/>
    <property type="chains" value="H=364-622, L=328-363"/>
</dbReference>
<dbReference type="PDB" id="3E6P">
    <property type="method" value="X-ray"/>
    <property type="resolution" value="2.10 A"/>
    <property type="chains" value="H=364-622, L=206-363"/>
</dbReference>
<dbReference type="PDB" id="3EE0">
    <property type="method" value="X-ray"/>
    <property type="resolution" value="2.75 A"/>
    <property type="chains" value="A=328-363, B=364-622"/>
</dbReference>
<dbReference type="PDB" id="3EGK">
    <property type="method" value="X-ray"/>
    <property type="resolution" value="2.20 A"/>
    <property type="chains" value="H=364-622, L=328-363"/>
</dbReference>
<dbReference type="PDB" id="3EQ0">
    <property type="method" value="X-ray"/>
    <property type="resolution" value="1.53 A"/>
    <property type="chains" value="H=364-622, L=328-363"/>
</dbReference>
<dbReference type="PDB" id="3F68">
    <property type="method" value="X-ray"/>
    <property type="resolution" value="1.75 A"/>
    <property type="chains" value="H=364-622, L=328-363"/>
</dbReference>
<dbReference type="PDB" id="3GIC">
    <property type="method" value="X-ray"/>
    <property type="resolution" value="1.55 A"/>
    <property type="chains" value="A=328-363, B=364-622"/>
</dbReference>
<dbReference type="PDB" id="3GIS">
    <property type="method" value="X-ray"/>
    <property type="resolution" value="2.40 A"/>
    <property type="chains" value="A/C/E=315-363, B/D/F=364-622"/>
</dbReference>
<dbReference type="PDB" id="3HAT">
    <property type="method" value="X-ray"/>
    <property type="resolution" value="2.50 A"/>
    <property type="chains" value="H=364-622, L=328-363"/>
</dbReference>
<dbReference type="PDB" id="3HKJ">
    <property type="method" value="X-ray"/>
    <property type="resolution" value="2.60 A"/>
    <property type="chains" value="A/D=333-363, B/E=364-622"/>
</dbReference>
<dbReference type="PDB" id="3HTC">
    <property type="method" value="X-ray"/>
    <property type="resolution" value="2.30 A"/>
    <property type="chains" value="H=364-622, L=328-363"/>
</dbReference>
<dbReference type="PDB" id="3JZ1">
    <property type="method" value="X-ray"/>
    <property type="resolution" value="1.60 A"/>
    <property type="chains" value="A=328-363, B=364-622"/>
</dbReference>
<dbReference type="PDB" id="3JZ2">
    <property type="method" value="X-ray"/>
    <property type="resolution" value="2.40 A"/>
    <property type="chains" value="A=328-363, B=364-622"/>
</dbReference>
<dbReference type="PDB" id="3K65">
    <property type="method" value="X-ray"/>
    <property type="resolution" value="1.85 A"/>
    <property type="chains" value="A=199-314, B=315-622"/>
</dbReference>
<dbReference type="PDB" id="3LDX">
    <property type="method" value="X-ray"/>
    <property type="resolution" value="2.25 A"/>
    <property type="chains" value="H=364-622, L=328-363"/>
</dbReference>
<dbReference type="PDB" id="3LU9">
    <property type="method" value="X-ray"/>
    <property type="resolution" value="1.80 A"/>
    <property type="chains" value="A/D=318-363, B/E=364-622"/>
</dbReference>
<dbReference type="PDB" id="3NXP">
    <property type="method" value="X-ray"/>
    <property type="resolution" value="2.20 A"/>
    <property type="chains" value="A=199-622"/>
</dbReference>
<dbReference type="PDB" id="3P17">
    <property type="method" value="X-ray"/>
    <property type="resolution" value="1.43 A"/>
    <property type="chains" value="H=364-622, L=328-363"/>
</dbReference>
<dbReference type="PDB" id="3P6Z">
    <property type="method" value="X-ray"/>
    <property type="resolution" value="1.70 A"/>
    <property type="chains" value="A/G=328-363, B/H=364-622"/>
</dbReference>
<dbReference type="PDB" id="3P70">
    <property type="method" value="X-ray"/>
    <property type="resolution" value="2.55 A"/>
    <property type="chains" value="A/C/E/G=328-363, B/D/F/H=364-622"/>
</dbReference>
<dbReference type="PDB" id="3PMH">
    <property type="method" value="X-ray"/>
    <property type="resolution" value="3.20 A"/>
    <property type="chains" value="A=328-363, B=364-622"/>
</dbReference>
<dbReference type="PDB" id="3PO1">
    <property type="method" value="X-ray"/>
    <property type="resolution" value="1.65 A"/>
    <property type="chains" value="A=334-360, B=364-510, C=518-619"/>
</dbReference>
<dbReference type="PDB" id="3QDZ">
    <property type="method" value="X-ray"/>
    <property type="resolution" value="2.80 A"/>
    <property type="chains" value="A/C=333-363, B/D=364-622"/>
</dbReference>
<dbReference type="PDB" id="3QGN">
    <property type="method" value="X-ray"/>
    <property type="resolution" value="2.10 A"/>
    <property type="chains" value="A=333-363, B=364-622"/>
</dbReference>
<dbReference type="PDB" id="3QLP">
    <property type="method" value="X-ray"/>
    <property type="resolution" value="2.14 A"/>
    <property type="chains" value="H=364-622, L=328-363"/>
</dbReference>
<dbReference type="PDB" id="3QTO">
    <property type="method" value="X-ray"/>
    <property type="resolution" value="1.52 A"/>
    <property type="chains" value="H=364-622, L=328-363"/>
</dbReference>
<dbReference type="PDB" id="3QTV">
    <property type="method" value="X-ray"/>
    <property type="resolution" value="1.63 A"/>
    <property type="chains" value="H=364-622, L=328-363"/>
</dbReference>
<dbReference type="PDB" id="3QWC">
    <property type="method" value="X-ray"/>
    <property type="resolution" value="1.75 A"/>
    <property type="chains" value="H=364-622, L=328-363"/>
</dbReference>
<dbReference type="PDB" id="3QX5">
    <property type="method" value="X-ray"/>
    <property type="resolution" value="1.35 A"/>
    <property type="chains" value="H=364-622, L=328-363"/>
</dbReference>
<dbReference type="PDB" id="3R3G">
    <property type="method" value="X-ray"/>
    <property type="resolution" value="1.75 A"/>
    <property type="chains" value="A=333-363, B=364-622"/>
</dbReference>
<dbReference type="PDB" id="3RLW">
    <property type="method" value="X-ray"/>
    <property type="resolution" value="1.69 A"/>
    <property type="chains" value="H=364-622, L=328-363"/>
</dbReference>
<dbReference type="PDB" id="3RLY">
    <property type="method" value="X-ray"/>
    <property type="resolution" value="1.51 A"/>
    <property type="chains" value="H=364-622, L=328-363"/>
</dbReference>
<dbReference type="PDB" id="3RM0">
    <property type="method" value="X-ray"/>
    <property type="resolution" value="1.34 A"/>
    <property type="chains" value="H=364-622, L=328-363"/>
</dbReference>
<dbReference type="PDB" id="3RM2">
    <property type="method" value="X-ray"/>
    <property type="resolution" value="1.23 A"/>
    <property type="chains" value="H=364-622, L=328-363"/>
</dbReference>
<dbReference type="PDB" id="3RML">
    <property type="method" value="X-ray"/>
    <property type="resolution" value="1.53 A"/>
    <property type="chains" value="H=364-622, L=328-363"/>
</dbReference>
<dbReference type="PDB" id="3RMM">
    <property type="method" value="X-ray"/>
    <property type="resolution" value="1.58 A"/>
    <property type="chains" value="H=364-622, L=328-363"/>
</dbReference>
<dbReference type="PDB" id="3RMN">
    <property type="method" value="X-ray"/>
    <property type="resolution" value="1.78 A"/>
    <property type="chains" value="H=364-622, L=328-363"/>
</dbReference>
<dbReference type="PDB" id="3RMO">
    <property type="method" value="X-ray"/>
    <property type="resolution" value="1.40 A"/>
    <property type="chains" value="H=364-622, L=328-363"/>
</dbReference>
<dbReference type="PDB" id="3S7H">
    <property type="method" value="X-ray"/>
    <property type="resolution" value="1.90 A"/>
    <property type="chains" value="A=329-363, B=364-622"/>
</dbReference>
<dbReference type="PDB" id="3S7K">
    <property type="method" value="X-ray"/>
    <property type="resolution" value="1.90 A"/>
    <property type="chains" value="A/C=329-363, B/D=364-622"/>
</dbReference>
<dbReference type="PDB" id="3SHA">
    <property type="method" value="X-ray"/>
    <property type="resolution" value="1.52 A"/>
    <property type="chains" value="H=364-622, L=328-363"/>
</dbReference>
<dbReference type="PDB" id="3SHC">
    <property type="method" value="X-ray"/>
    <property type="resolution" value="1.90 A"/>
    <property type="chains" value="H=364-622, L=328-363"/>
</dbReference>
<dbReference type="PDB" id="3SI3">
    <property type="method" value="X-ray"/>
    <property type="resolution" value="1.55 A"/>
    <property type="chains" value="H=364-622, L=328-363"/>
</dbReference>
<dbReference type="PDB" id="3SI4">
    <property type="method" value="X-ray"/>
    <property type="resolution" value="1.27 A"/>
    <property type="chains" value="H=364-622, L=328-363"/>
</dbReference>
<dbReference type="PDB" id="3SQE">
    <property type="method" value="X-ray"/>
    <property type="resolution" value="1.90 A"/>
    <property type="chains" value="E=333-622"/>
</dbReference>
<dbReference type="PDB" id="3SQH">
    <property type="method" value="X-ray"/>
    <property type="resolution" value="2.20 A"/>
    <property type="chains" value="E=333-622"/>
</dbReference>
<dbReference type="PDB" id="3SV2">
    <property type="method" value="X-ray"/>
    <property type="resolution" value="1.30 A"/>
    <property type="chains" value="H=364-622, L=328-363"/>
</dbReference>
<dbReference type="PDB" id="3T5F">
    <property type="method" value="X-ray"/>
    <property type="resolution" value="1.45 A"/>
    <property type="chains" value="H=364-622, L=328-363"/>
</dbReference>
<dbReference type="PDB" id="3TU7">
    <property type="method" value="X-ray"/>
    <property type="resolution" value="2.49 A"/>
    <property type="chains" value="H=364-622, L=328-363"/>
</dbReference>
<dbReference type="PDB" id="3U69">
    <property type="method" value="X-ray"/>
    <property type="resolution" value="1.55 A"/>
    <property type="chains" value="H=364-622, L=334-363"/>
</dbReference>
<dbReference type="PDB" id="3U8O">
    <property type="method" value="X-ray"/>
    <property type="resolution" value="1.28 A"/>
    <property type="chains" value="H=364-622, L=334-363"/>
</dbReference>
<dbReference type="PDB" id="3U8R">
    <property type="method" value="X-ray"/>
    <property type="resolution" value="1.47 A"/>
    <property type="chains" value="H=364-622, L=334-363"/>
</dbReference>
<dbReference type="PDB" id="3U8T">
    <property type="method" value="X-ray"/>
    <property type="resolution" value="1.86 A"/>
    <property type="chains" value="H=364-620, L=334-360"/>
</dbReference>
<dbReference type="PDB" id="3U98">
    <property type="method" value="X-ray"/>
    <property type="resolution" value="1.45 A"/>
    <property type="chains" value="H=364-622, L=328-363"/>
</dbReference>
<dbReference type="PDB" id="3U9A">
    <property type="method" value="X-ray"/>
    <property type="resolution" value="1.58 A"/>
    <property type="chains" value="H=364-622, L=328-363"/>
</dbReference>
<dbReference type="PDB" id="3UTU">
    <property type="method" value="X-ray"/>
    <property type="resolution" value="1.55 A"/>
    <property type="chains" value="H=364-622, L=328-363"/>
</dbReference>
<dbReference type="PDB" id="3UWJ">
    <property type="method" value="X-ray"/>
    <property type="resolution" value="1.50 A"/>
    <property type="chains" value="H=364-622, L=328-363"/>
</dbReference>
<dbReference type="PDB" id="3VXE">
    <property type="method" value="X-ray"/>
    <property type="resolution" value="1.25 A"/>
    <property type="chains" value="H=364-622, L=328-363"/>
</dbReference>
<dbReference type="PDB" id="3VXF">
    <property type="method" value="Other"/>
    <property type="resolution" value="1.60 A"/>
    <property type="chains" value="H=364-622, L=328-363"/>
</dbReference>
<dbReference type="PDB" id="4AX9">
    <property type="method" value="X-ray"/>
    <property type="resolution" value="1.90 A"/>
    <property type="chains" value="H=364-620, L=334-361"/>
</dbReference>
<dbReference type="PDB" id="4AYV">
    <property type="method" value="X-ray"/>
    <property type="resolution" value="2.80 A"/>
    <property type="chains" value="A=332-361, B=364-620"/>
</dbReference>
<dbReference type="PDB" id="4AYY">
    <property type="method" value="X-ray"/>
    <property type="resolution" value="2.60 A"/>
    <property type="chains" value="A=332-361, B=364-620"/>
</dbReference>
<dbReference type="PDB" id="4AZ2">
    <property type="method" value="X-ray"/>
    <property type="resolution" value="2.60 A"/>
    <property type="chains" value="A=332-361, B=364-620"/>
</dbReference>
<dbReference type="PDB" id="4BAH">
    <property type="method" value="X-ray"/>
    <property type="resolution" value="1.94 A"/>
    <property type="chains" value="A=328-363, B=364-622"/>
</dbReference>
<dbReference type="PDB" id="4BAK">
    <property type="method" value="X-ray"/>
    <property type="resolution" value="1.94 A"/>
    <property type="chains" value="A=328-363, B=364-622"/>
</dbReference>
<dbReference type="PDB" id="4BAM">
    <property type="method" value="X-ray"/>
    <property type="resolution" value="1.88 A"/>
    <property type="chains" value="A=328-363, B=364-622"/>
</dbReference>
<dbReference type="PDB" id="4BAN">
    <property type="method" value="X-ray"/>
    <property type="resolution" value="1.87 A"/>
    <property type="chains" value="A=328-363, B=364-622"/>
</dbReference>
<dbReference type="PDB" id="4BAO">
    <property type="method" value="X-ray"/>
    <property type="resolution" value="1.87 A"/>
    <property type="chains" value="A=328-363, B=364-622"/>
</dbReference>
<dbReference type="PDB" id="4BAQ">
    <property type="method" value="X-ray"/>
    <property type="resolution" value="1.89 A"/>
    <property type="chains" value="A=328-363, B=364-622"/>
</dbReference>
<dbReference type="PDB" id="4BOH">
    <property type="method" value="X-ray"/>
    <property type="resolution" value="2.60 A"/>
    <property type="chains" value="A/H=364-622, B/L=328-363"/>
</dbReference>
<dbReference type="PDB" id="4CH2">
    <property type="method" value="X-ray"/>
    <property type="resolution" value="1.60 A"/>
    <property type="chains" value="A/C=328-363, B/D=364-622"/>
</dbReference>
<dbReference type="PDB" id="4CH8">
    <property type="method" value="X-ray"/>
    <property type="resolution" value="1.75 A"/>
    <property type="chains" value="A/C/E/G=328-363, B/D/F/H=364-622"/>
</dbReference>
<dbReference type="PDB" id="4DIH">
    <property type="method" value="X-ray"/>
    <property type="resolution" value="1.80 A"/>
    <property type="chains" value="H=364-622, L=328-363"/>
</dbReference>
<dbReference type="PDB" id="4DII">
    <property type="method" value="X-ray"/>
    <property type="resolution" value="2.05 A"/>
    <property type="chains" value="H=364-622, L=328-363"/>
</dbReference>
<dbReference type="PDB" id="4DT7">
    <property type="method" value="X-ray"/>
    <property type="resolution" value="1.90 A"/>
    <property type="chains" value="A/C=332-363, B/D=364-622"/>
</dbReference>
<dbReference type="PDB" id="4DY7">
    <property type="method" value="X-ray"/>
    <property type="resolution" value="2.80 A"/>
    <property type="chains" value="A/D=315-363, B/E=364-622"/>
</dbReference>
<dbReference type="PDB" id="4E05">
    <property type="method" value="X-ray"/>
    <property type="resolution" value="2.30 A"/>
    <property type="chains" value="H=364-622, L=328-363"/>
</dbReference>
<dbReference type="PDB" id="4E06">
    <property type="method" value="X-ray"/>
    <property type="resolution" value="3.20 A"/>
    <property type="chains" value="H=364-622, L=328-363"/>
</dbReference>
<dbReference type="PDB" id="4E7R">
    <property type="method" value="X-ray"/>
    <property type="resolution" value="2.25 A"/>
    <property type="chains" value="G/H=364-622, L/M=328-363"/>
</dbReference>
<dbReference type="PDB" id="4H6S">
    <property type="method" value="X-ray"/>
    <property type="resolution" value="2.19 A"/>
    <property type="chains" value="A=333-363, B=364-622"/>
</dbReference>
<dbReference type="PDB" id="4H6T">
    <property type="method" value="X-ray"/>
    <property type="resolution" value="2.40 A"/>
    <property type="chains" value="A=317-622"/>
</dbReference>
<dbReference type="PDB" id="4HFP">
    <property type="method" value="X-ray"/>
    <property type="resolution" value="2.40 A"/>
    <property type="chains" value="A/C=333-363, B/D=364-622"/>
</dbReference>
<dbReference type="PDB" id="4HTC">
    <property type="method" value="X-ray"/>
    <property type="resolution" value="2.30 A"/>
    <property type="chains" value="H=364-622, L=328-363"/>
</dbReference>
<dbReference type="PDB" id="4HZH">
    <property type="method" value="X-ray"/>
    <property type="resolution" value="3.30 A"/>
    <property type="chains" value="A/B=90-622"/>
</dbReference>
<dbReference type="PDB" id="4I7Y">
    <property type="method" value="X-ray"/>
    <property type="resolution" value="2.40 A"/>
    <property type="chains" value="H=364-622, L=328-363"/>
</dbReference>
<dbReference type="PDB" id="4LOY">
    <property type="method" value="X-ray"/>
    <property type="resolution" value="1.77 A"/>
    <property type="chains" value="H=364-620, L=334-360"/>
</dbReference>
<dbReference type="PDB" id="4LXB">
    <property type="method" value="X-ray"/>
    <property type="resolution" value="1.61 A"/>
    <property type="chains" value="H=364-622, L=328-363"/>
</dbReference>
<dbReference type="PDB" id="4LZ1">
    <property type="method" value="X-ray"/>
    <property type="resolution" value="1.65 A"/>
    <property type="chains" value="H=364-622, L=328-363"/>
</dbReference>
<dbReference type="PDB" id="4LZ4">
    <property type="method" value="X-ray"/>
    <property type="resolution" value="2.56 A"/>
    <property type="chains" value="A/C=328-363, B/D=364-622"/>
</dbReference>
<dbReference type="PDB" id="4MLF">
    <property type="method" value="X-ray"/>
    <property type="resolution" value="2.20 A"/>
    <property type="chains" value="A=331-363, B=364-622"/>
</dbReference>
<dbReference type="PDB" id="4NZQ">
    <property type="method" value="X-ray"/>
    <property type="resolution" value="2.81 A"/>
    <property type="chains" value="A=44-622"/>
</dbReference>
<dbReference type="PDB" id="4O03">
    <property type="method" value="X-ray"/>
    <property type="resolution" value="3.38 A"/>
    <property type="chains" value="A=44-622"/>
</dbReference>
<dbReference type="PDB" id="4RKJ">
    <property type="method" value="X-ray"/>
    <property type="resolution" value="1.70 A"/>
    <property type="chains" value="A=330-363, B=364-622"/>
</dbReference>
<dbReference type="PDB" id="4RKO">
    <property type="method" value="X-ray"/>
    <property type="resolution" value="1.84 A"/>
    <property type="chains" value="A=322-363, B=364-622"/>
</dbReference>
<dbReference type="PDB" id="4RN6">
    <property type="method" value="X-ray"/>
    <property type="resolution" value="3.00 A"/>
    <property type="chains" value="A/B=333-622"/>
</dbReference>
<dbReference type="PDB" id="4THN">
    <property type="method" value="X-ray"/>
    <property type="resolution" value="2.50 A"/>
    <property type="chains" value="H=364-622, L=328-363"/>
</dbReference>
<dbReference type="PDB" id="4UD9">
    <property type="method" value="X-ray"/>
    <property type="resolution" value="1.12 A"/>
    <property type="chains" value="H=364-622, L=333-360"/>
</dbReference>
<dbReference type="PDB" id="4UDW">
    <property type="method" value="X-ray"/>
    <property type="resolution" value="1.16 A"/>
    <property type="chains" value="H=364-621, L=333-360"/>
</dbReference>
<dbReference type="PDB" id="4UE7">
    <property type="method" value="X-ray"/>
    <property type="resolution" value="1.13 A"/>
    <property type="chains" value="H=364-621, L=333-360"/>
</dbReference>
<dbReference type="PDB" id="4UEH">
    <property type="method" value="X-ray"/>
    <property type="resolution" value="1.16 A"/>
    <property type="chains" value="H=364-621, L=333-361"/>
</dbReference>
<dbReference type="PDB" id="4UFD">
    <property type="method" value="X-ray"/>
    <property type="resolution" value="1.43 A"/>
    <property type="chains" value="H=364-621, L=333-360"/>
</dbReference>
<dbReference type="PDB" id="4UFE">
    <property type="method" value="X-ray"/>
    <property type="resolution" value="1.59 A"/>
    <property type="chains" value="H=364-621, L=333-361"/>
</dbReference>
<dbReference type="PDB" id="4UFF">
    <property type="method" value="X-ray"/>
    <property type="resolution" value="1.55 A"/>
    <property type="chains" value="H=364-621, L=333-361"/>
</dbReference>
<dbReference type="PDB" id="4UFG">
    <property type="method" value="X-ray"/>
    <property type="resolution" value="1.65 A"/>
    <property type="chains" value="H=364-621, L=333-361"/>
</dbReference>
<dbReference type="PDB" id="4YES">
    <property type="method" value="X-ray"/>
    <property type="resolution" value="1.50 A"/>
    <property type="chains" value="A=328-363, B=364-622"/>
</dbReference>
<dbReference type="PDB" id="5A2M">
    <property type="method" value="X-ray"/>
    <property type="resolution" value="1.40 A"/>
    <property type="chains" value="H=364-621, L=333-361"/>
</dbReference>
<dbReference type="PDB" id="5AF9">
    <property type="method" value="X-ray"/>
    <property type="resolution" value="1.18 A"/>
    <property type="chains" value="H=364-621, L=333-361"/>
</dbReference>
<dbReference type="PDB" id="5AFY">
    <property type="method" value="X-ray"/>
    <property type="resolution" value="1.12 A"/>
    <property type="chains" value="H=364-621, L=333-361"/>
</dbReference>
<dbReference type="PDB" id="5AFZ">
    <property type="method" value="X-ray"/>
    <property type="resolution" value="1.53 A"/>
    <property type="chains" value="H=364-621, L=333-361"/>
</dbReference>
<dbReference type="PDB" id="5AHG">
    <property type="method" value="X-ray"/>
    <property type="resolution" value="1.24 A"/>
    <property type="chains" value="H=364-621, L=333-361"/>
</dbReference>
<dbReference type="PDB" id="5CMX">
    <property type="method" value="X-ray"/>
    <property type="resolution" value="2.98 A"/>
    <property type="chains" value="H=364-622, L=328-363"/>
</dbReference>
<dbReference type="PDB" id="5DO4">
    <property type="method" value="X-ray"/>
    <property type="resolution" value="1.86 A"/>
    <property type="chains" value="H=364-621, L=328-363"/>
</dbReference>
<dbReference type="PDB" id="5E8E">
    <property type="method" value="X-ray"/>
    <property type="resolution" value="1.90 A"/>
    <property type="chains" value="H=364-622, L=328-363"/>
</dbReference>
<dbReference type="PDB" id="5EDK">
    <property type="method" value="X-ray"/>
    <property type="resolution" value="3.21 A"/>
    <property type="chains" value="A=44-622"/>
</dbReference>
<dbReference type="PDB" id="5EDM">
    <property type="method" value="X-ray"/>
    <property type="resolution" value="2.20 A"/>
    <property type="chains" value="A=44-622"/>
</dbReference>
<dbReference type="PDB" id="5EW1">
    <property type="method" value="X-ray"/>
    <property type="resolution" value="2.95 A"/>
    <property type="chains" value="H=364-622, L=328-363"/>
</dbReference>
<dbReference type="PDB" id="5EW2">
    <property type="method" value="X-ray"/>
    <property type="resolution" value="3.59 A"/>
    <property type="chains" value="H=364-622, L=328-363"/>
</dbReference>
<dbReference type="PDB" id="5GDS">
    <property type="method" value="X-ray"/>
    <property type="resolution" value="2.10 A"/>
    <property type="chains" value="H=364-622, L=328-363"/>
</dbReference>
<dbReference type="PDB" id="5GIM">
    <property type="method" value="X-ray"/>
    <property type="resolution" value="2.09 A"/>
    <property type="chains" value="A=328-363"/>
</dbReference>
<dbReference type="PDB" id="5JDU">
    <property type="method" value="X-ray"/>
    <property type="resolution" value="1.70 A"/>
    <property type="chains" value="A/C=331-363, B/D=364-622"/>
</dbReference>
<dbReference type="PDB" id="5JFD">
    <property type="method" value="X-ray"/>
    <property type="resolution" value="1.46 A"/>
    <property type="chains" value="H=364-622, L=328-363"/>
</dbReference>
<dbReference type="PDB" id="5JZY">
    <property type="method" value="X-ray"/>
    <property type="resolution" value="1.27 A"/>
    <property type="chains" value="H=364-622, L=328-363"/>
</dbReference>
<dbReference type="PDB" id="5L6N">
    <property type="method" value="X-ray"/>
    <property type="resolution" value="1.63 A"/>
    <property type="chains" value="H=364-622, L=328-363"/>
</dbReference>
<dbReference type="PDB" id="5MJT">
    <property type="method" value="X-ray"/>
    <property type="resolution" value="1.40 A"/>
    <property type="chains" value="H=364-622, L=328-363"/>
</dbReference>
<dbReference type="PDB" id="5MLS">
    <property type="method" value="X-ray"/>
    <property type="resolution" value="1.62 A"/>
    <property type="chains" value="H=364-622, L=328-363"/>
</dbReference>
<dbReference type="PDB" id="5MM6">
    <property type="method" value="X-ray"/>
    <property type="resolution" value="1.29 A"/>
    <property type="chains" value="H=364-622, L=328-363"/>
</dbReference>
<dbReference type="PDB" id="5NHU">
    <property type="method" value="X-ray"/>
    <property type="resolution" value="1.45 A"/>
    <property type="chains" value="A/C/H=364-622, B/D/L=328-363"/>
</dbReference>
<dbReference type="PDB" id="5TO3">
    <property type="method" value="X-ray"/>
    <property type="resolution" value="2.34 A"/>
    <property type="chains" value="A=318-363, B=364-621"/>
</dbReference>
<dbReference type="PDB" id="5Z5W">
    <property type="method" value="NMR"/>
    <property type="chains" value="A=606-617"/>
</dbReference>
<dbReference type="PDB" id="5Z5X">
    <property type="method" value="NMR"/>
    <property type="chains" value="A=605-622"/>
</dbReference>
<dbReference type="PDB" id="6BJR">
    <property type="method" value="X-ray"/>
    <property type="resolution" value="6.00 A"/>
    <property type="chains" value="A=44-622"/>
</dbReference>
<dbReference type="PDB" id="6C2W">
    <property type="method" value="X-ray"/>
    <property type="resolution" value="4.12 A"/>
    <property type="chains" value="A/B=44-622"/>
</dbReference>
<dbReference type="PDB" id="6EO6">
    <property type="method" value="X-ray"/>
    <property type="resolution" value="1.69 A"/>
    <property type="chains" value="H=364-622, L=328-363"/>
</dbReference>
<dbReference type="PDB" id="6EO7">
    <property type="method" value="X-ray"/>
    <property type="resolution" value="2.24 A"/>
    <property type="chains" value="H=364-622, L=328-363"/>
</dbReference>
<dbReference type="PDB" id="6EO8">
    <property type="method" value="X-ray"/>
    <property type="resolution" value="1.94 A"/>
    <property type="chains" value="H=364-622, L=328-363"/>
</dbReference>
<dbReference type="PDB" id="6EO9">
    <property type="method" value="X-ray"/>
    <property type="resolution" value="1.84 A"/>
    <property type="chains" value="H=364-622, L=328-363"/>
</dbReference>
<dbReference type="PDB" id="6V5T">
    <property type="method" value="X-ray"/>
    <property type="resolution" value="2.10 A"/>
    <property type="chains" value="E=333-622"/>
</dbReference>
<dbReference type="PDB" id="7KME">
    <property type="method" value="X-ray"/>
    <property type="resolution" value="2.10 A"/>
    <property type="chains" value="H=364-622, L=328-363"/>
</dbReference>
<dbReference type="PDB" id="7TPP">
    <property type="method" value="EM"/>
    <property type="resolution" value="4.10 A"/>
    <property type="chains" value="E=44-622"/>
</dbReference>
<dbReference type="PDB" id="8BWW">
    <property type="method" value="NMR"/>
    <property type="chains" value="A=605-622"/>
</dbReference>
<dbReference type="PDB" id="8KME">
    <property type="method" value="X-ray"/>
    <property type="resolution" value="2.10 A"/>
    <property type="chains" value="1=328-359, 2=364-620"/>
</dbReference>
<dbReference type="PDB" id="8RTN">
    <property type="method" value="X-ray"/>
    <property type="resolution" value="2.51 A"/>
    <property type="chains" value="H/L=1-622"/>
</dbReference>
<dbReference type="PDB" id="8UF7">
    <property type="method" value="EM"/>
    <property type="resolution" value="3.20 A"/>
    <property type="chains" value="C=44-622"/>
</dbReference>
<dbReference type="PDB" id="9CLN">
    <property type="method" value="EM"/>
    <property type="resolution" value="4.13 A"/>
    <property type="chains" value="Z=1-622"/>
</dbReference>
<dbReference type="PDB" id="9CLS">
    <property type="method" value="EM"/>
    <property type="resolution" value="3.70 A"/>
    <property type="chains" value="Z=1-622"/>
</dbReference>
<dbReference type="PDB" id="9CMO">
    <property type="method" value="EM"/>
    <property type="resolution" value="4.17 A"/>
    <property type="chains" value="Z=1-622"/>
</dbReference>
<dbReference type="PDB" id="9CTH">
    <property type="method" value="EM"/>
    <property type="resolution" value="6.47 A"/>
    <property type="chains" value="D=44-622"/>
</dbReference>
<dbReference type="PDBsum" id="1A2C"/>
<dbReference type="PDBsum" id="1A3B"/>
<dbReference type="PDBsum" id="1A3E"/>
<dbReference type="PDBsum" id="1A46"/>
<dbReference type="PDBsum" id="1A4W"/>
<dbReference type="PDBsum" id="1A5G"/>
<dbReference type="PDBsum" id="1A61"/>
<dbReference type="PDBsum" id="1ABI"/>
<dbReference type="PDBsum" id="1ABJ"/>
<dbReference type="PDBsum" id="1AD8"/>
<dbReference type="PDBsum" id="1AE8"/>
<dbReference type="PDBsum" id="1AFE"/>
<dbReference type="PDBsum" id="1AHT"/>
<dbReference type="PDBsum" id="1AI8"/>
<dbReference type="PDBsum" id="1AIX"/>
<dbReference type="PDBsum" id="1AWF"/>
<dbReference type="PDBsum" id="1AWH"/>
<dbReference type="PDBsum" id="1AY6"/>
<dbReference type="PDBsum" id="1B5G"/>
<dbReference type="PDBsum" id="1B7X"/>
<dbReference type="PDBsum" id="1BA8"/>
<dbReference type="PDBsum" id="1BB0"/>
<dbReference type="PDBsum" id="1BCU"/>
<dbReference type="PDBsum" id="1BHX"/>
<dbReference type="PDBsum" id="1BMM"/>
<dbReference type="PDBsum" id="1BMN"/>
<dbReference type="PDBsum" id="1BTH"/>
<dbReference type="PDBsum" id="1C1U"/>
<dbReference type="PDBsum" id="1C1V"/>
<dbReference type="PDBsum" id="1C1W"/>
<dbReference type="PDBsum" id="1C4U"/>
<dbReference type="PDBsum" id="1C4V"/>
<dbReference type="PDBsum" id="1C4Y"/>
<dbReference type="PDBsum" id="1C5L"/>
<dbReference type="PDBsum" id="1C5N"/>
<dbReference type="PDBsum" id="1C5O"/>
<dbReference type="PDBsum" id="1CA8"/>
<dbReference type="PDBsum" id="1D3D"/>
<dbReference type="PDBsum" id="1D3P"/>
<dbReference type="PDBsum" id="1D3Q"/>
<dbReference type="PDBsum" id="1D3T"/>
<dbReference type="PDBsum" id="1D4P"/>
<dbReference type="PDBsum" id="1D6W"/>
<dbReference type="PDBsum" id="1D9I"/>
<dbReference type="PDBsum" id="1DE7"/>
<dbReference type="PDBsum" id="1DIT"/>
<dbReference type="PDBsum" id="1DM4"/>
<dbReference type="PDBsum" id="1DOJ"/>
<dbReference type="PDBsum" id="1DWB"/>
<dbReference type="PDBsum" id="1DWC"/>
<dbReference type="PDBsum" id="1DWD"/>
<dbReference type="PDBsum" id="1DWE"/>
<dbReference type="PDBsum" id="1DX5"/>
<dbReference type="PDBsum" id="1E0F"/>
<dbReference type="PDBsum" id="1EB1"/>
<dbReference type="PDBsum" id="1EOJ"/>
<dbReference type="PDBsum" id="1EOL"/>
<dbReference type="PDBsum" id="1FPC"/>
<dbReference type="PDBsum" id="1FPH"/>
<dbReference type="PDBsum" id="1G30"/>
<dbReference type="PDBsum" id="1G32"/>
<dbReference type="PDBsum" id="1G37"/>
<dbReference type="PDBsum" id="1GHV"/>
<dbReference type="PDBsum" id="1GHW"/>
<dbReference type="PDBsum" id="1GHX"/>
<dbReference type="PDBsum" id="1GHY"/>
<dbReference type="PDBsum" id="1GJ4"/>
<dbReference type="PDBsum" id="1GJ5"/>
<dbReference type="PDBsum" id="1H8D"/>
<dbReference type="PDBsum" id="1H8I"/>
<dbReference type="PDBsum" id="1HAG"/>
<dbReference type="PDBsum" id="1HAH"/>
<dbReference type="PDBsum" id="1HAI"/>
<dbReference type="PDBsum" id="1HAO"/>
<dbReference type="PDBsum" id="1HAP"/>
<dbReference type="PDBsum" id="1HBT"/>
<dbReference type="PDBsum" id="1HDT"/>
<dbReference type="PDBsum" id="1HGT"/>
<dbReference type="PDBsum" id="1HLT"/>
<dbReference type="PDBsum" id="1HUT"/>
<dbReference type="PDBsum" id="1HXE"/>
<dbReference type="PDBsum" id="1HXF"/>
<dbReference type="PDBsum" id="1IHS"/>
<dbReference type="PDBsum" id="1IHT"/>
<dbReference type="PDBsum" id="1JMO"/>
<dbReference type="PDBsum" id="1JOU"/>
<dbReference type="PDBsum" id="1JWT"/>
<dbReference type="PDBsum" id="1K21"/>
<dbReference type="PDBsum" id="1K22"/>
<dbReference type="PDBsum" id="1KTS"/>
<dbReference type="PDBsum" id="1KTT"/>
<dbReference type="PDBsum" id="1LHC"/>
<dbReference type="PDBsum" id="1LHD"/>
<dbReference type="PDBsum" id="1LHE"/>
<dbReference type="PDBsum" id="1LHF"/>
<dbReference type="PDBsum" id="1LHG"/>
<dbReference type="PDBsum" id="1MH0"/>
<dbReference type="PDBsum" id="1MU6"/>
<dbReference type="PDBsum" id="1MU8"/>
<dbReference type="PDBsum" id="1MUE"/>
<dbReference type="PDBsum" id="1NM6"/>
<dbReference type="PDBsum" id="1NO9"/>
<dbReference type="PDBsum" id="1NRN"/>
<dbReference type="PDBsum" id="1NRO"/>
<dbReference type="PDBsum" id="1NRP"/>
<dbReference type="PDBsum" id="1NRQ"/>
<dbReference type="PDBsum" id="1NRR"/>
<dbReference type="PDBsum" id="1NRS"/>
<dbReference type="PDBsum" id="1NT1"/>
<dbReference type="PDBsum" id="1NU7"/>
<dbReference type="PDBsum" id="1NU9"/>
<dbReference type="PDBsum" id="1NY2"/>
<dbReference type="PDBsum" id="1NZQ"/>
<dbReference type="PDBsum" id="1O0D"/>
<dbReference type="PDBsum" id="1O2G"/>
<dbReference type="PDBsum" id="1O5G"/>
<dbReference type="PDBsum" id="1OOK"/>
<dbReference type="PDBsum" id="1OYT"/>
<dbReference type="PDBsum" id="1P8V"/>
<dbReference type="PDBsum" id="1PPB"/>
<dbReference type="PDBsum" id="1QBV"/>
<dbReference type="PDBsum" id="1QHR"/>
<dbReference type="PDBsum" id="1QJ1"/>
<dbReference type="PDBsum" id="1QJ6"/>
<dbReference type="PDBsum" id="1QJ7"/>
<dbReference type="PDBsum" id="1QUR"/>
<dbReference type="PDBsum" id="1RD3"/>
<dbReference type="PDBsum" id="1RIW"/>
<dbReference type="PDBsum" id="1SB1"/>
<dbReference type="PDBsum" id="1SFQ"/>
<dbReference type="PDBsum" id="1SG8"/>
<dbReference type="PDBsum" id="1SGI"/>
<dbReference type="PDBsum" id="1SHH"/>
<dbReference type="PDBsum" id="1SL3"/>
<dbReference type="PDBsum" id="1SR5"/>
<dbReference type="PDBsum" id="1T4U"/>
<dbReference type="PDBsum" id="1T4V"/>
<dbReference type="PDBsum" id="1TA2"/>
<dbReference type="PDBsum" id="1TA6"/>
<dbReference type="PDBsum" id="1TB6"/>
<dbReference type="PDBsum" id="1TBZ"/>
<dbReference type="PDBsum" id="1THP"/>
<dbReference type="PDBsum" id="1THR"/>
<dbReference type="PDBsum" id="1THS"/>
<dbReference type="PDBsum" id="1TMB"/>
<dbReference type="PDBsum" id="1TMT"/>
<dbReference type="PDBsum" id="1TMU"/>
<dbReference type="PDBsum" id="1TOM"/>
<dbReference type="PDBsum" id="1TQ0"/>
<dbReference type="PDBsum" id="1TQ7"/>
<dbReference type="PDBsum" id="1TWX"/>
<dbReference type="PDBsum" id="1UMA"/>
<dbReference type="PDBsum" id="1UVS"/>
<dbReference type="PDBsum" id="1VR1"/>
<dbReference type="PDBsum" id="1VZQ"/>
<dbReference type="PDBsum" id="1W7G"/>
<dbReference type="PDBsum" id="1WAY"/>
<dbReference type="PDBsum" id="1WBG"/>
<dbReference type="PDBsum" id="1XM1"/>
<dbReference type="PDBsum" id="1XMN"/>
<dbReference type="PDBsum" id="1YPE"/>
<dbReference type="PDBsum" id="1YPG"/>
<dbReference type="PDBsum" id="1YPJ"/>
<dbReference type="PDBsum" id="1YPK"/>
<dbReference type="PDBsum" id="1YPL"/>
<dbReference type="PDBsum" id="1YPM"/>
<dbReference type="PDBsum" id="1Z71"/>
<dbReference type="PDBsum" id="1Z8I"/>
<dbReference type="PDBsum" id="1Z8J"/>
<dbReference type="PDBsum" id="1ZGI"/>
<dbReference type="PDBsum" id="1ZGV"/>
<dbReference type="PDBsum" id="1ZRB"/>
<dbReference type="PDBsum" id="2A0Q"/>
<dbReference type="PDBsum" id="2A2X"/>
<dbReference type="PDBsum" id="2A45"/>
<dbReference type="PDBsum" id="2AFQ"/>
<dbReference type="PDBsum" id="2ANK"/>
<dbReference type="PDBsum" id="2ANM"/>
<dbReference type="PDBsum" id="2B5T"/>
<dbReference type="PDBsum" id="2BDY"/>
<dbReference type="PDBsum" id="2BVR"/>
<dbReference type="PDBsum" id="2BVS"/>
<dbReference type="PDBsum" id="2BVX"/>
<dbReference type="PDBsum" id="2BXT"/>
<dbReference type="PDBsum" id="2BXU"/>
<dbReference type="PDBsum" id="2C8W"/>
<dbReference type="PDBsum" id="2C8X"/>
<dbReference type="PDBsum" id="2C8Y"/>
<dbReference type="PDBsum" id="2C8Z"/>
<dbReference type="PDBsum" id="2C90"/>
<dbReference type="PDBsum" id="2C93"/>
<dbReference type="PDBsum" id="2CF8"/>
<dbReference type="PDBsum" id="2CF9"/>
<dbReference type="PDBsum" id="2CN0"/>
<dbReference type="PDBsum" id="2FEQ"/>
<dbReference type="PDBsum" id="2FES"/>
<dbReference type="PDBsum" id="2GDE"/>
<dbReference type="PDBsum" id="2GP9"/>
<dbReference type="PDBsum" id="2H9T"/>
<dbReference type="PDBsum" id="2HGT"/>
<dbReference type="PDBsum" id="2HNT"/>
<dbReference type="PDBsum" id="2HPP"/>
<dbReference type="PDBsum" id="2HPQ"/>
<dbReference type="PDBsum" id="2HWL"/>
<dbReference type="PDBsum" id="2JH0"/>
<dbReference type="PDBsum" id="2JH5"/>
<dbReference type="PDBsum" id="2JH6"/>
<dbReference type="PDBsum" id="2OD3"/>
<dbReference type="PDBsum" id="2PGB"/>
<dbReference type="PDBsum" id="2PGQ"/>
<dbReference type="PDBsum" id="2PKS"/>
<dbReference type="PDBsum" id="2PW8"/>
<dbReference type="PDBsum" id="2R2M"/>
<dbReference type="PDBsum" id="2THF"/>
<dbReference type="PDBsum" id="2UUF"/>
<dbReference type="PDBsum" id="2UUJ"/>
<dbReference type="PDBsum" id="2UUK"/>
<dbReference type="PDBsum" id="2V3H"/>
<dbReference type="PDBsum" id="2V3O"/>
<dbReference type="PDBsum" id="2ZC9"/>
<dbReference type="PDBsum" id="2ZDA"/>
<dbReference type="PDBsum" id="2ZDV"/>
<dbReference type="PDBsum" id="2ZF0"/>
<dbReference type="PDBsum" id="2ZFF"/>
<dbReference type="PDBsum" id="2ZFP"/>
<dbReference type="PDBsum" id="2ZFQ"/>
<dbReference type="PDBsum" id="2ZFR"/>
<dbReference type="PDBsum" id="2ZG0"/>
<dbReference type="PDBsum" id="2ZGB"/>
<dbReference type="PDBsum" id="2ZGX"/>
<dbReference type="PDBsum" id="2ZHE"/>
<dbReference type="PDBsum" id="2ZHF"/>
<dbReference type="PDBsum" id="2ZHQ"/>
<dbReference type="PDBsum" id="2ZHW"/>
<dbReference type="PDBsum" id="2ZI2"/>
<dbReference type="PDBsum" id="2ZIQ"/>
<dbReference type="PDBsum" id="2ZNK"/>
<dbReference type="PDBsum" id="2ZO3"/>
<dbReference type="PDBsum" id="3B23"/>
<dbReference type="PDBsum" id="3B9F"/>
<dbReference type="PDBsum" id="3BEF"/>
<dbReference type="PDBsum" id="3BEI"/>
<dbReference type="PDBsum" id="3BF6"/>
<dbReference type="PDBsum" id="3BIU"/>
<dbReference type="PDBsum" id="3BIV"/>
<dbReference type="PDBsum" id="3BV9"/>
<dbReference type="PDBsum" id="3C1K"/>
<dbReference type="PDBsum" id="3C27"/>
<dbReference type="PDBsum" id="3D49"/>
<dbReference type="PDBsum" id="3DA9"/>
<dbReference type="PDBsum" id="3DD2"/>
<dbReference type="PDBsum" id="3DHK"/>
<dbReference type="PDBsum" id="3DT0"/>
<dbReference type="PDBsum" id="3DUX"/>
<dbReference type="PDBsum" id="3E6P"/>
<dbReference type="PDBsum" id="3EE0"/>
<dbReference type="PDBsum" id="3EGK"/>
<dbReference type="PDBsum" id="3EQ0"/>
<dbReference type="PDBsum" id="3F68"/>
<dbReference type="PDBsum" id="3GIC"/>
<dbReference type="PDBsum" id="3GIS"/>
<dbReference type="PDBsum" id="3HAT"/>
<dbReference type="PDBsum" id="3HKJ"/>
<dbReference type="PDBsum" id="3HTC"/>
<dbReference type="PDBsum" id="3JZ1"/>
<dbReference type="PDBsum" id="3JZ2"/>
<dbReference type="PDBsum" id="3K65"/>
<dbReference type="PDBsum" id="3LDX"/>
<dbReference type="PDBsum" id="3LU9"/>
<dbReference type="PDBsum" id="3NXP"/>
<dbReference type="PDBsum" id="3P17"/>
<dbReference type="PDBsum" id="3P6Z"/>
<dbReference type="PDBsum" id="3P70"/>
<dbReference type="PDBsum" id="3PMH"/>
<dbReference type="PDBsum" id="3PO1"/>
<dbReference type="PDBsum" id="3QDZ"/>
<dbReference type="PDBsum" id="3QGN"/>
<dbReference type="PDBsum" id="3QLP"/>
<dbReference type="PDBsum" id="3QTO"/>
<dbReference type="PDBsum" id="3QTV"/>
<dbReference type="PDBsum" id="3QWC"/>
<dbReference type="PDBsum" id="3QX5"/>
<dbReference type="PDBsum" id="3R3G"/>
<dbReference type="PDBsum" id="3RLW"/>
<dbReference type="PDBsum" id="3RLY"/>
<dbReference type="PDBsum" id="3RM0"/>
<dbReference type="PDBsum" id="3RM2"/>
<dbReference type="PDBsum" id="3RML"/>
<dbReference type="PDBsum" id="3RMM"/>
<dbReference type="PDBsum" id="3RMN"/>
<dbReference type="PDBsum" id="3RMO"/>
<dbReference type="PDBsum" id="3S7H"/>
<dbReference type="PDBsum" id="3S7K"/>
<dbReference type="PDBsum" id="3SHA"/>
<dbReference type="PDBsum" id="3SHC"/>
<dbReference type="PDBsum" id="3SI3"/>
<dbReference type="PDBsum" id="3SI4"/>
<dbReference type="PDBsum" id="3SQE"/>
<dbReference type="PDBsum" id="3SQH"/>
<dbReference type="PDBsum" id="3SV2"/>
<dbReference type="PDBsum" id="3T5F"/>
<dbReference type="PDBsum" id="3TU7"/>
<dbReference type="PDBsum" id="3U69"/>
<dbReference type="PDBsum" id="3U8O"/>
<dbReference type="PDBsum" id="3U8R"/>
<dbReference type="PDBsum" id="3U8T"/>
<dbReference type="PDBsum" id="3U98"/>
<dbReference type="PDBsum" id="3U9A"/>
<dbReference type="PDBsum" id="3UTU"/>
<dbReference type="PDBsum" id="3UWJ"/>
<dbReference type="PDBsum" id="3VXE"/>
<dbReference type="PDBsum" id="3VXF"/>
<dbReference type="PDBsum" id="4AX9"/>
<dbReference type="PDBsum" id="4AYV"/>
<dbReference type="PDBsum" id="4AYY"/>
<dbReference type="PDBsum" id="4AZ2"/>
<dbReference type="PDBsum" id="4BAH"/>
<dbReference type="PDBsum" id="4BAK"/>
<dbReference type="PDBsum" id="4BAM"/>
<dbReference type="PDBsum" id="4BAN"/>
<dbReference type="PDBsum" id="4BAO"/>
<dbReference type="PDBsum" id="4BAQ"/>
<dbReference type="PDBsum" id="4BOH"/>
<dbReference type="PDBsum" id="4CH2"/>
<dbReference type="PDBsum" id="4CH8"/>
<dbReference type="PDBsum" id="4DIH"/>
<dbReference type="PDBsum" id="4DII"/>
<dbReference type="PDBsum" id="4DT7"/>
<dbReference type="PDBsum" id="4DY7"/>
<dbReference type="PDBsum" id="4E05"/>
<dbReference type="PDBsum" id="4E06"/>
<dbReference type="PDBsum" id="4E7R"/>
<dbReference type="PDBsum" id="4H6S"/>
<dbReference type="PDBsum" id="4H6T"/>
<dbReference type="PDBsum" id="4HFP"/>
<dbReference type="PDBsum" id="4HTC"/>
<dbReference type="PDBsum" id="4HZH"/>
<dbReference type="PDBsum" id="4I7Y"/>
<dbReference type="PDBsum" id="4LOY"/>
<dbReference type="PDBsum" id="4LXB"/>
<dbReference type="PDBsum" id="4LZ1"/>
<dbReference type="PDBsum" id="4LZ4"/>
<dbReference type="PDBsum" id="4MLF"/>
<dbReference type="PDBsum" id="4NZQ"/>
<dbReference type="PDBsum" id="4O03"/>
<dbReference type="PDBsum" id="4RKJ"/>
<dbReference type="PDBsum" id="4RKO"/>
<dbReference type="PDBsum" id="4RN6"/>
<dbReference type="PDBsum" id="4THN"/>
<dbReference type="PDBsum" id="4UD9"/>
<dbReference type="PDBsum" id="4UDW"/>
<dbReference type="PDBsum" id="4UE7"/>
<dbReference type="PDBsum" id="4UEH"/>
<dbReference type="PDBsum" id="4UFD"/>
<dbReference type="PDBsum" id="4UFE"/>
<dbReference type="PDBsum" id="4UFF"/>
<dbReference type="PDBsum" id="4UFG"/>
<dbReference type="PDBsum" id="4YES"/>
<dbReference type="PDBsum" id="5A2M"/>
<dbReference type="PDBsum" id="5AF9"/>
<dbReference type="PDBsum" id="5AFY"/>
<dbReference type="PDBsum" id="5AFZ"/>
<dbReference type="PDBsum" id="5AHG"/>
<dbReference type="PDBsum" id="5CMX"/>
<dbReference type="PDBsum" id="5DO4"/>
<dbReference type="PDBsum" id="5E8E"/>
<dbReference type="PDBsum" id="5EDK"/>
<dbReference type="PDBsum" id="5EDM"/>
<dbReference type="PDBsum" id="5EW1"/>
<dbReference type="PDBsum" id="5EW2"/>
<dbReference type="PDBsum" id="5GDS"/>
<dbReference type="PDBsum" id="5GIM"/>
<dbReference type="PDBsum" id="5JDU"/>
<dbReference type="PDBsum" id="5JFD"/>
<dbReference type="PDBsum" id="5JZY"/>
<dbReference type="PDBsum" id="5L6N"/>
<dbReference type="PDBsum" id="5MJT"/>
<dbReference type="PDBsum" id="5MLS"/>
<dbReference type="PDBsum" id="5MM6"/>
<dbReference type="PDBsum" id="5NHU"/>
<dbReference type="PDBsum" id="5TO3"/>
<dbReference type="PDBsum" id="5Z5W"/>
<dbReference type="PDBsum" id="5Z5X"/>
<dbReference type="PDBsum" id="6BJR"/>
<dbReference type="PDBsum" id="6C2W"/>
<dbReference type="PDBsum" id="6EO6"/>
<dbReference type="PDBsum" id="6EO7"/>
<dbReference type="PDBsum" id="6EO8"/>
<dbReference type="PDBsum" id="6EO9"/>
<dbReference type="PDBsum" id="6V5T"/>
<dbReference type="PDBsum" id="7KME"/>
<dbReference type="PDBsum" id="7TPP"/>
<dbReference type="PDBsum" id="8BWW"/>
<dbReference type="PDBsum" id="8KME"/>
<dbReference type="PDBsum" id="8RTN"/>
<dbReference type="PDBsum" id="8UF7"/>
<dbReference type="PDBsum" id="9CLN"/>
<dbReference type="PDBsum" id="9CLS"/>
<dbReference type="PDBsum" id="9CMO"/>
<dbReference type="PDBsum" id="9CTH"/>
<dbReference type="BMRB" id="P00734"/>
<dbReference type="EMDB" id="EMD-26060"/>
<dbReference type="EMDB" id="EMD-42185"/>
<dbReference type="EMDB" id="EMD-45726"/>
<dbReference type="EMDB" id="EMD-45729"/>
<dbReference type="EMDB" id="EMD-45751"/>
<dbReference type="SMR" id="P00734"/>
<dbReference type="BioGRID" id="108447">
    <property type="interactions" value="45"/>
</dbReference>
<dbReference type="ComplexPortal" id="CPX-6222">
    <property type="entry name" value="alpha-thrombin complex"/>
</dbReference>
<dbReference type="CORUM" id="P00734"/>
<dbReference type="DIP" id="DIP-6115N"/>
<dbReference type="FunCoup" id="P00734">
    <property type="interactions" value="788"/>
</dbReference>
<dbReference type="IntAct" id="P00734">
    <property type="interactions" value="23"/>
</dbReference>
<dbReference type="MINT" id="P00734"/>
<dbReference type="STRING" id="9606.ENSP00000308541"/>
<dbReference type="BindingDB" id="P00734"/>
<dbReference type="ChEMBL" id="CHEMBL204"/>
<dbReference type="DrugBank" id="DB07211">
    <property type="generic name" value="(2R)-2-(5-CHLORO-2-THIENYL)-N-{(3S)-1-[(1S)-1-METHYL-2-MORPHOLIN-4-YL-2-OXOETHYL]-2-OXOPYRROLIDIN-3-YL}PROPENE-1-SULFONAMIDE"/>
</dbReference>
<dbReference type="DrugBank" id="DB07796">
    <property type="generic name" value="(3ASR,4RS,8ASR,8BRS)-4-(2-(4-FLUOROBENZYL)-1,3-DIOXODEACAHYDROPYRROLO[3,4-A] PYRROLIZIN-4-YL)BENZAMIDINE"/>
</dbReference>
<dbReference type="DrugBank" id="DB07016">
    <property type="generic name" value="(3R)-8-(dioxidosulfanyl)-3-methyl-1,2,3,4-tetrahydroquinoline"/>
</dbReference>
<dbReference type="DrugBank" id="DB07521">
    <property type="generic name" value="(3Z,6S)-6-Chloro-1-(2-{[(5-chloro-1-benzothiophen-3-yl)methyl]amino}ethyl)-3-({2-[(2R)-2-piperidinyl]ethyl}imino)-2-piperazinol"/>
</dbReference>
<dbReference type="DrugBank" id="DB06850">
    <property type="generic name" value="(S)-N-(4-carbamimidoylbenzyl)-1-(2-(cyclohexylamino)ethanoyl)pyrrolidine-2-carboxamide"/>
</dbReference>
<dbReference type="DrugBank" id="DB07091">
    <property type="generic name" value="(S)-N-(4-carbamimidoylbenzyl)-1-(2-(cyclohexyloxy)ethanoyl)pyrrolidine-2-carboxamide"/>
</dbReference>
<dbReference type="DrugBank" id="DB06845">
    <property type="generic name" value="(S)-N-(4-carbamimidoylbenzyl)-1-(2-(cyclopentylamino)ethanoyl)pyrrolidine-2-carboxamide"/>
</dbReference>
<dbReference type="DrugBank" id="DB07088">
    <property type="generic name" value="(S)-N-(4-carbamimidoylbenzyl)-1-(2-(cyclopentyloxy)ethanoyl)pyrrolidine-2-carboxamide"/>
</dbReference>
<dbReference type="DrugBank" id="DB07131">
    <property type="generic name" value="(S)-N-(4-carbamimidoylbenzyl)-1-(3-cyclohexylpropanoyl)pyrrolidine-2-carboxamide"/>
</dbReference>
<dbReference type="DrugBank" id="DB07095">
    <property type="generic name" value="(S)-N-(4-carbamimidoylbenzyl)-1-(3-cyclopentylpropanoyl)pyrrolidine-2-carboxamide"/>
</dbReference>
<dbReference type="DrugBank" id="DB07515">
    <property type="generic name" value="1-(2-{[(6-amino-2-methylpyridin-3-yl)methyl]amino}ethyl)-6-chloro-3-[(2,2-difluoro-2-pyridin-2-ylethyl)amino]-1,4-dihydropyrazin-2-ol"/>
</dbReference>
<dbReference type="DrugBank" id="DB07897">
    <property type="generic name" value="1-(HYDROXYMETHYLENEAMINO)-8-HYDROXY-OCTANE"/>
</dbReference>
<dbReference type="DrugBank" id="DB06878">
    <property type="generic name" value="1-[(2R)-2-aminobutanoyl]-N-(3-chlorobenzyl)-L-prolinamide"/>
</dbReference>
<dbReference type="DrugBank" id="DB06947">
    <property type="generic name" value="1-[(2R)-2-aminobutanoyl]-N-(4-carbamimidoylbenzyl)-L-prolinamide"/>
</dbReference>
<dbReference type="DrugBank" id="DB08624">
    <property type="generic name" value="1-[(4S)-4-amino-5-(1,3-benzothiazol-2-yl)-5-oxopentyl]guanidine"/>
</dbReference>
<dbReference type="DrugBank" id="DB06869">
    <property type="generic name" value="1-[2-AMINO-2-CYCLOHEXYL-ACETYL]-PYRROLIDINE-3-CARBOXYLIC ACID 5-CHLORO-2-(2-ETHYLCARBAMOYL-ETHOXY)-BENZYLAMIDE"/>
</dbReference>
<dbReference type="DrugBank" id="DB06929">
    <property type="generic name" value="1-butanoyl-N-(4-carbamimidoylbenzyl)-L-prolinamide"/>
</dbReference>
<dbReference type="DrugBank" id="DB07400">
    <property type="generic name" value="1-ETHOXYCARBONYL-D-PHE-PRO-2(4-AMINOBUTYL)HYDRAZINE"/>
</dbReference>
<dbReference type="DrugBank" id="DB04771">
    <property type="generic name" value="1-GUANIDINO-4-(N-NITRO-BENZOYLAMINO-L-LEUCYL-L-PROLYLAMINO)BUTANE"/>
</dbReference>
<dbReference type="DrugBank" id="DB04772">
    <property type="generic name" value="1-GUANIDINO-4-(N-PHENYLMETHANESULFONYL-L-LEUCYL-L-PROLYLAMINO)BUTANE"/>
</dbReference>
<dbReference type="DrugBank" id="DB02463">
    <property type="generic name" value="2-(2-Hydroxy-Phenyl)-1h-Indole-5-Carboxamidine"/>
</dbReference>
<dbReference type="DrugBank" id="DB02287">
    <property type="generic name" value="2-(2-hydroxy-phenyl)-3H-benzoimidazole-5-carboxamidine"/>
</dbReference>
<dbReference type="DrugBank" id="DB07277">
    <property type="generic name" value="2-(5-CHLORO-2-THIENYL)-N-{(3S)-1-[(1S)-1-METHYL-2-MORPHOLIN-4-YL-2-OXOETHYL]-2-OXOPYRROLIDIN-3-YL}ETHANESULFONAMIDE"/>
</dbReference>
<dbReference type="DrugBank" id="DB07550">
    <property type="generic name" value="2-(6-CHLORO-3-{[2,2-DIFLUORO-2-(1-OXIDO-2-PYRIDINYL)ETHYL]AMINO}-2-OXO-1(2H)-PYRAZINYL)-N-[(2-FLUOROPHENYL)METHYL]ACETAMIDE"/>
</dbReference>
<dbReference type="DrugBank" id="DB07549">
    <property type="generic name" value="2-(6-CHLORO-3-{[2,2-DIFLUORO-2-(2-PYRIDINYL)ETHYL]AMINO}-2-OXO-1(2H)-PYRAZINYL)-N-[(2-FLUORO-3-METHYL-6-PYRIDINYL)METHYL]ACETAMIDE"/>
</dbReference>
<dbReference type="DrugBank" id="DB07548">
    <property type="generic name" value="2-(6-Chloro-3-{[2,2-difluoro-2-(2-pyridinyl)ethyl]amino}-2-oxo-1(2H)-pyrazinyl)-N-[(2-fluoro-6-pyridinyl)methyl]acetamide"/>
</dbReference>
<dbReference type="DrugBank" id="DB07105">
    <property type="generic name" value="2-[2-(4-Chloro-Phenylsulfanyl)-Acetylamino]-3-(4-Guanidino-Phenyl)-Propionamide"/>
</dbReference>
<dbReference type="DrugBank" id="DB04722">
    <property type="generic name" value="2-[3-chloro-6-[2,2-difluoro-2-(1-oxidopyridin-1-ium-2-yl)ethyl]imino-1-hydroxypyridin-2-yl]-N-[(1R)-1-(3-chlorophenyl)ethyl]acetamide"/>
</dbReference>
<dbReference type="DrugBank" id="DB07366">
    <property type="generic name" value="2-[N'-(4-AMINO-BUTYL)-HYDRAZINOCARBONYL]-PYRROLIDINE-1-CARBOXYLIC ACID BENZYL ESTER"/>
</dbReference>
<dbReference type="DrugBank" id="DB08254">
    <property type="generic name" value="2-Naphthalenesulfonic acid"/>
</dbReference>
<dbReference type="DrugBank" id="DB01725">
    <property type="generic name" value="2-{2-hydroxy-[1,1'-biphenyl]-3-yl}-1H-1,3-benzodiazole-5-carboximidamide"/>
</dbReference>
<dbReference type="DrugBank" id="DB08062">
    <property type="generic name" value="3-(4-CHLOROPHENYL)-5-(METHYLTHIO)-4H-1,2,4-TRIAZOLE"/>
</dbReference>
<dbReference type="DrugBank" id="DB07639">
    <property type="generic name" value="3-(7-DIAMINOMETHYL-NAPHTHALEN-2-YL)-PROPIONIC ACID ETHYL ESTER"/>
</dbReference>
<dbReference type="DrugBank" id="DB07461">
    <property type="generic name" value="3-AMINO-3-BENZYL-9-CARBOXAMIDE[4.3.0]BICYCLO-1,6-DIAZANONAN-2-ONE"/>
</dbReference>
<dbReference type="DrugBank" id="DB07120">
    <property type="generic name" value="3-Carbamimidamido-1,1-diphenylurea"/>
</dbReference>
<dbReference type="DrugBank" id="DB07190">
    <property type="generic name" value="3-cyclohexyl-D-alanyl-N-(3-chlorobenzyl)-L-prolinamide"/>
</dbReference>
<dbReference type="DrugBank" id="DB07741">
    <property type="generic name" value="4-(1R,3AS,4R,8AS,8BR)-[1-DIFLUOROMETHYL-2-(4-FLUOROBENZYL)-3-OXODECAHYDROPYRROLO[3,4-A]PYRROLIZIN-4-YL]BENZAMIDINE"/>
</dbReference>
<dbReference type="DrugBank" id="DB07353">
    <property type="generic name" value="4-(2,5-DIAMINO-5-HYDROXY-PENTYL)-PHENOL"/>
</dbReference>
<dbReference type="DrugBank" id="DB07508">
    <property type="generic name" value="4-(5-BENZENESULFONYLAMINO-1-METHYL-1H-BENZOIMIDAZOL-2-YLMETHYL)-BENZAMIDINE"/>
</dbReference>
<dbReference type="DrugBank" id="DB07809">
    <property type="generic name" value="4-({[4-(3-METHYLBENZOYL)PYRIDIN-2-YL]AMINO}METHYL)BENZENECARBOXIMIDAMIDE"/>
</dbReference>
<dbReference type="DrugBank" id="DB08546">
    <property type="generic name" value="4-[(3AS,4R,7R,8AS,8BR)-2-(1,3-BENZODIOXOL-5-YLMETHYL)-7-HYDROXY-1,3-DIOXODECAHYDROPYRROLO[3,4-A]PYRROLIZIN-4-YL]BENZENECARBOXIMIDAMIDE"/>
</dbReference>
<dbReference type="DrugBank" id="DB08061">
    <property type="generic name" value="4-[3-(4-CHLOROPHENYL)-1H-PYRAZOL-5-YL]PIPERIDINE"/>
</dbReference>
<dbReference type="DrugBank" id="DB07718">
    <property type="generic name" value="4-Hydroxyphenylpyruvic acid"/>
</dbReference>
<dbReference type="DrugBank" id="DB03136">
    <property type="generic name" value="4-Iodobenzo[B]Thiophene-2-Carboxamidine"/>
</dbReference>
<dbReference type="DrugBank" id="DB02723">
    <property type="generic name" value="4-Oxo-2-Phenylmethanesulfonyl-Octahydro-Pyrrolo[1,2-a]Pyrazine-6-Carboxylic Acid [1-(N-Hydroxycarbamimidoyl)-Piperidin-4-Ylmethyl]-Amide"/>
</dbReference>
<dbReference type="DrugBank" id="DB07440">
    <property type="generic name" value="4-TERT-BUTYLBENZENESULFONIC ACID"/>
</dbReference>
<dbReference type="DrugBank" id="DB07376">
    <property type="generic name" value="5-(DIMETHYLAMINO)-1-NAPHTHALENESULFONIC ACID(DANSYL ACID)"/>
</dbReference>
<dbReference type="DrugBank" id="DB06861">
    <property type="generic name" value="6-(2-HYDROXY-CYCLOPENTYL)-7-OXO-HEPTANAMIDINE"/>
</dbReference>
<dbReference type="DrugBank" id="DB06866">
    <property type="generic name" value="6-CARBAMIMIDOYL-2-[2-HYDROXY-5-(3-METHOXY-PHENYL)-INDAN-1-YL]-HEXANOIC ACID"/>
</dbReference>
<dbReference type="DrugBank" id="DB06865">
    <property type="generic name" value="6-CARBAMIMIDOYL-2-[2-HYDROXY-6-(4-HYDROXY-PHENYL)-INDAN-1-YL]-HEXANOIC ACID"/>
</dbReference>
<dbReference type="DrugBank" id="DB03865">
    <property type="generic name" value="6-Chloro-2-(2-Hydroxy-Biphenyl-3-Yl)-1h-Indole-5-Carboxamidine"/>
</dbReference>
<dbReference type="DrugBank" id="DB06841">
    <property type="generic name" value="[(2R)-1-[(2S)-2-[[(2S,3S)-1-Chloro-6-(diaminomethylideneamino)-2-hydroxyhexan-3-yl]carbamoyl]pyrrolidin-1-yl]-1-oxo-3-phenylpropan-2-yl]azanium"/>
</dbReference>
<dbReference type="DrugBank" id="DB07934">
    <property type="generic name" value="[[CYCLOHEXANESULFONYL-GLYCYL]-3[PYRIDIN-4-YL-AMINOMETHYL]ALANYL]PIPERIDINE"/>
</dbReference>
<dbReference type="DrugBank" id="DB08422">
    <property type="generic name" value="[PHENYLALANINYL-PROLINYL]-[2-(PYRIDIN-4-YLAMINO)-ETHYL]-AMINE"/>
</dbReference>
<dbReference type="DrugBank" id="DB07659">
    <property type="generic name" value="AC-(D)PHE-PRO-BOROHOMOLYS-OH"/>
</dbReference>
<dbReference type="DrugBank" id="DB07660">
    <property type="generic name" value="AC-(D)PHE-PRO-BOROHOMOORNITHINE-OH"/>
</dbReference>
<dbReference type="DrugBank" id="DB07658">
    <property type="generic name" value="AC-(D)Phe-pro-borolys-OH"/>
</dbReference>
<dbReference type="DrugBank" id="DB01125">
    <property type="generic name" value="Anisindione"/>
</dbReference>
<dbReference type="DrugBank" id="DB13151">
    <property type="generic name" value="Anti-inhibitor coagulant complex"/>
</dbReference>
<dbReference type="DrugBank" id="DB00025">
    <property type="generic name" value="Antihemophilic factor, human recombinant"/>
</dbReference>
<dbReference type="DrugBank" id="DB11166">
    <property type="generic name" value="Antithrombin Alfa"/>
</dbReference>
<dbReference type="DrugBank" id="DB00278">
    <property type="generic name" value="Argatroban"/>
</dbReference>
<dbReference type="DrugBank" id="DB12507">
    <property type="generic name" value="Atecegatran metoxil"/>
</dbReference>
<dbReference type="DrugBank" id="DB15132">
    <property type="generic name" value="AZD-8165"/>
</dbReference>
<dbReference type="DrugBank" id="DB01766">
    <property type="generic name" value="Beta-(2-Naphthyl)-Alanine"/>
</dbReference>
<dbReference type="DrugBank" id="DB07083">
    <property type="generic name" value="beta-phenyl-D-phenylalanyl-N-propyl-L-prolinamide"/>
</dbReference>
<dbReference type="DrugBank" id="DB00006">
    <property type="generic name" value="Bivalirudin"/>
</dbReference>
<dbReference type="DrugBank" id="DB00100">
    <property type="generic name" value="Coagulation Factor IX (Recombinant)"/>
</dbReference>
<dbReference type="DrugBank" id="DB13152">
    <property type="generic name" value="Coagulation Factor IX Human"/>
</dbReference>
<dbReference type="DrugBank" id="DB09228">
    <property type="generic name" value="Conestat alfa"/>
</dbReference>
<dbReference type="DrugBank" id="DB09130">
    <property type="generic name" value="Copper"/>
</dbReference>
<dbReference type="DrugBank" id="DB03159">
    <property type="generic name" value="CRA_8696"/>
</dbReference>
<dbReference type="DrugBank" id="DB06911">
    <property type="generic name" value="D-leucyl-N-(3-chlorobenzyl)-L-prolinamide"/>
</dbReference>
<dbReference type="DrugBank" id="DB06996">
    <property type="generic name" value="D-leucyl-N-(4-carbamimidoylbenzyl)-L-prolinamide"/>
</dbReference>
<dbReference type="DrugBank" id="DB06919">
    <property type="generic name" value="D-phenylalanyl-N-(3-chlorobenzyl)-L-prolinamide"/>
</dbReference>
<dbReference type="DrugBank" id="DB07027">
    <property type="generic name" value="D-phenylalanyl-N-(3-fluorobenzyl)-L-prolinamide"/>
</dbReference>
<dbReference type="DrugBank" id="DB07133">
    <property type="generic name" value="D-phenylalanyl-N-(3-methylbenzyl)-L-prolinamide"/>
</dbReference>
<dbReference type="DrugBank" id="DB07143">
    <property type="generic name" value="D-phenylalanyl-N-benzyl-L-prolinamide"/>
</dbReference>
<dbReference type="DrugBank" id="DB07005">
    <property type="generic name" value="D-phenylalanyl-N-{4-[amino(iminio)methyl]benzyl}-L-prolinamide"/>
</dbReference>
<dbReference type="DrugBank" id="DB14726">
    <property type="generic name" value="Dabigatran"/>
</dbReference>
<dbReference type="DrugBank" id="DB06695">
    <property type="generic name" value="Dabigatran etexilate"/>
</dbReference>
<dbReference type="DrugBank" id="DB00055">
    <property type="generic name" value="Drotrecogin alfa"/>
</dbReference>
<dbReference type="DrugBank" id="DB01225">
    <property type="generic name" value="Enoxaparin"/>
</dbReference>
<dbReference type="DrugBank" id="DB18393">
    <property type="generic name" value="EP-217609"/>
</dbReference>
<dbReference type="DrugBank" id="DB05714">
    <property type="generic name" value="Flovagatran"/>
</dbReference>
<dbReference type="DrugBank" id="DB12831">
    <property type="generic name" value="Gabexate"/>
</dbReference>
<dbReference type="DrugBank" id="DB03847">
    <property type="generic name" value="gamma-carboxy-L-glutamic acid"/>
</dbReference>
<dbReference type="DrugBank" id="DB07278">
    <property type="generic name" value="GW-813893"/>
</dbReference>
<dbReference type="DrugBank" id="DB01767">
    <property type="generic name" value="Hemi-Babim"/>
</dbReference>
<dbReference type="DrugBank" id="DB06404">
    <property type="generic name" value="Human C1-esterase inhibitor"/>
</dbReference>
<dbReference type="DrugBank" id="DB09332">
    <property type="generic name" value="Kappadione"/>
</dbReference>
<dbReference type="DrugBank" id="DB00001">
    <property type="generic name" value="Lepirudin"/>
</dbReference>
<dbReference type="DrugBank" id="DB13998">
    <property type="generic name" value="Lonoctocog alfa"/>
</dbReference>
<dbReference type="DrugBank" id="DB04136">
    <property type="generic name" value="Lysophosphotidylserine"/>
</dbReference>
<dbReference type="DrugBank" id="DB13616">
    <property type="generic name" value="Melagatran"/>
</dbReference>
<dbReference type="DrugBank" id="DB00170">
    <property type="generic name" value="Menadione"/>
</dbReference>
<dbReference type="DrugBank" id="DB06838">
    <property type="generic name" value="methyl L-phenylalaninate"/>
</dbReference>
<dbReference type="DrugBank" id="DB13999">
    <property type="generic name" value="Moroctocog alfa"/>
</dbReference>
<dbReference type="DrugBank" id="DB06868">
    <property type="generic name" value="N-(3-chlorobenzyl)-1-(4-methylpentanoyl)-L-prolinamide"/>
</dbReference>
<dbReference type="DrugBank" id="DB06942">
    <property type="generic name" value="N-(4-carbamimidoylbenzyl)-1-(3-phenylpropanoyl)-L-prolinamide"/>
</dbReference>
<dbReference type="DrugBank" id="DB06936">
    <property type="generic name" value="N-(4-carbamimidoylbenzyl)-1-(4-methylpentanoyl)-L-prolinamide"/>
</dbReference>
<dbReference type="DrugBank" id="DB07165">
    <property type="generic name" value="N-(5-CHLORO-BENZO[B]THIOPHEN-3-YLMETHYL)-2-[6-CHLORO-OXO-3-(2-PYRIDIN-2-YL-ETHYLAMINO)-2H-PYRAZIN-1-YL]-ACETAMIDE"/>
</dbReference>
<dbReference type="DrugBank" id="DB07527">
    <property type="generic name" value="N-[(2R,3S)-3-AMINO-2-HYDROXY-4-PHENYLBUTYL]-4-METHOXY-2,3,6-TRIMETHYLBENZENESULFONAMIDE"/>
</dbReference>
<dbReference type="DrugBank" id="DB07522">
    <property type="generic name" value="N-[(2R,3S)-3-AMINO-2-HYDROXY-4-PHENYLBUTYL]NAPHTHALENE-2-SULFONAMIDE"/>
</dbReference>
<dbReference type="DrugBank" id="DB07665">
    <property type="generic name" value="N-[2-(carbamimidamidooxy)ethyl]-2-{6-cyano-3-[(2,2-difluoro-2-pyridin-2-ylethyl)amino]-2-fluorophenyl}acetamide"/>
</dbReference>
<dbReference type="DrugBank" id="DB07946">
    <property type="generic name" value="N-[2-({[amino(imino)methyl]amino}oxy)ethyl]-2-{6-chloro-3-[(2,2-difluoro-2-phenylethyl)amino]-2-fluorophenyl}acetamide"/>
</dbReference>
<dbReference type="DrugBank" id="DB06859">
    <property type="generic name" value="N-ALLYL-5-AMIDINOAMINOOXY-PROPYLOXY-3-CHLORO-N-CYCLOPENTYLBENZAMIDE"/>
</dbReference>
<dbReference type="DrugBank" id="DB06853">
    <property type="generic name" value="N-cycloheptylglycyl-N-(4-carbamimidoylbenzyl)-L-prolinamide"/>
</dbReference>
<dbReference type="DrugBank" id="DB06858">
    <property type="generic name" value="N-cyclooctylglycyl-N-(4-carbamimidoylbenzyl)-L-prolinamide"/>
</dbReference>
<dbReference type="DrugBank" id="DB07279">
    <property type="generic name" value="N-ETHYL-N-ISOPROPYL-3-METHYL-5-{[(2S)-2-(PYRIDIN-4-YLAMINO)PROPYL]OXY}BENZAMIDE"/>
</dbReference>
<dbReference type="DrugBank" id="DB08187">
    <property type="generic name" value="N-Methylphenylalanyl-N-[(trans-4-aminocyclohexyl)methyl]-L-prolinamide"/>
</dbReference>
<dbReference type="DrugBank" id="DB04591">
    <property type="generic name" value="N-{2,2-DIFLUORO-2-[(2R)-PIPERIDIN-2-YL]ETHYL}-2-[2-(1H-1,2,4-TRIAZOL-1-YL)BENZYL][1,3]OXAZOLO[4,5-C]PYRIDIN-4-AMINE"/>
</dbReference>
<dbReference type="DrugBank" id="DB07944">
    <property type="generic name" value="N-{3-METHYL-5-[2-(PYRIDIN-4-YLAMINO)-ETHOXY]-PHENYL}-BENZENESULFONAMIDE"/>
</dbReference>
<dbReference type="DrugBank" id="DB07128">
    <property type="generic name" value="N7-BUTYL-N2-(5-CHLORO-2-METHYLPHENYL)-5-METHYL[1,2,4]TRIAZOLO[1,5-A]PYRIMIDINE-2,7-DIAMINE"/>
</dbReference>
<dbReference type="DrugBank" id="DB12598">
    <property type="generic name" value="Nafamostat"/>
</dbReference>
<dbReference type="DrugBank" id="DB06609">
    <property type="generic name" value="Odiparcil"/>
</dbReference>
<dbReference type="DrugBank" id="DB01123">
    <property type="generic name" value="Proflavine"/>
</dbReference>
<dbReference type="DrugBank" id="DB00114">
    <property type="generic name" value="Pyridoxal phosphate"/>
</dbReference>
<dbReference type="DrugBank" id="DB05361">
    <property type="generic name" value="SR-123781A"/>
</dbReference>
<dbReference type="DrugBank" id="DB04786">
    <property type="generic name" value="Suramin"/>
</dbReference>
<dbReference type="DrugBank" id="DB05777">
    <property type="generic name" value="Thrombomodulin Alfa"/>
</dbReference>
<dbReference type="DrugBank" id="DB04697">
    <property type="generic name" value="TRANS-4-(GUANIDINOMETHYL)-CYCLOHEXANE-L-YL-D-3-CYCLOHEXYLALANYL-L-AZETIDINE-2-YL-D-TYROSINYL-L-HOMOARGININAMIDE"/>
</dbReference>
<dbReference type="DrugBank" id="DB09109">
    <property type="generic name" value="Turoctocog alfa"/>
</dbReference>
<dbReference type="DrugBank" id="DB14738">
    <property type="generic name" value="Turoctocog alfa pegol"/>
</dbReference>
<dbReference type="DrugBank" id="DB04898">
    <property type="generic name" value="Ximelagatran"/>
</dbReference>
<dbReference type="DrugBank" id="DB08756">
    <property type="generic name" value="Y-27632"/>
</dbReference>
<dbReference type="DrugBank" id="DB01593">
    <property type="generic name" value="Zinc"/>
</dbReference>
<dbReference type="DrugBank" id="DB14487">
    <property type="generic name" value="Zinc acetate"/>
</dbReference>
<dbReference type="DrugBank" id="DB08152">
    <property type="generic name" value="{(2S)-1-[N-(tert-butoxycarbonyl)glycyl]pyrrolidin-2-yl}methyl (3-chlorophenyl)acetate"/>
</dbReference>
<dbReference type="DrugCentral" id="P00734"/>
<dbReference type="GuidetoPHARMACOLOGY" id="2362"/>
<dbReference type="MEROPS" id="S01.217"/>
<dbReference type="MoonDB" id="P00734">
    <property type="type" value="Curated"/>
</dbReference>
<dbReference type="GlyConnect" id="518">
    <property type="glycosylation" value="39 N-Linked glycans (4 sites)"/>
</dbReference>
<dbReference type="GlyCosmos" id="P00734">
    <property type="glycosylation" value="10 sites, 50 glycans"/>
</dbReference>
<dbReference type="GlyGen" id="P00734">
    <property type="glycosylation" value="19 sites, 95 N-linked glycans (6 sites), 2 O-linked glycans (7 sites)"/>
</dbReference>
<dbReference type="iPTMnet" id="P00734"/>
<dbReference type="PhosphoSitePlus" id="P00734"/>
<dbReference type="BioMuta" id="F2"/>
<dbReference type="DMDM" id="135807"/>
<dbReference type="jPOST" id="P00734"/>
<dbReference type="MassIVE" id="P00734"/>
<dbReference type="PaxDb" id="9606-ENSP00000308541"/>
<dbReference type="PeptideAtlas" id="P00734"/>
<dbReference type="ProteomicsDB" id="51269"/>
<dbReference type="TopDownProteomics" id="P00734"/>
<dbReference type="ABCD" id="P00734">
    <property type="antibodies" value="3 sequenced antibodies"/>
</dbReference>
<dbReference type="Antibodypedia" id="857">
    <property type="antibodies" value="1163 antibodies from 43 providers"/>
</dbReference>
<dbReference type="DNASU" id="2147"/>
<dbReference type="Ensembl" id="ENST00000311907.10">
    <property type="protein sequence ID" value="ENSP00000308541.5"/>
    <property type="gene ID" value="ENSG00000180210.15"/>
</dbReference>
<dbReference type="GeneID" id="2147"/>
<dbReference type="KEGG" id="hsa:2147"/>
<dbReference type="MANE-Select" id="ENST00000311907.10">
    <property type="protein sequence ID" value="ENSP00000308541.5"/>
    <property type="RefSeq nucleotide sequence ID" value="NM_000506.5"/>
    <property type="RefSeq protein sequence ID" value="NP_000497.1"/>
</dbReference>
<dbReference type="UCSC" id="uc001ndf.5">
    <property type="organism name" value="human"/>
</dbReference>
<dbReference type="AGR" id="HGNC:3535"/>
<dbReference type="CTD" id="2147"/>
<dbReference type="DisGeNET" id="2147"/>
<dbReference type="GeneCards" id="F2"/>
<dbReference type="GeneReviews" id="F2"/>
<dbReference type="HGNC" id="HGNC:3535">
    <property type="gene designation" value="F2"/>
</dbReference>
<dbReference type="HPA" id="ENSG00000180210">
    <property type="expression patterns" value="Tissue enriched (liver)"/>
</dbReference>
<dbReference type="MalaCards" id="F2"/>
<dbReference type="MIM" id="176930">
    <property type="type" value="gene"/>
</dbReference>
<dbReference type="MIM" id="188050">
    <property type="type" value="phenotype"/>
</dbReference>
<dbReference type="MIM" id="601367">
    <property type="type" value="phenotype"/>
</dbReference>
<dbReference type="MIM" id="613679">
    <property type="type" value="phenotype"/>
</dbReference>
<dbReference type="MIM" id="614390">
    <property type="type" value="phenotype"/>
</dbReference>
<dbReference type="neXtProt" id="NX_P00734"/>
<dbReference type="OpenTargets" id="ENSG00000180210"/>
<dbReference type="Orphanet" id="329217">
    <property type="disease" value="Cerebral sinovenous thrombosis"/>
</dbReference>
<dbReference type="Orphanet" id="325">
    <property type="disease" value="Congenital factor II deficiency"/>
</dbReference>
<dbReference type="PharmGKB" id="PA157"/>
<dbReference type="VEuPathDB" id="HostDB:ENSG00000180210"/>
<dbReference type="eggNOG" id="ENOG502QTSX">
    <property type="taxonomic scope" value="Eukaryota"/>
</dbReference>
<dbReference type="GeneTree" id="ENSGT00940000154234"/>
<dbReference type="HOGENOM" id="CLU_006842_19_4_1"/>
<dbReference type="InParanoid" id="P00734"/>
<dbReference type="OMA" id="VMIFRKS"/>
<dbReference type="OrthoDB" id="6380398at2759"/>
<dbReference type="PAN-GO" id="P00734">
    <property type="GO annotations" value="5 GO annotations based on evolutionary models"/>
</dbReference>
<dbReference type="PhylomeDB" id="P00734"/>
<dbReference type="TreeFam" id="TF327329"/>
<dbReference type="BioCyc" id="MetaCyc:HS11470-MONOMER"/>
<dbReference type="BRENDA" id="3.4.21.5">
    <property type="organism ID" value="2681"/>
</dbReference>
<dbReference type="PathwayCommons" id="P00734"/>
<dbReference type="Reactome" id="R-HSA-140837">
    <property type="pathway name" value="Intrinsic Pathway of Fibrin Clot Formation"/>
</dbReference>
<dbReference type="Reactome" id="R-HSA-140875">
    <property type="pathway name" value="Common Pathway of Fibrin Clot Formation"/>
</dbReference>
<dbReference type="Reactome" id="R-HSA-159740">
    <property type="pathway name" value="Gamma-carboxylation of protein precursors"/>
</dbReference>
<dbReference type="Reactome" id="R-HSA-159763">
    <property type="pathway name" value="Transport of gamma-carboxylated protein precursors from the endoplasmic reticulum to the Golgi apparatus"/>
</dbReference>
<dbReference type="Reactome" id="R-HSA-159782">
    <property type="pathway name" value="Removal of aminoterminal propeptides from gamma-carboxylated proteins"/>
</dbReference>
<dbReference type="Reactome" id="R-HSA-202733">
    <property type="pathway name" value="Cell surface interactions at the vascular wall"/>
</dbReference>
<dbReference type="Reactome" id="R-HSA-375276">
    <property type="pathway name" value="Peptide ligand-binding receptors"/>
</dbReference>
<dbReference type="Reactome" id="R-HSA-381426">
    <property type="pathway name" value="Regulation of Insulin-like Growth Factor (IGF) transport and uptake by Insulin-like Growth Factor Binding Proteins (IGFBPs)"/>
</dbReference>
<dbReference type="Reactome" id="R-HSA-416476">
    <property type="pathway name" value="G alpha (q) signalling events"/>
</dbReference>
<dbReference type="Reactome" id="R-HSA-456926">
    <property type="pathway name" value="Thrombin signalling through proteinase activated receptors (PARs)"/>
</dbReference>
<dbReference type="Reactome" id="R-HSA-76009">
    <property type="pathway name" value="Platelet Aggregation (Plug Formation)"/>
</dbReference>
<dbReference type="Reactome" id="R-HSA-9657688">
    <property type="pathway name" value="Defective factor XII causes hereditary angioedema"/>
</dbReference>
<dbReference type="Reactome" id="R-HSA-9672391">
    <property type="pathway name" value="Defective F8 cleavage by thrombin"/>
</dbReference>
<dbReference type="Reactome" id="R-HSA-977606">
    <property type="pathway name" value="Regulation of Complement cascade"/>
</dbReference>
<dbReference type="SABIO-RK" id="P00734"/>
<dbReference type="SignaLink" id="P00734"/>
<dbReference type="SIGNOR" id="P00734"/>
<dbReference type="STRENDA-DB" id="OUYDF2">
    <property type="experiment" value="Alpha-thrombin"/>
</dbReference>
<dbReference type="BioGRID-ORCS" id="2147">
    <property type="hits" value="14 hits in 1152 CRISPR screens"/>
</dbReference>
<dbReference type="EvolutionaryTrace" id="P00734"/>
<dbReference type="GeneWiki" id="Thrombin"/>
<dbReference type="GenomeRNAi" id="2147"/>
<dbReference type="Pharos" id="P00734">
    <property type="development level" value="Tclin"/>
</dbReference>
<dbReference type="PRO" id="PR:P00734"/>
<dbReference type="Proteomes" id="UP000005640">
    <property type="component" value="Chromosome 11"/>
</dbReference>
<dbReference type="RNAct" id="P00734">
    <property type="molecule type" value="protein"/>
</dbReference>
<dbReference type="Bgee" id="ENSG00000180210">
    <property type="expression patterns" value="Expressed in right lobe of liver and 101 other cell types or tissues"/>
</dbReference>
<dbReference type="ExpressionAtlas" id="P00734">
    <property type="expression patterns" value="baseline and differential"/>
</dbReference>
<dbReference type="GO" id="GO:0072562">
    <property type="term" value="C:blood microparticle"/>
    <property type="evidence" value="ECO:0007005"/>
    <property type="project" value="UniProtKB"/>
</dbReference>
<dbReference type="GO" id="GO:0062023">
    <property type="term" value="C:collagen-containing extracellular matrix"/>
    <property type="evidence" value="ECO:0000318"/>
    <property type="project" value="GO_Central"/>
</dbReference>
<dbReference type="GO" id="GO:0005788">
    <property type="term" value="C:endoplasmic reticulum lumen"/>
    <property type="evidence" value="ECO:0000304"/>
    <property type="project" value="Reactome"/>
</dbReference>
<dbReference type="GO" id="GO:0070062">
    <property type="term" value="C:extracellular exosome"/>
    <property type="evidence" value="ECO:0007005"/>
    <property type="project" value="UniProtKB"/>
</dbReference>
<dbReference type="GO" id="GO:0005576">
    <property type="term" value="C:extracellular region"/>
    <property type="evidence" value="ECO:0000304"/>
    <property type="project" value="Reactome"/>
</dbReference>
<dbReference type="GO" id="GO:0005615">
    <property type="term" value="C:extracellular space"/>
    <property type="evidence" value="ECO:0000314"/>
    <property type="project" value="UniProtKB"/>
</dbReference>
<dbReference type="GO" id="GO:0005796">
    <property type="term" value="C:Golgi lumen"/>
    <property type="evidence" value="ECO:0000304"/>
    <property type="project" value="Reactome"/>
</dbReference>
<dbReference type="GO" id="GO:0005886">
    <property type="term" value="C:plasma membrane"/>
    <property type="evidence" value="ECO:0000304"/>
    <property type="project" value="Reactome"/>
</dbReference>
<dbReference type="GO" id="GO:0005509">
    <property type="term" value="F:calcium ion binding"/>
    <property type="evidence" value="ECO:0007669"/>
    <property type="project" value="InterPro"/>
</dbReference>
<dbReference type="GO" id="GO:0008083">
    <property type="term" value="F:growth factor activity"/>
    <property type="evidence" value="ECO:0000304"/>
    <property type="project" value="BHF-UCL"/>
</dbReference>
<dbReference type="GO" id="GO:0008201">
    <property type="term" value="F:heparin binding"/>
    <property type="evidence" value="ECO:0000314"/>
    <property type="project" value="UniProtKB"/>
</dbReference>
<dbReference type="GO" id="GO:0001530">
    <property type="term" value="F:lipopolysaccharide binding"/>
    <property type="evidence" value="ECO:0000314"/>
    <property type="project" value="UniProtKB"/>
</dbReference>
<dbReference type="GO" id="GO:0048018">
    <property type="term" value="F:receptor ligand activity"/>
    <property type="evidence" value="ECO:0000314"/>
    <property type="project" value="UniProt"/>
</dbReference>
<dbReference type="GO" id="GO:0004252">
    <property type="term" value="F:serine-type endopeptidase activity"/>
    <property type="evidence" value="ECO:0000314"/>
    <property type="project" value="UniProtKB"/>
</dbReference>
<dbReference type="GO" id="GO:0005102">
    <property type="term" value="F:signaling receptor binding"/>
    <property type="evidence" value="ECO:0000353"/>
    <property type="project" value="UniProtKB"/>
</dbReference>
<dbReference type="GO" id="GO:0070053">
    <property type="term" value="F:thrombospondin receptor activity"/>
    <property type="evidence" value="ECO:0000314"/>
    <property type="project" value="BHF-UCL"/>
</dbReference>
<dbReference type="GO" id="GO:0006953">
    <property type="term" value="P:acute-phase response"/>
    <property type="evidence" value="ECO:0007669"/>
    <property type="project" value="UniProtKB-KW"/>
</dbReference>
<dbReference type="GO" id="GO:0061844">
    <property type="term" value="P:antimicrobial humoral immune response mediated by antimicrobial peptide"/>
    <property type="evidence" value="ECO:0000314"/>
    <property type="project" value="UniProtKB"/>
</dbReference>
<dbReference type="GO" id="GO:0007596">
    <property type="term" value="P:blood coagulation"/>
    <property type="evidence" value="ECO:0000304"/>
    <property type="project" value="ProtInc"/>
</dbReference>
<dbReference type="GO" id="GO:0007166">
    <property type="term" value="P:cell surface receptor signaling pathway"/>
    <property type="evidence" value="ECO:0000314"/>
    <property type="project" value="BHF-UCL"/>
</dbReference>
<dbReference type="GO" id="GO:0051838">
    <property type="term" value="P:cytolysis by host of symbiont cells"/>
    <property type="evidence" value="ECO:0000314"/>
    <property type="project" value="UniProtKB"/>
</dbReference>
<dbReference type="GO" id="GO:0042730">
    <property type="term" value="P:fibrinolysis"/>
    <property type="evidence" value="ECO:0000314"/>
    <property type="project" value="UniProtKB"/>
</dbReference>
<dbReference type="GO" id="GO:1990806">
    <property type="term" value="P:ligand-gated ion channel signaling pathway"/>
    <property type="evidence" value="ECO:0007669"/>
    <property type="project" value="Ensembl"/>
</dbReference>
<dbReference type="GO" id="GO:0048712">
    <property type="term" value="P:negative regulation of astrocyte differentiation"/>
    <property type="evidence" value="ECO:0000314"/>
    <property type="project" value="BHF-UCL"/>
</dbReference>
<dbReference type="GO" id="GO:0030195">
    <property type="term" value="P:negative regulation of blood coagulation"/>
    <property type="evidence" value="ECO:0000314"/>
    <property type="project" value="UniProt"/>
</dbReference>
<dbReference type="GO" id="GO:1900016">
    <property type="term" value="P:negative regulation of cytokine production involved in inflammatory response"/>
    <property type="evidence" value="ECO:0000314"/>
    <property type="project" value="UniProtKB"/>
</dbReference>
<dbReference type="GO" id="GO:0051918">
    <property type="term" value="P:negative regulation of fibrinolysis"/>
    <property type="evidence" value="ECO:0000304"/>
    <property type="project" value="BHF-UCL"/>
</dbReference>
<dbReference type="GO" id="GO:0010544">
    <property type="term" value="P:negative regulation of platelet activation"/>
    <property type="evidence" value="ECO:0000304"/>
    <property type="project" value="BHF-UCL"/>
</dbReference>
<dbReference type="GO" id="GO:0045861">
    <property type="term" value="P:negative regulation of proteolysis"/>
    <property type="evidence" value="ECO:0000314"/>
    <property type="project" value="BHF-UCL"/>
</dbReference>
<dbReference type="GO" id="GO:0070945">
    <property type="term" value="P:neutrophil-mediated killing of gram-negative bacterium"/>
    <property type="evidence" value="ECO:0000314"/>
    <property type="project" value="UniProtKB"/>
</dbReference>
<dbReference type="GO" id="GO:0030168">
    <property type="term" value="P:platelet activation"/>
    <property type="evidence" value="ECO:0000314"/>
    <property type="project" value="BHF-UCL"/>
</dbReference>
<dbReference type="GO" id="GO:0030194">
    <property type="term" value="P:positive regulation of blood coagulation"/>
    <property type="evidence" value="ECO:0000314"/>
    <property type="project" value="BHF-UCL"/>
</dbReference>
<dbReference type="GO" id="GO:0030307">
    <property type="term" value="P:positive regulation of cell growth"/>
    <property type="evidence" value="ECO:0007669"/>
    <property type="project" value="Ensembl"/>
</dbReference>
<dbReference type="GO" id="GO:0008284">
    <property type="term" value="P:positive regulation of cell population proliferation"/>
    <property type="evidence" value="ECO:0007669"/>
    <property type="project" value="Ensembl"/>
</dbReference>
<dbReference type="GO" id="GO:0032967">
    <property type="term" value="P:positive regulation of collagen biosynthetic process"/>
    <property type="evidence" value="ECO:0000314"/>
    <property type="project" value="BHF-UCL"/>
</dbReference>
<dbReference type="GO" id="GO:0032024">
    <property type="term" value="P:positive regulation of insulin secretion"/>
    <property type="evidence" value="ECO:0007669"/>
    <property type="project" value="Ensembl"/>
</dbReference>
<dbReference type="GO" id="GO:0051897">
    <property type="term" value="P:positive regulation of phosphatidylinositol 3-kinase/protein kinase B signal transduction"/>
    <property type="evidence" value="ECO:0007669"/>
    <property type="project" value="Ensembl"/>
</dbReference>
<dbReference type="GO" id="GO:1900738">
    <property type="term" value="P:positive regulation of phospholipase C-activating G protein-coupled receptor signaling pathway"/>
    <property type="evidence" value="ECO:0000314"/>
    <property type="project" value="BHF-UCL"/>
</dbReference>
<dbReference type="GO" id="GO:1900182">
    <property type="term" value="P:positive regulation of protein localization to nucleus"/>
    <property type="evidence" value="ECO:0000314"/>
    <property type="project" value="BHF-UCL"/>
</dbReference>
<dbReference type="GO" id="GO:2000379">
    <property type="term" value="P:positive regulation of reactive oxygen species metabolic process"/>
    <property type="evidence" value="ECO:0000314"/>
    <property type="project" value="UniProtKB"/>
</dbReference>
<dbReference type="GO" id="GO:0046427">
    <property type="term" value="P:positive regulation of receptor signaling pathway via JAK-STAT"/>
    <property type="evidence" value="ECO:0000303"/>
    <property type="project" value="BHF-UCL"/>
</dbReference>
<dbReference type="GO" id="GO:0051281">
    <property type="term" value="P:positive regulation of release of sequestered calcium ion into cytosol"/>
    <property type="evidence" value="ECO:0000314"/>
    <property type="project" value="BHF-UCL"/>
</dbReference>
<dbReference type="GO" id="GO:0006508">
    <property type="term" value="P:proteolysis"/>
    <property type="evidence" value="ECO:0000304"/>
    <property type="project" value="ProtInc"/>
</dbReference>
<dbReference type="GO" id="GO:0030193">
    <property type="term" value="P:regulation of blood coagulation"/>
    <property type="evidence" value="ECO:0000304"/>
    <property type="project" value="UniProtKB"/>
</dbReference>
<dbReference type="GO" id="GO:0008360">
    <property type="term" value="P:regulation of cell shape"/>
    <property type="evidence" value="ECO:0007669"/>
    <property type="project" value="Ensembl"/>
</dbReference>
<dbReference type="GO" id="GO:0051480">
    <property type="term" value="P:regulation of cytosolic calcium ion concentration"/>
    <property type="evidence" value="ECO:0000314"/>
    <property type="project" value="BHF-UCL"/>
</dbReference>
<dbReference type="GO" id="GO:0009611">
    <property type="term" value="P:response to wounding"/>
    <property type="evidence" value="ECO:0000314"/>
    <property type="project" value="BHF-UCL"/>
</dbReference>
<dbReference type="GO" id="GO:0070493">
    <property type="term" value="P:thrombin-activated receptor signaling pathway"/>
    <property type="evidence" value="ECO:0000314"/>
    <property type="project" value="BHF-UCL"/>
</dbReference>
<dbReference type="CDD" id="cd00108">
    <property type="entry name" value="KR"/>
    <property type="match status" value="2"/>
</dbReference>
<dbReference type="CDD" id="cd00190">
    <property type="entry name" value="Tryp_SPc"/>
    <property type="match status" value="1"/>
</dbReference>
<dbReference type="FunFam" id="2.40.10.10:FF:000085">
    <property type="entry name" value="Prothrombin"/>
    <property type="match status" value="1"/>
</dbReference>
<dbReference type="FunFam" id="2.40.20.10:FF:000015">
    <property type="entry name" value="Prothrombin"/>
    <property type="match status" value="1"/>
</dbReference>
<dbReference type="FunFam" id="2.40.20.10:FF:000017">
    <property type="entry name" value="Prothrombin"/>
    <property type="match status" value="1"/>
</dbReference>
<dbReference type="FunFam" id="4.10.140.10:FF:000001">
    <property type="entry name" value="Prothrombin"/>
    <property type="match status" value="1"/>
</dbReference>
<dbReference type="FunFam" id="2.40.10.10:FF:000068">
    <property type="entry name" value="transmembrane protease serine 2"/>
    <property type="match status" value="1"/>
</dbReference>
<dbReference type="FunFam" id="4.10.740.10:FF:000001">
    <property type="entry name" value="vitamin K-dependent protein S"/>
    <property type="match status" value="1"/>
</dbReference>
<dbReference type="Gene3D" id="2.40.20.10">
    <property type="entry name" value="Plasminogen Kringle 4"/>
    <property type="match status" value="2"/>
</dbReference>
<dbReference type="Gene3D" id="4.10.140.10">
    <property type="entry name" value="Thrombin light chain domain"/>
    <property type="match status" value="1"/>
</dbReference>
<dbReference type="Gene3D" id="2.40.10.10">
    <property type="entry name" value="Trypsin-like serine proteases"/>
    <property type="match status" value="2"/>
</dbReference>
<dbReference type="InterPro" id="IPR035972">
    <property type="entry name" value="GLA-like_dom_SF"/>
</dbReference>
<dbReference type="InterPro" id="IPR000294">
    <property type="entry name" value="GLA_domain"/>
</dbReference>
<dbReference type="InterPro" id="IPR000001">
    <property type="entry name" value="Kringle"/>
</dbReference>
<dbReference type="InterPro" id="IPR013806">
    <property type="entry name" value="Kringle-like"/>
</dbReference>
<dbReference type="InterPro" id="IPR018056">
    <property type="entry name" value="Kringle_CS"/>
</dbReference>
<dbReference type="InterPro" id="IPR038178">
    <property type="entry name" value="Kringle_sf"/>
</dbReference>
<dbReference type="InterPro" id="IPR009003">
    <property type="entry name" value="Peptidase_S1_PA"/>
</dbReference>
<dbReference type="InterPro" id="IPR043504">
    <property type="entry name" value="Peptidase_S1_PA_chymotrypsin"/>
</dbReference>
<dbReference type="InterPro" id="IPR001314">
    <property type="entry name" value="Peptidase_S1A"/>
</dbReference>
<dbReference type="InterPro" id="IPR003966">
    <property type="entry name" value="Prothrombin/thrombin"/>
</dbReference>
<dbReference type="InterPro" id="IPR051659">
    <property type="entry name" value="Serine_Protease_S1-Domain"/>
</dbReference>
<dbReference type="InterPro" id="IPR018992">
    <property type="entry name" value="Thrombin_light_chain"/>
</dbReference>
<dbReference type="InterPro" id="IPR037111">
    <property type="entry name" value="Thrombin_light_chain_sf"/>
</dbReference>
<dbReference type="InterPro" id="IPR001254">
    <property type="entry name" value="Trypsin_dom"/>
</dbReference>
<dbReference type="InterPro" id="IPR018114">
    <property type="entry name" value="TRYPSIN_HIS"/>
</dbReference>
<dbReference type="InterPro" id="IPR033116">
    <property type="entry name" value="TRYPSIN_SER"/>
</dbReference>
<dbReference type="PANTHER" id="PTHR24254">
    <property type="entry name" value="PROTHROMBIN"/>
    <property type="match status" value="1"/>
</dbReference>
<dbReference type="PANTHER" id="PTHR24254:SF10">
    <property type="entry name" value="PROTHROMBIN"/>
    <property type="match status" value="1"/>
</dbReference>
<dbReference type="Pfam" id="PF00594">
    <property type="entry name" value="Gla"/>
    <property type="match status" value="1"/>
</dbReference>
<dbReference type="Pfam" id="PF00051">
    <property type="entry name" value="Kringle"/>
    <property type="match status" value="2"/>
</dbReference>
<dbReference type="Pfam" id="PF09396">
    <property type="entry name" value="Thrombin_light"/>
    <property type="match status" value="1"/>
</dbReference>
<dbReference type="Pfam" id="PF00089">
    <property type="entry name" value="Trypsin"/>
    <property type="match status" value="1"/>
</dbReference>
<dbReference type="PIRSF" id="PIRSF001149">
    <property type="entry name" value="Thrombin"/>
    <property type="match status" value="1"/>
</dbReference>
<dbReference type="PRINTS" id="PR00722">
    <property type="entry name" value="CHYMOTRYPSIN"/>
</dbReference>
<dbReference type="PRINTS" id="PR00001">
    <property type="entry name" value="GLABLOOD"/>
</dbReference>
<dbReference type="PRINTS" id="PR00018">
    <property type="entry name" value="KRINGLE"/>
</dbReference>
<dbReference type="PRINTS" id="PR01505">
    <property type="entry name" value="PROTHROMBIN"/>
</dbReference>
<dbReference type="SMART" id="SM00069">
    <property type="entry name" value="GLA"/>
    <property type="match status" value="1"/>
</dbReference>
<dbReference type="SMART" id="SM00130">
    <property type="entry name" value="KR"/>
    <property type="match status" value="2"/>
</dbReference>
<dbReference type="SMART" id="SM00020">
    <property type="entry name" value="Tryp_SPc"/>
    <property type="match status" value="1"/>
</dbReference>
<dbReference type="SUPFAM" id="SSF57630">
    <property type="entry name" value="GLA-domain"/>
    <property type="match status" value="1"/>
</dbReference>
<dbReference type="SUPFAM" id="SSF57440">
    <property type="entry name" value="Kringle-like"/>
    <property type="match status" value="2"/>
</dbReference>
<dbReference type="SUPFAM" id="SSF50494">
    <property type="entry name" value="Trypsin-like serine proteases"/>
    <property type="match status" value="1"/>
</dbReference>
<dbReference type="PROSITE" id="PS00011">
    <property type="entry name" value="GLA_1"/>
    <property type="match status" value="1"/>
</dbReference>
<dbReference type="PROSITE" id="PS50998">
    <property type="entry name" value="GLA_2"/>
    <property type="match status" value="1"/>
</dbReference>
<dbReference type="PROSITE" id="PS00021">
    <property type="entry name" value="KRINGLE_1"/>
    <property type="match status" value="2"/>
</dbReference>
<dbReference type="PROSITE" id="PS50070">
    <property type="entry name" value="KRINGLE_2"/>
    <property type="match status" value="2"/>
</dbReference>
<dbReference type="PROSITE" id="PS50240">
    <property type="entry name" value="TRYPSIN_DOM"/>
    <property type="match status" value="1"/>
</dbReference>
<dbReference type="PROSITE" id="PS00134">
    <property type="entry name" value="TRYPSIN_HIS"/>
    <property type="match status" value="1"/>
</dbReference>
<dbReference type="PROSITE" id="PS00135">
    <property type="entry name" value="TRYPSIN_SER"/>
    <property type="match status" value="1"/>
</dbReference>
<name>THRB_HUMAN</name>
<gene>
    <name type="primary">F2</name>
</gene>
<keyword id="KW-0002">3D-structure</keyword>
<keyword id="KW-0011">Acute phase</keyword>
<keyword id="KW-0094">Blood coagulation</keyword>
<keyword id="KW-0106">Calcium</keyword>
<keyword id="KW-0165">Cleavage on pair of basic residues</keyword>
<keyword id="KW-0903">Direct protein sequencing</keyword>
<keyword id="KW-0225">Disease variant</keyword>
<keyword id="KW-1015">Disulfide bond</keyword>
<keyword id="KW-0301">Gamma-carboxyglutamic acid</keyword>
<keyword id="KW-0325">Glycoprotein</keyword>
<keyword id="KW-0356">Hemostasis</keyword>
<keyword id="KW-0378">Hydrolase</keyword>
<keyword id="KW-0420">Kringle</keyword>
<keyword id="KW-0582">Pharmaceutical</keyword>
<keyword id="KW-0645">Protease</keyword>
<keyword id="KW-1267">Proteomics identification</keyword>
<keyword id="KW-1185">Reference proteome</keyword>
<keyword id="KW-0677">Repeat</keyword>
<keyword id="KW-0964">Secreted</keyword>
<keyword id="KW-0720">Serine protease</keyword>
<keyword id="KW-0732">Signal</keyword>
<keyword id="KW-0792">Thrombophilia</keyword>
<keyword id="KW-0865">Zymogen</keyword>
<organism>
    <name type="scientific">Homo sapiens</name>
    <name type="common">Human</name>
    <dbReference type="NCBI Taxonomy" id="9606"/>
    <lineage>
        <taxon>Eukaryota</taxon>
        <taxon>Metazoa</taxon>
        <taxon>Chordata</taxon>
        <taxon>Craniata</taxon>
        <taxon>Vertebrata</taxon>
        <taxon>Euteleostomi</taxon>
        <taxon>Mammalia</taxon>
        <taxon>Eutheria</taxon>
        <taxon>Euarchontoglires</taxon>
        <taxon>Primates</taxon>
        <taxon>Haplorrhini</taxon>
        <taxon>Catarrhini</taxon>
        <taxon>Hominidae</taxon>
        <taxon>Homo</taxon>
    </lineage>
</organism>